<organismHost>
    <name type="scientific">Homo sapiens</name>
    <name type="common">Human</name>
    <dbReference type="NCBI Taxonomy" id="9606"/>
</organismHost>
<evidence type="ECO:0000250" key="1">
    <source>
        <dbReference type="UniProtKB" id="O92972"/>
    </source>
</evidence>
<evidence type="ECO:0000250" key="2">
    <source>
        <dbReference type="UniProtKB" id="P26662"/>
    </source>
</evidence>
<evidence type="ECO:0000250" key="3">
    <source>
        <dbReference type="UniProtKB" id="P26663"/>
    </source>
</evidence>
<evidence type="ECO:0000250" key="4">
    <source>
        <dbReference type="UniProtKB" id="P26664"/>
    </source>
</evidence>
<evidence type="ECO:0000250" key="5">
    <source>
        <dbReference type="UniProtKB" id="P29846"/>
    </source>
</evidence>
<evidence type="ECO:0000250" key="6">
    <source>
        <dbReference type="UniProtKB" id="Q01403"/>
    </source>
</evidence>
<evidence type="ECO:0000250" key="7">
    <source>
        <dbReference type="UniProtKB" id="Q03463"/>
    </source>
</evidence>
<evidence type="ECO:0000250" key="8">
    <source>
        <dbReference type="UniProtKB" id="Q5EG65"/>
    </source>
</evidence>
<evidence type="ECO:0000250" key="9">
    <source>
        <dbReference type="UniProtKB" id="Q913V3"/>
    </source>
</evidence>
<evidence type="ECO:0000250" key="10">
    <source>
        <dbReference type="UniProtKB" id="Q99IB8"/>
    </source>
</evidence>
<evidence type="ECO:0000250" key="11">
    <source>
        <dbReference type="UniProtKB" id="Q9WMX2"/>
    </source>
</evidence>
<evidence type="ECO:0000255" key="12"/>
<evidence type="ECO:0000255" key="13">
    <source>
        <dbReference type="PROSITE-ProRule" id="PRU00539"/>
    </source>
</evidence>
<evidence type="ECO:0000255" key="14">
    <source>
        <dbReference type="PROSITE-ProRule" id="PRU00541"/>
    </source>
</evidence>
<evidence type="ECO:0000255" key="15">
    <source>
        <dbReference type="PROSITE-ProRule" id="PRU01030"/>
    </source>
</evidence>
<evidence type="ECO:0000255" key="16">
    <source>
        <dbReference type="PROSITE-ProRule" id="PRU01166"/>
    </source>
</evidence>
<evidence type="ECO:0000256" key="17">
    <source>
        <dbReference type="SAM" id="MobiDB-lite"/>
    </source>
</evidence>
<evidence type="ECO:0000269" key="18">
    <source>
    </source>
</evidence>
<evidence type="ECO:0000269" key="19">
    <source>
    </source>
</evidence>
<evidence type="ECO:0000269" key="20">
    <source>
    </source>
</evidence>
<evidence type="ECO:0000269" key="21">
    <source>
    </source>
</evidence>
<evidence type="ECO:0000269" key="22">
    <source>
    </source>
</evidence>
<evidence type="ECO:0000269" key="23">
    <source>
    </source>
</evidence>
<evidence type="ECO:0000269" key="24">
    <source>
    </source>
</evidence>
<evidence type="ECO:0000269" key="25">
    <source>
    </source>
</evidence>
<evidence type="ECO:0000269" key="26">
    <source>
    </source>
</evidence>
<evidence type="ECO:0000269" key="27">
    <source>
    </source>
</evidence>
<evidence type="ECO:0000269" key="28">
    <source>
    </source>
</evidence>
<evidence type="ECO:0000269" key="29">
    <source>
    </source>
</evidence>
<evidence type="ECO:0000269" key="30">
    <source>
    </source>
</evidence>
<evidence type="ECO:0000269" key="31">
    <source>
    </source>
</evidence>
<evidence type="ECO:0000269" key="32">
    <source>
    </source>
</evidence>
<evidence type="ECO:0000269" key="33">
    <source>
    </source>
</evidence>
<evidence type="ECO:0000269" key="34">
    <source>
    </source>
</evidence>
<evidence type="ECO:0000269" key="35">
    <source>
    </source>
</evidence>
<evidence type="ECO:0000269" key="36">
    <source>
    </source>
</evidence>
<evidence type="ECO:0000269" key="37">
    <source>
    </source>
</evidence>
<evidence type="ECO:0000269" key="38">
    <source>
    </source>
</evidence>
<evidence type="ECO:0000269" key="39">
    <source>
    </source>
</evidence>
<evidence type="ECO:0000269" key="40">
    <source>
    </source>
</evidence>
<evidence type="ECO:0000269" key="41">
    <source>
    </source>
</evidence>
<evidence type="ECO:0000269" key="42">
    <source>
    </source>
</evidence>
<evidence type="ECO:0000269" key="43">
    <source>
    </source>
</evidence>
<evidence type="ECO:0000269" key="44">
    <source>
    </source>
</evidence>
<evidence type="ECO:0000269" key="45">
    <source>
    </source>
</evidence>
<evidence type="ECO:0000269" key="46">
    <source>
    </source>
</evidence>
<evidence type="ECO:0000269" key="47">
    <source>
    </source>
</evidence>
<evidence type="ECO:0000269" key="48">
    <source>
    </source>
</evidence>
<evidence type="ECO:0000269" key="49">
    <source>
    </source>
</evidence>
<evidence type="ECO:0000269" key="50">
    <source>
    </source>
</evidence>
<evidence type="ECO:0000269" key="51">
    <source>
    </source>
</evidence>
<evidence type="ECO:0000269" key="52">
    <source>
    </source>
</evidence>
<evidence type="ECO:0000269" key="53">
    <source>
    </source>
</evidence>
<evidence type="ECO:0000269" key="54">
    <source>
    </source>
</evidence>
<evidence type="ECO:0000269" key="55">
    <source>
    </source>
</evidence>
<evidence type="ECO:0000269" key="56">
    <source>
    </source>
</evidence>
<evidence type="ECO:0000269" key="57">
    <source>
    </source>
</evidence>
<evidence type="ECO:0000269" key="58">
    <source>
    </source>
</evidence>
<evidence type="ECO:0000269" key="59">
    <source>
    </source>
</evidence>
<evidence type="ECO:0000269" key="60">
    <source>
    </source>
</evidence>
<evidence type="ECO:0000269" key="61">
    <source>
    </source>
</evidence>
<evidence type="ECO:0000269" key="62">
    <source>
    </source>
</evidence>
<evidence type="ECO:0000269" key="63">
    <source>
    </source>
</evidence>
<evidence type="ECO:0000269" key="64">
    <source>
    </source>
</evidence>
<evidence type="ECO:0000269" key="65">
    <source>
    </source>
</evidence>
<evidence type="ECO:0000269" key="66">
    <source>
    </source>
</evidence>
<evidence type="ECO:0000269" key="67">
    <source>
    </source>
</evidence>
<evidence type="ECO:0000269" key="68">
    <source>
    </source>
</evidence>
<evidence type="ECO:0000269" key="69">
    <source>
    </source>
</evidence>
<evidence type="ECO:0000269" key="70">
    <source>
    </source>
</evidence>
<evidence type="ECO:0000269" key="71">
    <source>
    </source>
</evidence>
<evidence type="ECO:0000269" key="72">
    <source>
    </source>
</evidence>
<evidence type="ECO:0000269" key="73">
    <source>
    </source>
</evidence>
<evidence type="ECO:0000269" key="74">
    <source>
    </source>
</evidence>
<evidence type="ECO:0000269" key="75">
    <source>
    </source>
</evidence>
<evidence type="ECO:0000269" key="76">
    <source>
    </source>
</evidence>
<evidence type="ECO:0000269" key="77">
    <source>
    </source>
</evidence>
<evidence type="ECO:0000269" key="78">
    <source>
    </source>
</evidence>
<evidence type="ECO:0000269" key="79">
    <source>
    </source>
</evidence>
<evidence type="ECO:0000269" key="80">
    <source>
    </source>
</evidence>
<evidence type="ECO:0000269" key="81">
    <source>
    </source>
</evidence>
<evidence type="ECO:0000269" key="82">
    <source>
    </source>
</evidence>
<evidence type="ECO:0000269" key="83">
    <source>
    </source>
</evidence>
<evidence type="ECO:0000269" key="84">
    <source>
    </source>
</evidence>
<evidence type="ECO:0000269" key="85">
    <source>
    </source>
</evidence>
<evidence type="ECO:0000269" key="86">
    <source>
    </source>
</evidence>
<evidence type="ECO:0000269" key="87">
    <source>
    </source>
</evidence>
<evidence type="ECO:0000269" key="88">
    <source>
    </source>
</evidence>
<evidence type="ECO:0000269" key="89">
    <source>
    </source>
</evidence>
<evidence type="ECO:0000269" key="90">
    <source>
    </source>
</evidence>
<evidence type="ECO:0000269" key="91">
    <source>
    </source>
</evidence>
<evidence type="ECO:0000269" key="92">
    <source>
    </source>
</evidence>
<evidence type="ECO:0000269" key="93">
    <source>
    </source>
</evidence>
<evidence type="ECO:0000269" key="94">
    <source>
    </source>
</evidence>
<evidence type="ECO:0000269" key="95">
    <source>
    </source>
</evidence>
<evidence type="ECO:0000269" key="96">
    <source>
    </source>
</evidence>
<evidence type="ECO:0000269" key="97">
    <source>
    </source>
</evidence>
<evidence type="ECO:0000269" key="98">
    <source>
    </source>
</evidence>
<evidence type="ECO:0000269" key="99">
    <source>
    </source>
</evidence>
<evidence type="ECO:0000269" key="100">
    <source>
    </source>
</evidence>
<evidence type="ECO:0000269" key="101">
    <source>
    </source>
</evidence>
<evidence type="ECO:0000269" key="102">
    <source>
    </source>
</evidence>
<evidence type="ECO:0000269" key="103">
    <source>
    </source>
</evidence>
<evidence type="ECO:0000269" key="104">
    <source>
    </source>
</evidence>
<evidence type="ECO:0000269" key="105">
    <source>
    </source>
</evidence>
<evidence type="ECO:0000269" key="106">
    <source>
    </source>
</evidence>
<evidence type="ECO:0000269" key="107">
    <source>
    </source>
</evidence>
<evidence type="ECO:0000269" key="108">
    <source>
    </source>
</evidence>
<evidence type="ECO:0000269" key="109">
    <source>
    </source>
</evidence>
<evidence type="ECO:0000269" key="110">
    <source>
    </source>
</evidence>
<evidence type="ECO:0000269" key="111">
    <source>
    </source>
</evidence>
<evidence type="ECO:0000269" key="112">
    <source>
    </source>
</evidence>
<evidence type="ECO:0000269" key="113">
    <source>
    </source>
</evidence>
<evidence type="ECO:0000269" key="114">
    <source>
    </source>
</evidence>
<evidence type="ECO:0000269" key="115">
    <source>
    </source>
</evidence>
<evidence type="ECO:0000269" key="116">
    <source>
    </source>
</evidence>
<evidence type="ECO:0000269" key="117">
    <source>
    </source>
</evidence>
<evidence type="ECO:0000269" key="118">
    <source>
    </source>
</evidence>
<evidence type="ECO:0000269" key="119">
    <source>
    </source>
</evidence>
<evidence type="ECO:0000269" key="120">
    <source>
    </source>
</evidence>
<evidence type="ECO:0000269" key="121">
    <source>
    </source>
</evidence>
<evidence type="ECO:0000269" key="122">
    <source>
    </source>
</evidence>
<evidence type="ECO:0000303" key="123">
    <source>
    </source>
</evidence>
<evidence type="ECO:0000303" key="124">
    <source>
    </source>
</evidence>
<evidence type="ECO:0000303" key="125">
    <source>
    </source>
</evidence>
<evidence type="ECO:0000305" key="126"/>
<evidence type="ECO:0000305" key="127">
    <source>
    </source>
</evidence>
<evidence type="ECO:0000305" key="128">
    <source>
    </source>
</evidence>
<evidence type="ECO:0000305" key="129">
    <source>
    </source>
</evidence>
<evidence type="ECO:0000305" key="130">
    <source>
    </source>
</evidence>
<evidence type="ECO:0000305" key="131">
    <source>
    </source>
</evidence>
<evidence type="ECO:0000305" key="132">
    <source>
    </source>
</evidence>
<evidence type="ECO:0000305" key="133">
    <source>
    </source>
</evidence>
<evidence type="ECO:0000305" key="134">
    <source>
    </source>
</evidence>
<evidence type="ECO:0000305" key="135">
    <source>
    </source>
</evidence>
<evidence type="ECO:0000305" key="136">
    <source>
    </source>
</evidence>
<evidence type="ECO:0000305" key="137">
    <source>
    </source>
</evidence>
<evidence type="ECO:0000305" key="138">
    <source>
    </source>
</evidence>
<evidence type="ECO:0000305" key="139">
    <source>
    </source>
</evidence>
<evidence type="ECO:0000305" key="140">
    <source>
    </source>
</evidence>
<evidence type="ECO:0000305" key="141">
    <source>
    </source>
</evidence>
<evidence type="ECO:0000305" key="142">
    <source>
    </source>
</evidence>
<evidence type="ECO:0007744" key="143">
    <source>
        <dbReference type="PDB" id="1A1R"/>
    </source>
</evidence>
<evidence type="ECO:0007744" key="144">
    <source>
        <dbReference type="PDB" id="1HEI"/>
    </source>
</evidence>
<evidence type="ECO:0007744" key="145">
    <source>
        <dbReference type="PDB" id="1N1L"/>
    </source>
</evidence>
<evidence type="ECO:0007744" key="146">
    <source>
        <dbReference type="PDB" id="1R7C"/>
    </source>
</evidence>
<evidence type="ECO:0007744" key="147">
    <source>
        <dbReference type="PDB" id="1R7D"/>
    </source>
</evidence>
<evidence type="ECO:0007744" key="148">
    <source>
        <dbReference type="PDB" id="1R7E"/>
    </source>
</evidence>
<evidence type="ECO:0007744" key="149">
    <source>
        <dbReference type="PDB" id="1R7F"/>
    </source>
</evidence>
<evidence type="ECO:0007744" key="150">
    <source>
        <dbReference type="PDB" id="1R7G"/>
    </source>
</evidence>
<evidence type="ECO:0007744" key="151">
    <source>
        <dbReference type="PDB" id="1RGQ"/>
    </source>
</evidence>
<evidence type="ECO:0007744" key="152">
    <source>
        <dbReference type="PDB" id="2A4R"/>
    </source>
</evidence>
<evidence type="ECO:0007744" key="153">
    <source>
        <dbReference type="PDB" id="2F9V"/>
    </source>
</evidence>
<evidence type="ECO:0007744" key="154">
    <source>
        <dbReference type="PDB" id="2JXF"/>
    </source>
</evidence>
<evidence type="ECO:0007744" key="155">
    <source>
        <dbReference type="PDB" id="2KDR"/>
    </source>
</evidence>
<evidence type="ECO:0007744" key="156">
    <source>
        <dbReference type="PDB" id="2O8M"/>
    </source>
</evidence>
<evidence type="ECO:0007744" key="157">
    <source>
        <dbReference type="PDB" id="2OBQ"/>
    </source>
</evidence>
<evidence type="ECO:0007744" key="158">
    <source>
        <dbReference type="PDB" id="2OC0"/>
    </source>
</evidence>
<evidence type="ECO:0007744" key="159">
    <source>
        <dbReference type="PDB" id="2OC1"/>
    </source>
</evidence>
<evidence type="ECO:0007744" key="160">
    <source>
        <dbReference type="PDB" id="2OC7"/>
    </source>
</evidence>
<evidence type="ECO:0007744" key="161">
    <source>
        <dbReference type="PDB" id="2OC8"/>
    </source>
</evidence>
<evidence type="ECO:0007744" key="162">
    <source>
        <dbReference type="PDB" id="2OIN"/>
    </source>
</evidence>
<evidence type="ECO:0007744" key="163">
    <source>
        <dbReference type="PDB" id="2XI2"/>
    </source>
</evidence>
<evidence type="ECO:0007744" key="164">
    <source>
        <dbReference type="PDB" id="2XI3"/>
    </source>
</evidence>
<evidence type="ECO:0007744" key="165">
    <source>
        <dbReference type="PDB" id="2XNI"/>
    </source>
</evidence>
<evidence type="ECO:0007744" key="166">
    <source>
        <dbReference type="PDB" id="3RC4"/>
    </source>
</evidence>
<evidence type="ECO:0007744" key="167">
    <source>
        <dbReference type="PDB" id="3RC5"/>
    </source>
</evidence>
<evidence type="ECO:0007744" key="168">
    <source>
        <dbReference type="PDB" id="4MWF"/>
    </source>
</evidence>
<evidence type="ECO:0007829" key="169">
    <source>
        <dbReference type="PDB" id="1A1V"/>
    </source>
</evidence>
<evidence type="ECO:0007829" key="170">
    <source>
        <dbReference type="PDB" id="1CWX"/>
    </source>
</evidence>
<evidence type="ECO:0007829" key="171">
    <source>
        <dbReference type="PDB" id="1HEI"/>
    </source>
</evidence>
<evidence type="ECO:0007829" key="172">
    <source>
        <dbReference type="PDB" id="1R7C"/>
    </source>
</evidence>
<evidence type="ECO:0007829" key="173">
    <source>
        <dbReference type="PDB" id="2F9V"/>
    </source>
</evidence>
<evidence type="ECO:0007829" key="174">
    <source>
        <dbReference type="PDB" id="2HD0"/>
    </source>
</evidence>
<evidence type="ECO:0007829" key="175">
    <source>
        <dbReference type="PDB" id="2JXF"/>
    </source>
</evidence>
<evidence type="ECO:0007829" key="176">
    <source>
        <dbReference type="PDB" id="2KDR"/>
    </source>
</evidence>
<evidence type="ECO:0007829" key="177">
    <source>
        <dbReference type="PDB" id="2N1P"/>
    </source>
</evidence>
<evidence type="ECO:0007829" key="178">
    <source>
        <dbReference type="PDB" id="2O8M"/>
    </source>
</evidence>
<evidence type="ECO:0007829" key="179">
    <source>
        <dbReference type="PDB" id="2OC0"/>
    </source>
</evidence>
<evidence type="ECO:0007829" key="180">
    <source>
        <dbReference type="PDB" id="2XI3"/>
    </source>
</evidence>
<evidence type="ECO:0007829" key="181">
    <source>
        <dbReference type="PDB" id="3RC4"/>
    </source>
</evidence>
<evidence type="ECO:0007829" key="182">
    <source>
        <dbReference type="PDB" id="4MWF"/>
    </source>
</evidence>
<evidence type="ECO:0007829" key="183">
    <source>
        <dbReference type="PDB" id="4N0Y"/>
    </source>
</evidence>
<evidence type="ECO:0007829" key="184">
    <source>
        <dbReference type="PDB" id="5EOC"/>
    </source>
</evidence>
<evidence type="ECO:0007829" key="185">
    <source>
        <dbReference type="PDB" id="6BZW"/>
    </source>
</evidence>
<evidence type="ECO:0007829" key="186">
    <source>
        <dbReference type="PDB" id="6BZY"/>
    </source>
</evidence>
<evidence type="ECO:0007829" key="187">
    <source>
        <dbReference type="PDB" id="6UYD"/>
    </source>
</evidence>
<evidence type="ECO:0007829" key="188">
    <source>
        <dbReference type="PDB" id="6WO5"/>
    </source>
</evidence>
<dbReference type="EC" id="3.4.22.-" evidence="3"/>
<dbReference type="EC" id="3.4.21.98" evidence="115 118"/>
<dbReference type="EC" id="3.6.1.15" evidence="47 54 92"/>
<dbReference type="EC" id="3.6.4.13" evidence="47 54 92"/>
<dbReference type="EC" id="2.7.7.48" evidence="72"/>
<dbReference type="EMBL" id="M67463">
    <property type="protein sequence ID" value="AAA45534.1"/>
    <property type="molecule type" value="Genomic_RNA"/>
</dbReference>
<dbReference type="EMBL" id="AF009606">
    <property type="protein sequence ID" value="AAB66324.1"/>
    <property type="molecule type" value="Genomic_RNA"/>
</dbReference>
<dbReference type="EMBL" id="AF011751">
    <property type="protein sequence ID" value="AAB67036.1"/>
    <property type="molecule type" value="Genomic_RNA"/>
</dbReference>
<dbReference type="EMBL" id="AF011752">
    <property type="protein sequence ID" value="AAB67037.1"/>
    <property type="molecule type" value="Genomic_RNA"/>
</dbReference>
<dbReference type="EMBL" id="AF011753">
    <property type="protein sequence ID" value="AAB67038.1"/>
    <property type="molecule type" value="Genomic_RNA"/>
</dbReference>
<dbReference type="PIR" id="A36814">
    <property type="entry name" value="GNWVCH"/>
</dbReference>
<dbReference type="PDB" id="1A1R">
    <property type="method" value="X-ray"/>
    <property type="resolution" value="2.50 A"/>
    <property type="chains" value="A/B=1027-1206"/>
</dbReference>
<dbReference type="PDB" id="1A1V">
    <property type="method" value="X-ray"/>
    <property type="resolution" value="2.20 A"/>
    <property type="chains" value="A=1193-1657"/>
</dbReference>
<dbReference type="PDB" id="1CWX">
    <property type="method" value="NMR"/>
    <property type="chains" value="A=2-45"/>
</dbReference>
<dbReference type="PDB" id="1HEI">
    <property type="method" value="X-ray"/>
    <property type="resolution" value="2.10 A"/>
    <property type="chains" value="A/B=1206-1656"/>
</dbReference>
<dbReference type="PDB" id="1JR6">
    <property type="method" value="NMR"/>
    <property type="chains" value="A=1353-1456, A=1478-1507"/>
</dbReference>
<dbReference type="PDB" id="1N1L">
    <property type="method" value="X-ray"/>
    <property type="resolution" value="2.60 A"/>
    <property type="chains" value="A/B=1027-1206"/>
</dbReference>
<dbReference type="PDB" id="1ONB">
    <property type="method" value="NMR"/>
    <property type="chains" value="A=1353-1456, A=1478-1507"/>
</dbReference>
<dbReference type="PDB" id="1R7C">
    <property type="method" value="NMR"/>
    <property type="chains" value="A=1973-2003"/>
</dbReference>
<dbReference type="PDB" id="1R7D">
    <property type="method" value="NMR"/>
    <property type="chains" value="A=1973-2003"/>
</dbReference>
<dbReference type="PDB" id="1R7E">
    <property type="method" value="NMR"/>
    <property type="chains" value="A=1973-2003"/>
</dbReference>
<dbReference type="PDB" id="1R7F">
    <property type="method" value="NMR"/>
    <property type="chains" value="A=1973-2003"/>
</dbReference>
<dbReference type="PDB" id="1R7G">
    <property type="method" value="NMR"/>
    <property type="chains" value="A=1973-2003"/>
</dbReference>
<dbReference type="PDB" id="1RGQ">
    <property type="method" value="X-ray"/>
    <property type="resolution" value="2.90 A"/>
    <property type="chains" value="A/B=1027-1207"/>
</dbReference>
<dbReference type="PDB" id="2A4R">
    <property type="method" value="X-ray"/>
    <property type="resolution" value="2.40 A"/>
    <property type="chains" value="A/C=1027-1207, B/D=1680-1696"/>
</dbReference>
<dbReference type="PDB" id="2F9V">
    <property type="method" value="X-ray"/>
    <property type="resolution" value="2.60 A"/>
    <property type="chains" value="A/C=1027-1207, B/D=1678-1696"/>
</dbReference>
<dbReference type="PDB" id="2HD0">
    <property type="method" value="X-ray"/>
    <property type="resolution" value="2.28 A"/>
    <property type="chains" value="A/B/C/D/E/F/G/H/I/J/K/L=903-1026"/>
</dbReference>
<dbReference type="PDB" id="2JXF">
    <property type="method" value="NMR"/>
    <property type="chains" value="A=1751-1780"/>
</dbReference>
<dbReference type="PDB" id="2KDR">
    <property type="method" value="NMR"/>
    <property type="chains" value="X=1938-1965"/>
</dbReference>
<dbReference type="PDB" id="2N1P">
    <property type="method" value="NMR"/>
    <property type="chains" value="A=2982-3011"/>
</dbReference>
<dbReference type="PDB" id="2O8M">
    <property type="method" value="X-ray"/>
    <property type="resolution" value="2.00 A"/>
    <property type="chains" value="A/B=1027-1207, C/D=1678-1696"/>
</dbReference>
<dbReference type="PDB" id="2OBO">
    <property type="method" value="X-ray"/>
    <property type="resolution" value="2.60 A"/>
    <property type="chains" value="A/C=1022-1207, B/D=1677-1695"/>
</dbReference>
<dbReference type="PDB" id="2OBQ">
    <property type="method" value="X-ray"/>
    <property type="resolution" value="2.50 A"/>
    <property type="chains" value="A/C=1027-1207, B/D=1678-1696"/>
</dbReference>
<dbReference type="PDB" id="2OC0">
    <property type="method" value="X-ray"/>
    <property type="resolution" value="2.30 A"/>
    <property type="chains" value="A/C=1027-1207, B/D=1680-1696"/>
</dbReference>
<dbReference type="PDB" id="2OC1">
    <property type="method" value="X-ray"/>
    <property type="resolution" value="2.70 A"/>
    <property type="chains" value="A/C=1027-1207, B/D=1680-1696"/>
</dbReference>
<dbReference type="PDB" id="2OC7">
    <property type="method" value="X-ray"/>
    <property type="resolution" value="2.70 A"/>
    <property type="chains" value="A/C=1027-1207, B/D=1680-1696"/>
</dbReference>
<dbReference type="PDB" id="2OC8">
    <property type="method" value="X-ray"/>
    <property type="resolution" value="2.66 A"/>
    <property type="chains" value="A/C=1027-1207, B/D=1680-1696"/>
</dbReference>
<dbReference type="PDB" id="2OIN">
    <property type="method" value="X-ray"/>
    <property type="resolution" value="2.50 A"/>
    <property type="chains" value="A/B=1027-1207, C/D=1678-1696"/>
</dbReference>
<dbReference type="PDB" id="2P59">
    <property type="method" value="X-ray"/>
    <property type="resolution" value="2.90 A"/>
    <property type="chains" value="C/D=1678-1696"/>
</dbReference>
<dbReference type="PDB" id="2QV1">
    <property type="method" value="X-ray"/>
    <property type="resolution" value="2.40 A"/>
    <property type="chains" value="C/D=1678-1696"/>
</dbReference>
<dbReference type="PDB" id="2XI2">
    <property type="method" value="X-ray"/>
    <property type="resolution" value="1.80 A"/>
    <property type="chains" value="A/B/C=2421-2990"/>
</dbReference>
<dbReference type="PDB" id="2XI3">
    <property type="method" value="X-ray"/>
    <property type="resolution" value="1.70 A"/>
    <property type="chains" value="A/B=2421-2990"/>
</dbReference>
<dbReference type="PDB" id="2XNI">
    <property type="method" value="X-ray"/>
    <property type="resolution" value="3.30 A"/>
    <property type="chains" value="A/B=1027-1206"/>
</dbReference>
<dbReference type="PDB" id="3RC4">
    <property type="method" value="X-ray"/>
    <property type="resolution" value="1.50 A"/>
    <property type="chains" value="A=1026-1208"/>
</dbReference>
<dbReference type="PDB" id="3RC5">
    <property type="method" value="X-ray"/>
    <property type="resolution" value="1.60 A"/>
    <property type="chains" value="A=1026-1208"/>
</dbReference>
<dbReference type="PDB" id="4CL1">
    <property type="method" value="X-ray"/>
    <property type="resolution" value="3.50 A"/>
    <property type="chains" value="A/B/C/D=2005-2174"/>
</dbReference>
<dbReference type="PDB" id="4JZN">
    <property type="method" value="X-ray"/>
    <property type="resolution" value="2.05 A"/>
    <property type="chains" value="K=434-446"/>
</dbReference>
<dbReference type="PDB" id="4JZO">
    <property type="method" value="X-ray"/>
    <property type="resolution" value="2.22 A"/>
    <property type="chains" value="I/J/K/L=434-446"/>
</dbReference>
<dbReference type="PDB" id="4MWF">
    <property type="method" value="X-ray"/>
    <property type="resolution" value="2.64 A"/>
    <property type="chains" value="C/D=412-459, C/D=486-645"/>
</dbReference>
<dbReference type="PDB" id="4N0Y">
    <property type="method" value="X-ray"/>
    <property type="resolution" value="1.75 A"/>
    <property type="chains" value="A=314-324"/>
</dbReference>
<dbReference type="PDB" id="4Q0X">
    <property type="method" value="X-ray"/>
    <property type="resolution" value="2.90 A"/>
    <property type="chains" value="E=421-446"/>
</dbReference>
<dbReference type="PDB" id="4XVJ">
    <property type="method" value="X-ray"/>
    <property type="resolution" value="2.00 A"/>
    <property type="chains" value="A=412-423"/>
</dbReference>
<dbReference type="PDB" id="4Z0X">
    <property type="method" value="X-ray"/>
    <property type="resolution" value="2.00 A"/>
    <property type="chains" value="C=435-446"/>
</dbReference>
<dbReference type="PDB" id="5EOC">
    <property type="method" value="X-ray"/>
    <property type="resolution" value="1.98 A"/>
    <property type="chains" value="P/Q=412-422"/>
</dbReference>
<dbReference type="PDB" id="5ERW">
    <property type="method" value="X-ray"/>
    <property type="resolution" value="2.90 A"/>
    <property type="chains" value="C=434-446"/>
</dbReference>
<dbReference type="PDB" id="5FGB">
    <property type="method" value="X-ray"/>
    <property type="resolution" value="1.65 A"/>
    <property type="chains" value="F/G=405-425"/>
</dbReference>
<dbReference type="PDB" id="5FGC">
    <property type="method" value="X-ray"/>
    <property type="resolution" value="1.90 A"/>
    <property type="chains" value="A=405-425"/>
</dbReference>
<dbReference type="PDB" id="5JZI">
    <property type="method" value="X-ray"/>
    <property type="resolution" value="2.50 A"/>
    <property type="chains" value="C/H=1406-1415"/>
</dbReference>
<dbReference type="PDB" id="5YXN">
    <property type="method" value="X-ray"/>
    <property type="resolution" value="2.03 A"/>
    <property type="chains" value="I=1406-1415"/>
</dbReference>
<dbReference type="PDB" id="5YXU">
    <property type="method" value="X-ray"/>
    <property type="resolution" value="2.70 A"/>
    <property type="chains" value="I/J=1406-1415"/>
</dbReference>
<dbReference type="PDB" id="6BQJ">
    <property type="method" value="X-ray"/>
    <property type="resolution" value="1.69 A"/>
    <property type="chains" value="A/B/C=1030-1208"/>
</dbReference>
<dbReference type="PDB" id="6BQK">
    <property type="method" value="X-ray"/>
    <property type="resolution" value="1.97 A"/>
    <property type="chains" value="A/B=1030-1208"/>
</dbReference>
<dbReference type="PDB" id="6BZU">
    <property type="method" value="X-ray"/>
    <property type="resolution" value="2.70 A"/>
    <property type="chains" value="I/J/K/L=412-423"/>
</dbReference>
<dbReference type="PDB" id="6BZV">
    <property type="method" value="X-ray"/>
    <property type="resolution" value="2.65 A"/>
    <property type="chains" value="I/J/K/L=412-423"/>
</dbReference>
<dbReference type="PDB" id="6BZW">
    <property type="method" value="X-ray"/>
    <property type="resolution" value="2.20 A"/>
    <property type="chains" value="I/J/K/L=412-423"/>
</dbReference>
<dbReference type="PDB" id="6BZY">
    <property type="method" value="X-ray"/>
    <property type="resolution" value="1.60 A"/>
    <property type="chains" value="B=412-423"/>
</dbReference>
<dbReference type="PDB" id="6UYD">
    <property type="method" value="X-ray"/>
    <property type="resolution" value="1.90 A"/>
    <property type="chains" value="E/F=412-645"/>
</dbReference>
<dbReference type="PDB" id="6WO5">
    <property type="method" value="X-ray"/>
    <property type="resolution" value="2.62 A"/>
    <property type="chains" value="E/F=412-645"/>
</dbReference>
<dbReference type="PDB" id="6WOQ">
    <property type="method" value="X-ray"/>
    <property type="resolution" value="3.67 A"/>
    <property type="chains" value="E/F=412-645"/>
</dbReference>
<dbReference type="PDB" id="7DUU">
    <property type="method" value="X-ray"/>
    <property type="resolution" value="2.51 A"/>
    <property type="chains" value="C=1254-1262"/>
</dbReference>
<dbReference type="PDBsum" id="1A1R"/>
<dbReference type="PDBsum" id="1A1V"/>
<dbReference type="PDBsum" id="1CWX"/>
<dbReference type="PDBsum" id="1HEI"/>
<dbReference type="PDBsum" id="1JR6"/>
<dbReference type="PDBsum" id="1N1L"/>
<dbReference type="PDBsum" id="1ONB"/>
<dbReference type="PDBsum" id="1R7C"/>
<dbReference type="PDBsum" id="1R7D"/>
<dbReference type="PDBsum" id="1R7E"/>
<dbReference type="PDBsum" id="1R7F"/>
<dbReference type="PDBsum" id="1R7G"/>
<dbReference type="PDBsum" id="1RGQ"/>
<dbReference type="PDBsum" id="2A4R"/>
<dbReference type="PDBsum" id="2F9V"/>
<dbReference type="PDBsum" id="2HD0"/>
<dbReference type="PDBsum" id="2JXF"/>
<dbReference type="PDBsum" id="2KDR"/>
<dbReference type="PDBsum" id="2N1P"/>
<dbReference type="PDBsum" id="2O8M"/>
<dbReference type="PDBsum" id="2OBO"/>
<dbReference type="PDBsum" id="2OBQ"/>
<dbReference type="PDBsum" id="2OC0"/>
<dbReference type="PDBsum" id="2OC1"/>
<dbReference type="PDBsum" id="2OC7"/>
<dbReference type="PDBsum" id="2OC8"/>
<dbReference type="PDBsum" id="2OIN"/>
<dbReference type="PDBsum" id="2P59"/>
<dbReference type="PDBsum" id="2QV1"/>
<dbReference type="PDBsum" id="2XI2"/>
<dbReference type="PDBsum" id="2XI3"/>
<dbReference type="PDBsum" id="2XNI"/>
<dbReference type="PDBsum" id="3RC4"/>
<dbReference type="PDBsum" id="3RC5"/>
<dbReference type="PDBsum" id="4CL1"/>
<dbReference type="PDBsum" id="4JZN"/>
<dbReference type="PDBsum" id="4JZO"/>
<dbReference type="PDBsum" id="4MWF"/>
<dbReference type="PDBsum" id="4N0Y"/>
<dbReference type="PDBsum" id="4Q0X"/>
<dbReference type="PDBsum" id="4XVJ"/>
<dbReference type="PDBsum" id="4Z0X"/>
<dbReference type="PDBsum" id="5EOC"/>
<dbReference type="PDBsum" id="5ERW"/>
<dbReference type="PDBsum" id="5FGB"/>
<dbReference type="PDBsum" id="5FGC"/>
<dbReference type="PDBsum" id="5JZI"/>
<dbReference type="PDBsum" id="5YXN"/>
<dbReference type="PDBsum" id="5YXU"/>
<dbReference type="PDBsum" id="6BQJ"/>
<dbReference type="PDBsum" id="6BQK"/>
<dbReference type="PDBsum" id="6BZU"/>
<dbReference type="PDBsum" id="6BZV"/>
<dbReference type="PDBsum" id="6BZW"/>
<dbReference type="PDBsum" id="6BZY"/>
<dbReference type="PDBsum" id="6UYD"/>
<dbReference type="PDBsum" id="6WO5"/>
<dbReference type="PDBsum" id="6WOQ"/>
<dbReference type="PDBsum" id="7DUU"/>
<dbReference type="BMRB" id="P27958"/>
<dbReference type="SMR" id="P27958"/>
<dbReference type="ELM" id="P27958"/>
<dbReference type="IntAct" id="P27958">
    <property type="interactions" value="234"/>
</dbReference>
<dbReference type="BindingDB" id="P27958"/>
<dbReference type="ChEMBL" id="CHEMBL3638344"/>
<dbReference type="DrugBank" id="DB08644">
    <property type="generic name" value="{1-[2-(1-FORMYL-PROPYL)-3-METHANESULFONYLAMINO-PYRROLIDINE-1-CARBONYL]-2-METHYL-PROPYL}-CARBAMIC ACID TERT-BUTYL ESTER"/>
</dbReference>
<dbReference type="DrugCentral" id="P27958"/>
<dbReference type="MEROPS" id="S29.001"/>
<dbReference type="GlyGen" id="P27958">
    <property type="glycosylation" value="18 sites, 14 N-linked glycans (11 sites)"/>
</dbReference>
<dbReference type="iPTMnet" id="P27958"/>
<dbReference type="SwissPalm" id="P27958"/>
<dbReference type="ABCD" id="P27958">
    <property type="antibodies" value="29 sequenced antibodies"/>
</dbReference>
<dbReference type="KEGG" id="vg:951475"/>
<dbReference type="euHCVdb" id="AF009606"/>
<dbReference type="euHCVdb" id="AF011751"/>
<dbReference type="euHCVdb" id="AF011752"/>
<dbReference type="euHCVdb" id="AF011753"/>
<dbReference type="euHCVdb" id="M67463"/>
<dbReference type="BRENDA" id="3.4.21.98">
    <property type="organism ID" value="17003"/>
</dbReference>
<dbReference type="Reactome" id="R-HSA-8854214">
    <property type="pathway name" value="TBC/RABGAPs"/>
</dbReference>
<dbReference type="EvolutionaryTrace" id="P27958"/>
<dbReference type="Proteomes" id="UP000000518">
    <property type="component" value="Segment"/>
</dbReference>
<dbReference type="Proteomes" id="UP000115192">
    <property type="component" value="Genome"/>
</dbReference>
<dbReference type="Proteomes" id="UP000180556">
    <property type="component" value="Genome"/>
</dbReference>
<dbReference type="Proteomes" id="UP000180557">
    <property type="component" value="Genome"/>
</dbReference>
<dbReference type="Proteomes" id="UP000180558">
    <property type="component" value="Genome"/>
</dbReference>
<dbReference type="GO" id="GO:0033116">
    <property type="term" value="C:endoplasmic reticulum-Golgi intermediate compartment membrane"/>
    <property type="evidence" value="ECO:0000304"/>
    <property type="project" value="Reactome"/>
</dbReference>
<dbReference type="GO" id="GO:0044167">
    <property type="term" value="C:host cell endoplasmic reticulum membrane"/>
    <property type="evidence" value="ECO:0007669"/>
    <property type="project" value="UniProtKB-SubCell"/>
</dbReference>
<dbReference type="GO" id="GO:0044186">
    <property type="term" value="C:host cell lipid droplet"/>
    <property type="evidence" value="ECO:0007669"/>
    <property type="project" value="UniProtKB-SubCell"/>
</dbReference>
<dbReference type="GO" id="GO:0044191">
    <property type="term" value="C:host cell mitochondrial membrane"/>
    <property type="evidence" value="ECO:0007669"/>
    <property type="project" value="UniProtKB-SubCell"/>
</dbReference>
<dbReference type="GO" id="GO:0042025">
    <property type="term" value="C:host cell nucleus"/>
    <property type="evidence" value="ECO:0007669"/>
    <property type="project" value="UniProtKB-SubCell"/>
</dbReference>
<dbReference type="GO" id="GO:0044220">
    <property type="term" value="C:host cell perinuclear region of cytoplasm"/>
    <property type="evidence" value="ECO:0007669"/>
    <property type="project" value="UniProtKB-SubCell"/>
</dbReference>
<dbReference type="GO" id="GO:0020002">
    <property type="term" value="C:host cell plasma membrane"/>
    <property type="evidence" value="ECO:0007669"/>
    <property type="project" value="UniProtKB-SubCell"/>
</dbReference>
<dbReference type="GO" id="GO:1990904">
    <property type="term" value="C:ribonucleoprotein complex"/>
    <property type="evidence" value="ECO:0007669"/>
    <property type="project" value="UniProtKB-KW"/>
</dbReference>
<dbReference type="GO" id="GO:0019031">
    <property type="term" value="C:viral envelope"/>
    <property type="evidence" value="ECO:0007669"/>
    <property type="project" value="UniProtKB-KW"/>
</dbReference>
<dbReference type="GO" id="GO:0019013">
    <property type="term" value="C:viral nucleocapsid"/>
    <property type="evidence" value="ECO:0007669"/>
    <property type="project" value="UniProtKB-KW"/>
</dbReference>
<dbReference type="GO" id="GO:0055036">
    <property type="term" value="C:virion membrane"/>
    <property type="evidence" value="ECO:0007669"/>
    <property type="project" value="UniProtKB-SubCell"/>
</dbReference>
<dbReference type="GO" id="GO:0005524">
    <property type="term" value="F:ATP binding"/>
    <property type="evidence" value="ECO:0007669"/>
    <property type="project" value="UniProtKB-KW"/>
</dbReference>
<dbReference type="GO" id="GO:0016887">
    <property type="term" value="F:ATP hydrolysis activity"/>
    <property type="evidence" value="ECO:0007669"/>
    <property type="project" value="RHEA"/>
</dbReference>
<dbReference type="GO" id="GO:0015267">
    <property type="term" value="F:channel activity"/>
    <property type="evidence" value="ECO:0007669"/>
    <property type="project" value="UniProtKB-KW"/>
</dbReference>
<dbReference type="GO" id="GO:0004197">
    <property type="term" value="F:cysteine-type endopeptidase activity"/>
    <property type="evidence" value="ECO:0007669"/>
    <property type="project" value="InterPro"/>
</dbReference>
<dbReference type="GO" id="GO:0019900">
    <property type="term" value="F:kinase binding"/>
    <property type="evidence" value="ECO:0000314"/>
    <property type="project" value="AgBase"/>
</dbReference>
<dbReference type="GO" id="GO:0003723">
    <property type="term" value="F:RNA binding"/>
    <property type="evidence" value="ECO:0000314"/>
    <property type="project" value="DisProt"/>
</dbReference>
<dbReference type="GO" id="GO:0003724">
    <property type="term" value="F:RNA helicase activity"/>
    <property type="evidence" value="ECO:0007669"/>
    <property type="project" value="UniProtKB-EC"/>
</dbReference>
<dbReference type="GO" id="GO:0003968">
    <property type="term" value="F:RNA-directed RNA polymerase activity"/>
    <property type="evidence" value="ECO:0007669"/>
    <property type="project" value="UniProtKB-KW"/>
</dbReference>
<dbReference type="GO" id="GO:0004252">
    <property type="term" value="F:serine-type endopeptidase activity"/>
    <property type="evidence" value="ECO:0007669"/>
    <property type="project" value="InterPro"/>
</dbReference>
<dbReference type="GO" id="GO:0017124">
    <property type="term" value="F:SH3 domain binding"/>
    <property type="evidence" value="ECO:0007669"/>
    <property type="project" value="UniProtKB-KW"/>
</dbReference>
<dbReference type="GO" id="GO:0005198">
    <property type="term" value="F:structural molecule activity"/>
    <property type="evidence" value="ECO:0007669"/>
    <property type="project" value="InterPro"/>
</dbReference>
<dbReference type="GO" id="GO:0035663">
    <property type="term" value="F:Toll-like receptor 2 binding"/>
    <property type="evidence" value="ECO:0000315"/>
    <property type="project" value="AgBase"/>
</dbReference>
<dbReference type="GO" id="GO:0008270">
    <property type="term" value="F:zinc ion binding"/>
    <property type="evidence" value="ECO:0007669"/>
    <property type="project" value="InterPro"/>
</dbReference>
<dbReference type="GO" id="GO:0098671">
    <property type="term" value="P:adhesion receptor-mediated virion attachment to host cell"/>
    <property type="evidence" value="ECO:0007669"/>
    <property type="project" value="UniProtKB-KW"/>
</dbReference>
<dbReference type="GO" id="GO:0075512">
    <property type="term" value="P:clathrin-dependent endocytosis of virus by host cell"/>
    <property type="evidence" value="ECO:0007669"/>
    <property type="project" value="UniProtKB-KW"/>
</dbReference>
<dbReference type="GO" id="GO:0098670">
    <property type="term" value="P:entry receptor-mediated virion attachment to host cell"/>
    <property type="evidence" value="ECO:0007669"/>
    <property type="project" value="UniProtKB-KW"/>
</dbReference>
<dbReference type="GO" id="GO:0039654">
    <property type="term" value="P:fusion of virus membrane with host endosome membrane"/>
    <property type="evidence" value="ECO:0007669"/>
    <property type="project" value="UniProtKB-KW"/>
</dbReference>
<dbReference type="GO" id="GO:0034220">
    <property type="term" value="P:monoatomic ion transmembrane transport"/>
    <property type="evidence" value="ECO:0007669"/>
    <property type="project" value="UniProtKB-KW"/>
</dbReference>
<dbReference type="GO" id="GO:0050709">
    <property type="term" value="P:negative regulation of protein secretion"/>
    <property type="evidence" value="ECO:0000314"/>
    <property type="project" value="AgBase"/>
</dbReference>
<dbReference type="GO" id="GO:0000122">
    <property type="term" value="P:negative regulation of transcription by RNA polymerase II"/>
    <property type="evidence" value="ECO:0000314"/>
    <property type="project" value="AgBase"/>
</dbReference>
<dbReference type="GO" id="GO:0032467">
    <property type="term" value="P:positive regulation of cytokinesis"/>
    <property type="evidence" value="ECO:0000315"/>
    <property type="project" value="AgBase"/>
</dbReference>
<dbReference type="GO" id="GO:1903301">
    <property type="term" value="P:positive regulation of hexokinase activity"/>
    <property type="evidence" value="ECO:0000314"/>
    <property type="project" value="CACAO"/>
</dbReference>
<dbReference type="GO" id="GO:0006508">
    <property type="term" value="P:proteolysis"/>
    <property type="evidence" value="ECO:0007669"/>
    <property type="project" value="UniProtKB-KW"/>
</dbReference>
<dbReference type="GO" id="GO:0039520">
    <property type="term" value="P:symbiont-mediated activation of host autophagy"/>
    <property type="evidence" value="ECO:0007669"/>
    <property type="project" value="UniProtKB-KW"/>
</dbReference>
<dbReference type="GO" id="GO:0039645">
    <property type="term" value="P:symbiont-mediated perturbation of host cell cycle G1/S transition checkpoint"/>
    <property type="evidence" value="ECO:0007669"/>
    <property type="project" value="UniProtKB-KW"/>
</dbReference>
<dbReference type="GO" id="GO:0044068">
    <property type="term" value="P:symbiont-mediated perturbation of host cellular process"/>
    <property type="evidence" value="ECO:0000314"/>
    <property type="project" value="CACAO"/>
</dbReference>
<dbReference type="GO" id="GO:0039545">
    <property type="term" value="P:symbiont-mediated suppression of host cytoplasmic pattern recognition receptor signaling pathway via inhibition of MAVS activity"/>
    <property type="evidence" value="ECO:0007669"/>
    <property type="project" value="UniProtKB-KW"/>
</dbReference>
<dbReference type="GO" id="GO:0039563">
    <property type="term" value="P:symbiont-mediated suppression of host JAK-STAT cascade via inhibition of STAT1 activity"/>
    <property type="evidence" value="ECO:0007669"/>
    <property type="project" value="UniProtKB-KW"/>
</dbReference>
<dbReference type="GO" id="GO:0039527">
    <property type="term" value="P:symbiont-mediated suppression of host TRAF-mediated signal transduction"/>
    <property type="evidence" value="ECO:0007669"/>
    <property type="project" value="UniProtKB-KW"/>
</dbReference>
<dbReference type="GO" id="GO:0039502">
    <property type="term" value="P:symbiont-mediated suppression of host type I interferon-mediated signaling pathway"/>
    <property type="evidence" value="ECO:0000314"/>
    <property type="project" value="AgBase"/>
</dbReference>
<dbReference type="GO" id="GO:0019087">
    <property type="term" value="P:symbiont-mediated transformation of host cell"/>
    <property type="evidence" value="ECO:0007669"/>
    <property type="project" value="InterPro"/>
</dbReference>
<dbReference type="GO" id="GO:0044053">
    <property type="term" value="P:translocation of peptides or proteins into host cell cytoplasm"/>
    <property type="evidence" value="ECO:0000315"/>
    <property type="project" value="AgBase"/>
</dbReference>
<dbReference type="GO" id="GO:0019069">
    <property type="term" value="P:viral capsid assembly"/>
    <property type="evidence" value="ECO:0000314"/>
    <property type="project" value="DisProt"/>
</dbReference>
<dbReference type="GO" id="GO:0039694">
    <property type="term" value="P:viral RNA genome replication"/>
    <property type="evidence" value="ECO:0007669"/>
    <property type="project" value="InterPro"/>
</dbReference>
<dbReference type="GO" id="GO:0075523">
    <property type="term" value="P:viral translational frameshifting"/>
    <property type="evidence" value="ECO:0007669"/>
    <property type="project" value="UniProtKB-KW"/>
</dbReference>
<dbReference type="CDD" id="cd17931">
    <property type="entry name" value="DEXHc_viral_Ns3"/>
    <property type="match status" value="1"/>
</dbReference>
<dbReference type="CDD" id="cd20903">
    <property type="entry name" value="HCV_p7"/>
    <property type="match status" value="1"/>
</dbReference>
<dbReference type="CDD" id="cd23202">
    <property type="entry name" value="Hepacivirus_RdRp"/>
    <property type="match status" value="1"/>
</dbReference>
<dbReference type="DisProt" id="DP00588"/>
<dbReference type="FunFam" id="1.10.820.10:FF:000001">
    <property type="entry name" value="Genome polyprotein"/>
    <property type="match status" value="1"/>
</dbReference>
<dbReference type="FunFam" id="1.20.1280.150:FF:000001">
    <property type="entry name" value="Genome polyprotein"/>
    <property type="match status" value="1"/>
</dbReference>
<dbReference type="FunFam" id="2.20.25.220:FF:000001">
    <property type="entry name" value="Genome polyprotein"/>
    <property type="match status" value="1"/>
</dbReference>
<dbReference type="FunFam" id="2.30.30.710:FF:000001">
    <property type="entry name" value="Genome polyprotein"/>
    <property type="match status" value="1"/>
</dbReference>
<dbReference type="FunFam" id="2.40.10.10:FF:000029">
    <property type="entry name" value="Genome polyprotein"/>
    <property type="match status" value="1"/>
</dbReference>
<dbReference type="FunFam" id="3.30.160.890:FF:000001">
    <property type="entry name" value="Genome polyprotein"/>
    <property type="match status" value="1"/>
</dbReference>
<dbReference type="FunFam" id="3.30.70.270:FF:000015">
    <property type="entry name" value="Genome polyprotein"/>
    <property type="match status" value="1"/>
</dbReference>
<dbReference type="FunFam" id="3.40.50.300:FF:000557">
    <property type="entry name" value="Genome polyprotein"/>
    <property type="match status" value="1"/>
</dbReference>
<dbReference type="FunFam" id="3.40.50.300:FF:000717">
    <property type="entry name" value="Genome polyprotein"/>
    <property type="match status" value="1"/>
</dbReference>
<dbReference type="FunFam" id="4.10.710.10:FF:000001">
    <property type="entry name" value="Genome polyprotein"/>
    <property type="match status" value="1"/>
</dbReference>
<dbReference type="FunFam" id="2.40.10.120:FF:000010">
    <property type="entry name" value="NS3 protease"/>
    <property type="match status" value="1"/>
</dbReference>
<dbReference type="Gene3D" id="2.40.10.120">
    <property type="match status" value="1"/>
</dbReference>
<dbReference type="Gene3D" id="3.30.70.270">
    <property type="match status" value="2"/>
</dbReference>
<dbReference type="Gene3D" id="6.10.250.1610">
    <property type="match status" value="1"/>
</dbReference>
<dbReference type="Gene3D" id="6.10.250.1750">
    <property type="match status" value="1"/>
</dbReference>
<dbReference type="Gene3D" id="6.10.250.2920">
    <property type="match status" value="1"/>
</dbReference>
<dbReference type="Gene3D" id="2.20.25.210">
    <property type="entry name" value="Hepatitis C NS5A, domain 1B"/>
    <property type="match status" value="1"/>
</dbReference>
<dbReference type="Gene3D" id="4.10.710.10">
    <property type="entry name" value="Hepatitis C Virus Capsid Protein, Chain A"/>
    <property type="match status" value="1"/>
</dbReference>
<dbReference type="Gene3D" id="3.30.160.890">
    <property type="entry name" value="Hepatitis C virus envelope glycoprotein E1, chain C"/>
    <property type="match status" value="1"/>
</dbReference>
<dbReference type="Gene3D" id="2.30.30.710">
    <property type="entry name" value="Hepatitis C virus non-structural protein NS2, C-terminal domain"/>
    <property type="match status" value="1"/>
</dbReference>
<dbReference type="Gene3D" id="1.20.1280.150">
    <property type="entry name" value="Hepatitis C virus non-structural protein NS2, N-terminal domain"/>
    <property type="match status" value="1"/>
</dbReference>
<dbReference type="Gene3D" id="2.20.25.220">
    <property type="entry name" value="Hepatitis C virus NS5A, 1B domain"/>
    <property type="match status" value="1"/>
</dbReference>
<dbReference type="Gene3D" id="3.40.50.300">
    <property type="entry name" value="P-loop containing nucleotide triphosphate hydrolases"/>
    <property type="match status" value="2"/>
</dbReference>
<dbReference type="Gene3D" id="1.10.820.10">
    <property type="entry name" value="RNA Helicase Chain A , domain 3"/>
    <property type="match status" value="1"/>
</dbReference>
<dbReference type="Gene3D" id="2.40.10.10">
    <property type="entry name" value="Trypsin-like serine proteases"/>
    <property type="match status" value="1"/>
</dbReference>
<dbReference type="InterPro" id="IPR043502">
    <property type="entry name" value="DNA/RNA_pol_sf"/>
</dbReference>
<dbReference type="InterPro" id="IPR011492">
    <property type="entry name" value="Flavi_DEAD"/>
</dbReference>
<dbReference type="InterPro" id="IPR002521">
    <property type="entry name" value="HCV_Core_C"/>
</dbReference>
<dbReference type="InterPro" id="IPR044896">
    <property type="entry name" value="HCV_core_chain_A"/>
</dbReference>
<dbReference type="InterPro" id="IPR002522">
    <property type="entry name" value="HCV_core_N"/>
</dbReference>
<dbReference type="InterPro" id="IPR002519">
    <property type="entry name" value="HCV_Env"/>
</dbReference>
<dbReference type="InterPro" id="IPR002531">
    <property type="entry name" value="HCV_NS1"/>
</dbReference>
<dbReference type="InterPro" id="IPR002518">
    <property type="entry name" value="HCV_NS2"/>
</dbReference>
<dbReference type="InterPro" id="IPR042205">
    <property type="entry name" value="HCV_NS2_C"/>
</dbReference>
<dbReference type="InterPro" id="IPR042209">
    <property type="entry name" value="HCV_NS2_N"/>
</dbReference>
<dbReference type="InterPro" id="IPR000745">
    <property type="entry name" value="HCV_NS4a"/>
</dbReference>
<dbReference type="InterPro" id="IPR001490">
    <property type="entry name" value="HCV_NS4b"/>
</dbReference>
<dbReference type="InterPro" id="IPR002868">
    <property type="entry name" value="HCV_NS5a"/>
</dbReference>
<dbReference type="InterPro" id="IPR013192">
    <property type="entry name" value="HCV_NS5A_1a"/>
</dbReference>
<dbReference type="InterPro" id="IPR013193">
    <property type="entry name" value="HCV_NS5a_1B_dom"/>
</dbReference>
<dbReference type="InterPro" id="IPR038568">
    <property type="entry name" value="HCV_NS5A_1B_sf"/>
</dbReference>
<dbReference type="InterPro" id="IPR024350">
    <property type="entry name" value="HCV_NS5a_C"/>
</dbReference>
<dbReference type="InterPro" id="IPR049913">
    <property type="entry name" value="HCV_p7"/>
</dbReference>
<dbReference type="InterPro" id="IPR014001">
    <property type="entry name" value="Helicase_ATP-bd"/>
</dbReference>
<dbReference type="InterPro" id="IPR001650">
    <property type="entry name" value="Helicase_C-like"/>
</dbReference>
<dbReference type="InterPro" id="IPR004109">
    <property type="entry name" value="HepC_NS3_protease"/>
</dbReference>
<dbReference type="InterPro" id="IPR054175">
    <property type="entry name" value="NS3_helicase_C"/>
</dbReference>
<dbReference type="InterPro" id="IPR038170">
    <property type="entry name" value="NS5A_1a_sf"/>
</dbReference>
<dbReference type="InterPro" id="IPR027417">
    <property type="entry name" value="P-loop_NTPase"/>
</dbReference>
<dbReference type="InterPro" id="IPR009003">
    <property type="entry name" value="Peptidase_S1_PA"/>
</dbReference>
<dbReference type="InterPro" id="IPR043504">
    <property type="entry name" value="Peptidase_S1_PA_chymotrypsin"/>
</dbReference>
<dbReference type="InterPro" id="IPR043128">
    <property type="entry name" value="Rev_trsase/Diguanyl_cyclase"/>
</dbReference>
<dbReference type="InterPro" id="IPR007094">
    <property type="entry name" value="RNA-dir_pol_PSvirus"/>
</dbReference>
<dbReference type="InterPro" id="IPR002166">
    <property type="entry name" value="RNA_pol_HCV"/>
</dbReference>
<dbReference type="Pfam" id="PF07652">
    <property type="entry name" value="Flavi_DEAD"/>
    <property type="match status" value="1"/>
</dbReference>
<dbReference type="Pfam" id="PF01543">
    <property type="entry name" value="HCV_capsid"/>
    <property type="match status" value="1"/>
</dbReference>
<dbReference type="Pfam" id="PF01542">
    <property type="entry name" value="HCV_core"/>
    <property type="match status" value="1"/>
</dbReference>
<dbReference type="Pfam" id="PF01539">
    <property type="entry name" value="HCV_env"/>
    <property type="match status" value="1"/>
</dbReference>
<dbReference type="Pfam" id="PF01560">
    <property type="entry name" value="HCV_NS1"/>
    <property type="match status" value="1"/>
</dbReference>
<dbReference type="Pfam" id="PF01538">
    <property type="entry name" value="HCV_NS2"/>
    <property type="match status" value="1"/>
</dbReference>
<dbReference type="Pfam" id="PF01006">
    <property type="entry name" value="HCV_NS4a"/>
    <property type="match status" value="1"/>
</dbReference>
<dbReference type="Pfam" id="PF01001">
    <property type="entry name" value="HCV_NS4b"/>
    <property type="match status" value="1"/>
</dbReference>
<dbReference type="Pfam" id="PF01506">
    <property type="entry name" value="HCV_NS5a"/>
    <property type="match status" value="1"/>
</dbReference>
<dbReference type="Pfam" id="PF08300">
    <property type="entry name" value="HCV_NS5a_1a"/>
    <property type="match status" value="1"/>
</dbReference>
<dbReference type="Pfam" id="PF08301">
    <property type="entry name" value="HCV_NS5a_1b"/>
    <property type="match status" value="1"/>
</dbReference>
<dbReference type="Pfam" id="PF12941">
    <property type="entry name" value="HCV_NS5a_C"/>
    <property type="match status" value="1"/>
</dbReference>
<dbReference type="Pfam" id="PF22027">
    <property type="entry name" value="NS3_helicase_C"/>
    <property type="match status" value="1"/>
</dbReference>
<dbReference type="Pfam" id="PF02907">
    <property type="entry name" value="Peptidase_S29"/>
    <property type="match status" value="1"/>
</dbReference>
<dbReference type="Pfam" id="PF00998">
    <property type="entry name" value="RdRP_3"/>
    <property type="match status" value="1"/>
</dbReference>
<dbReference type="SMART" id="SM00487">
    <property type="entry name" value="DEXDc"/>
    <property type="match status" value="1"/>
</dbReference>
<dbReference type="SMART" id="SM00490">
    <property type="entry name" value="HELICc"/>
    <property type="match status" value="1"/>
</dbReference>
<dbReference type="SUPFAM" id="SSF56672">
    <property type="entry name" value="DNA/RNA polymerases"/>
    <property type="match status" value="1"/>
</dbReference>
<dbReference type="SUPFAM" id="SSF52540">
    <property type="entry name" value="P-loop containing nucleoside triphosphate hydrolases"/>
    <property type="match status" value="2"/>
</dbReference>
<dbReference type="SUPFAM" id="SSF50494">
    <property type="entry name" value="Trypsin-like serine proteases"/>
    <property type="match status" value="1"/>
</dbReference>
<dbReference type="PROSITE" id="PS51693">
    <property type="entry name" value="HCV_NS2_PRO"/>
    <property type="match status" value="1"/>
</dbReference>
<dbReference type="PROSITE" id="PS51192">
    <property type="entry name" value="HELICASE_ATP_BIND_1"/>
    <property type="match status" value="1"/>
</dbReference>
<dbReference type="PROSITE" id="PS51194">
    <property type="entry name" value="HELICASE_CTER"/>
    <property type="match status" value="1"/>
</dbReference>
<dbReference type="PROSITE" id="PS51822">
    <property type="entry name" value="HV_PV_NS3_PRO"/>
    <property type="match status" value="1"/>
</dbReference>
<dbReference type="PROSITE" id="PS50507">
    <property type="entry name" value="RDRP_SSRNA_POS"/>
    <property type="match status" value="1"/>
</dbReference>
<comment type="function">
    <molecule>Mature core protein</molecule>
    <text evidence="2 4 5 10 23 43 65 66 83 126">Packages viral RNA to form a viral nucleocapsid, and promotes virion budding (Probable). Participates in the viral particle production as a result of its interaction with the non-structural protein 5A (By similarity). Binds RNA and may function as a RNA chaperone to induce the RNA structural rearrangements taking place during virus replication (PubMed:18033802). Modulates viral translation initiation by interacting with viral IRES and 40S ribosomal subunit (By similarity). Affects various cell signaling pathways, host immunity and lipid metabolism (Probable). Prevents the establishment of cellular antiviral state by blocking the interferon-alpha/beta (IFN-alpha/beta) and IFN-gamma signaling pathways and by blocking the formation of phosphorylated STAT1 and promoting ubiquitin-mediated proteasome-dependent degradation of STAT1 (By similarity) (PubMed:23799612). Activates STAT3 leading to cellular transformation (By similarity). Regulates the activity of cellular genes, including c-myc and c-fos (By similarity). May repress the promoter of p53, and sequester CREB3 and SP110 isoform 3/Sp110b in the cytoplasm (By similarity). Represses cell cycle negative regulating factor CDKN1A, thereby interrupting an important check point of normal cell cycle regulation (By similarity). Targets transcription factors involved in the regulation of inflammatory responses and in the immune response: suppresses NF-kappa-B activation, and activates AP-1 (By similarity). Binds to dendritic cells (DCs) via C1QR1, resulting in down-regulation of T-lymphocytes proliferation (PubMed:11086025, PubMed:17881511). Alters lipid metabolism by interacting with hepatocellular proteins involved in lipid accumulation and storage (PubMed:14602201). Induces up-regulation of FAS promoter activity, and thereby contributes to the increased triglyceride accumulation in hepatocytes (steatosis) (PubMed:14602201).</text>
</comment>
<comment type="function">
    <molecule>Envelope glycoprotein E1</molecule>
    <text evidence="10 34 40 41 44 56 60 69 71 80 81 85 87 88 89 101 104 105">Forms a heterodimer with envelope glycoprotein E2, which mediates virus attachment to the host cell, virion internalization through clathrin-dependent endocytosis and fusion with host membrane (PubMed:14990718, PubMed:16894197). Fusion with the host cell is most likely mediated by both E1 and E2, through conformational rearrangements of the heterodimer required for fusion rather than a classical class II fusion mechanism (PubMed:16533059, PubMed:24698129, PubMed:29505618). E1/E2 heterodimer binds host apolipoproteins such as APOB and APOE thereby forming a lipo-viro-particle (LVP) (PubMed:24838241, PubMed:25122793, PubMed:29695434). APOE associated to the LVP allows the initial virus attachment to cell surface receptors such as the heparan sulfate proteoglycans (HSPGs), syndecan-1 (SDC1), syndecan-1 (SDC2), the low-density lipoprotein receptor (LDLR) and scavenger receptor class B type I (SCARB1) (PubMed:12356718, PubMed:12913001, PubMed:12970454, PubMed:22767607, PubMed:28404852). The cholesterol transfer activity of SCARB1 allows E2 exposure and binding of E2 to SCARB1 and the tetraspanin CD81 (PubMed:12913001, PubMed:22767607). E1/E2 heterodimer binding on CD81 activates the epithelial growth factor receptor (EGFR) signaling pathway (PubMed:22855500). Diffusion of the complex E1/E2-EGFR-SCARB1-CD81 to the cell lateral membrane allows further interaction with Claudin 1 (CLDN1) and occludin (OCLN) to finally trigger HCV entry (By similarity) (PubMed:12913001, PubMed:12970454, PubMed:19182773, PubMed:20375010, PubMed:24038151).</text>
</comment>
<comment type="function">
    <molecule>Envelope glycoprotein E2</molecule>
    <text evidence="4 10 34 40 41 44 49 56 60 69 71 80 81 85 87 88 89 101 104 105 108">Forms a heterodimer with envelope glycoprotein E1, which mediates virus attachment to the host cell, virion internalization through clathrin-dependent endocytosis and fusion with host membrane (PubMed:14990718, PubMed:16894197). Fusion with the host cell is most likely mediated by both E1 and E2, through conformational rearrangements of the heterodimer required for fusion rather than a classical class II fusion mechanism (PubMed:16533059, PubMed:24698129, PubMed:29505618). The interaction between E2 and host apolipoprotein E/APOE allows the proper assembly, maturation and infectivity of the viral particles (PubMed:25122793, PubMed:29695434). This interaction is probably promoted via the up-regulation of cellular autophagy by the virus (PubMed:29695434). E1/E2 heterodimer binds host apolipoproteins such as APOB and APOE thereby forming a lipo-viro-particle (LVP) (PubMed:24838241, PubMed:25122793, PubMed:29695434). APOE associated to the LVP allows the initial virus attachment to cell surface receptors such as the heparan sulfate proteoglycans (HSPGs), syndecan-1 (SDC1), syndecan-1 (SDC2), the low-density lipoprotein receptor (LDLR) and scavenger receptor class B type I (SCARB1) (PubMed:12356718, PubMed:12913001, PubMed:12970454, PubMed:22767607, PubMed:28404852). The cholesterol transfer activity of SCARB1 allows E2 exposure and binding of E2 to SCARB1 and the tetraspanin CD81 (PubMed:12913001, PubMed:22767607). E1/E2 heterodimer binding on CD81 activates the epithelial growth factor receptor (EGFR) signaling pathway (By similarity) (PubMed:12913001, PubMed:12970454, PubMed:19182773, PubMed:20375010, PubMed:22855500, PubMed:24038151). Diffusion of the complex E1/E2-EGFR-SCARB1-CD81 to the cell lateral membrane allows further interaction with Claudin 1 (CLDN1) and occludin (OCLN) to finally trigger HCV entry (By similarity) (PubMed:12913001, PubMed:12970454, PubMed:19182773, PubMed:20375010, PubMed:24038151). Inhibits host EIF2AK2/PKR activation, preventing the establishment of an antiviral state (By similarity). Viral ligand for CD209/DC-SIGN and CLEC4M/DC-SIGNR, which are respectively found on DCs, and on liver sinusoidal endothelial cells and macrophage-like cells of lymph node sinuses (PubMed:15371595). These interactions allow the capture of circulating HCV particles by these cells and subsequent facilitated transmission to permissive cells such as hepatocytes and lymphocyte subpopulations (PubMed:15371595). The interaction between E2 and host amino acid transporter complex formed by SLC3A2 and SLC7A5/LAT1 may facilitate viral entry into host cell (PubMed:30341327).</text>
</comment>
<comment type="function">
    <molecule>Viroporin p7</molecule>
    <text evidence="10 39 73 98 103 124 126 131 139">Ion channel protein that acts as a viroporin and plays an essential role in the assembly, envelopment and secretion of viral particles (PubMed:12719519, PubMed:20824094, PubMed:27320856). Participates in virus envelopment by coordinating the encounter between NS5A and NS2-based assembly sites loaded with E1/E2 heterodimer, which subsequently leads to nucleocapsid envelopment (By similarity). Creates a pore in acidic organelles and releases Ca(2+) and H(+) in the cytoplasm of infected cells, leading to a productive viral infection (Probable) (PubMed:20824094). High levels of cytoplasmic Ca(2+) may trigger membrane trafficking and transport of viral ER-associated proteins to viroplasms, sites of viral genome replication (Probable). The release of Ca(2+) may also activate the inflamasome leading to chronic inflammation (Probable) (PubMed:31801866). Targets also host mitochondria and induces mitochondrial depolarization (PubMed:29039530). In addition of its role as a viroporin, acts as a lipid raft adhesion factor (PubMed:27320856).</text>
</comment>
<comment type="function">
    <molecule>Protease NS2</molecule>
    <text evidence="3 75 117">Cysteine protease required for the proteolytic auto-cleavage between the non-structural proteins NS2 and NS3 (PubMed:8248148). The N-terminus of NS3 is required for the function of NS2 protease (active region NS2-3) (By similarity). Promotes the initiation of viral particle assembly by mediating the interaction between structural and non-structural proteins (PubMed:21147927).</text>
</comment>
<comment type="function">
    <molecule>Serine protease/helicase NS3</molecule>
    <text evidence="11 50 52 53 77 92 108 115 116 118 132">Displays three enzymatic activities: serine protease with a chymotrypsin-like fold, NTPase and RNA helicase (PubMed:25551442). NS3 serine protease, in association with NS4A, is responsible for the cleavages of NS3-NS4A, NS4A-NS4B, NS4B-NS5A and NS5A-NS5B (PubMed:8035505, PubMed:8189513, PubMed:8386278). The NS3/NS4A complex prevents phosphorylation of host IRF3, thus preventing the establishment of dsRNA induced antiviral state (By similarity). The NS3/NS4A complex induces host amino acid transporter component SLC3A2, thus contributing to HCV propagation (PubMed:30341327). NS3 RNA helicase binds to RNA and unwinds both dsDNA and dsRNA in the 3' to 5' direction, and likely resolves RNA complicated stable secondary structures in the template strand (Probable). Binds a single ATP and catalyzes the unzipping of a single base pair of dsRNA (PubMed:21940894). Inhibits host antiviral proteins TBK1 and IRF3 thereby preventing the establishment of an antiviral state (By similarity). Cleaves host MAVS/CARDIF thereby preventing the establishment of an antiviral state (PubMed:16177806, PubMed:16301520). Cleaves host TICAM1/TRIF, thereby disrupting TLR3 signaling and preventing the establishment of an antiviral state (PubMed:15710891).</text>
</comment>
<comment type="function">
    <molecule>Non-structural protein 4A</molecule>
    <text evidence="11 76 108 116">Peptide cofactor which forms a non-covalent complex with the N-terminal of NS3 serine protease (PubMed:21507982, PubMed:8189513). The NS3/NS4A complex prevents phosphorylation of host IRF3, thus preventing the establishment of dsRNA induced antiviral state (By similarity). The NS3/NS4A complex induces host amino acid transporter component SLC3A2, thus contributing to HCV propagation (PubMed:30341327).</text>
</comment>
<comment type="function">
    <molecule>Non-structural protein 4B</molecule>
    <text evidence="32 58 82 106">Induces a specific membrane alteration that serves as a scaffold for the virus replication complex (PubMed:12021330). This membrane alteration gives rise to the so-called ER-derived membranous web that contains the replication complex (PubMed:12021330). NS4B self-interaction contributes to its function in membranous web formation (PubMed:16731940). Promotes host TRIF protein degradation in a CASP8-dependent manner thereby inhibiting host TLR3-mediated interferon signaling (PubMed:29782532). Disrupts the interaction between STING and TBK1 contributing to the inhibition of interferon signaling (PubMed:23542348).</text>
</comment>
<comment type="function">
    <molecule>Non-structural protein 5A</molecule>
    <text evidence="2 4 10 11 55 61 74 93 99 102 111 137">Phosphorylated protein that is indispensable for viral replication and assembly (PubMed:27578425). Both hypo- and hyperphosphorylated states are required for the viral life cycle (By similarity). The hyperphosphorylated form of NS5A is an inhibitor of viral replication (By similarity). Involved in RNA-binding and especially in binding to the viral genome (Probable). Zinc is essential for RNA-binding (PubMed:20926572). Participates in the viral particle production as a result of its interaction with the viral mature core protein (By similarity). Its interaction with host VAPB may target the viral replication complex to vesicles (By similarity). Down-regulates viral IRES translation initiation (By similarity). Mediates interferon resistance, presumably by interacting with and inhibiting host EIF2AK2/PKR (PubMed:16951545). Prevents BIN1-induced apoptosis (PubMed:16530520). Acts as a transcriptional activator of some host genes important for viral replication when localized in the nucleus (By similarity). Via the interaction with host PACSIN2, modulates lipid droplet formation in order to promote virion assembly (PubMed:31801866). Modulates TNFRSF21/DR6 signaling pathway for viral propagation (PubMed:28743875).</text>
</comment>
<comment type="function">
    <molecule>RNA-directed RNA polymerase</molecule>
    <text evidence="72 112">RNA-dependent RNA polymerase that performs primer-template recognition and RNA synthesis during viral replication (PubMed:20729191). Initiates RNA transcription/replication at a flavin adenine dinucleotide (FAD), resulting in a 5'- FAD cap on viral RNAs. In this way, recognition of viral 5' RNA by host pattern recognition receptors can be bypassed (PubMed:37407817), thereby evading activation of antiviral pathways.</text>
</comment>
<comment type="catalytic activity">
    <molecule>Serine protease/helicase NS3</molecule>
    <reaction evidence="115 118">
        <text>Hydrolysis of four peptide bonds in the viral precursor polyprotein, commonly with Asp or Glu in the P6 position, Cys or Thr in P1 and Ser or Ala in P1'.</text>
        <dbReference type="EC" id="3.4.21.98"/>
    </reaction>
</comment>
<comment type="catalytic activity">
    <molecule>Serine protease/helicase NS3</molecule>
    <reaction evidence="47 54 92">
        <text>a ribonucleoside 5'-triphosphate + H2O = a ribonucleoside 5'-diphosphate + phosphate + H(+)</text>
        <dbReference type="Rhea" id="RHEA:23680"/>
        <dbReference type="ChEBI" id="CHEBI:15377"/>
        <dbReference type="ChEBI" id="CHEBI:15378"/>
        <dbReference type="ChEBI" id="CHEBI:43474"/>
        <dbReference type="ChEBI" id="CHEBI:57930"/>
        <dbReference type="ChEBI" id="CHEBI:61557"/>
        <dbReference type="EC" id="3.6.1.15"/>
    </reaction>
</comment>
<comment type="catalytic activity">
    <molecule>Serine protease/helicase NS3</molecule>
    <reaction evidence="47 54 92">
        <text>ATP + H2O = ADP + phosphate + H(+)</text>
        <dbReference type="Rhea" id="RHEA:13065"/>
        <dbReference type="ChEBI" id="CHEBI:15377"/>
        <dbReference type="ChEBI" id="CHEBI:15378"/>
        <dbReference type="ChEBI" id="CHEBI:30616"/>
        <dbReference type="ChEBI" id="CHEBI:43474"/>
        <dbReference type="ChEBI" id="CHEBI:456216"/>
        <dbReference type="EC" id="3.6.4.13"/>
    </reaction>
</comment>
<comment type="catalytic activity">
    <molecule>RNA-directed RNA polymerase</molecule>
    <reaction evidence="13 72">
        <text>RNA(n) + a ribonucleoside 5'-triphosphate = RNA(n+1) + diphosphate</text>
        <dbReference type="Rhea" id="RHEA:21248"/>
        <dbReference type="Rhea" id="RHEA-COMP:14527"/>
        <dbReference type="Rhea" id="RHEA-COMP:17342"/>
        <dbReference type="ChEBI" id="CHEBI:33019"/>
        <dbReference type="ChEBI" id="CHEBI:61557"/>
        <dbReference type="ChEBI" id="CHEBI:140395"/>
        <dbReference type="EC" id="2.7.7.48"/>
    </reaction>
</comment>
<comment type="cofactor">
    <molecule>Protease NS2</molecule>
    <cofactor evidence="3">
        <name>Zn(2+)</name>
        <dbReference type="ChEBI" id="CHEBI:29105"/>
    </cofactor>
    <text evidence="3">Activity of protease NS2 is dependent on zinc ions and completely inhibited by EDTA. This is probably due to the fact that NS2 protease activity needs NS3 N-terminus that binds a zinc atom (active region NS2-3).</text>
</comment>
<comment type="cofactor">
    <molecule>Serine protease/helicase NS3</molecule>
    <cofactor evidence="3">
        <name>Zn(2+)</name>
        <dbReference type="ChEBI" id="CHEBI:29105"/>
    </cofactor>
    <cofactor evidence="11">
        <name>Mg(2+)</name>
        <dbReference type="ChEBI" id="CHEBI:18420"/>
    </cofactor>
    <text evidence="3 11">Binds 1 zinc ion, which has a structural role (By similarity). The magnesium ion is essential for the helicase activity (By similarity).</text>
</comment>
<comment type="cofactor">
    <molecule>RNA-directed RNA polymerase</molecule>
    <cofactor evidence="3">
        <name>Mg(2+)</name>
        <dbReference type="ChEBI" id="CHEBI:18420"/>
    </cofactor>
    <text evidence="3">Binds 2 magnesium ion that constitute a dinuclear catalytic metal center.</text>
</comment>
<comment type="activity regulation">
    <molecule>Viroporin p7</molecule>
    <text evidence="2 35 39">Inhibited by the antiviral drug hexamethylene amiloride (By similarity). Inhibited by amantadine (PubMed:12560074). Inhibition by amantadine appears to be genotype-dependent (By similarity). Also inhibited by long-alkyl-chain iminosugar derivatives (PubMed:12719519).</text>
</comment>
<comment type="activity regulation">
    <molecule>RNA-directed RNA polymerase</molecule>
    <text evidence="48">Activity is up-regulated by PRK2/PKN2-mediated phosphorylation.</text>
</comment>
<comment type="subunit">
    <molecule>Mature core protein</molecule>
    <text evidence="2 5 7 8 10 23 70 83 90 119">Homooligomer (PubMed:25351725). Interacts with E1 (via C-terminus) (PubMed:8764026). Interacts with the non-structural protein 5A (By similarity). Interacts (via N-terminus) with host STAT1 (via SH2 domain); this interaction results in decreased STAT1 phosphorylation and ubiquitin-mediated proteasome-dependent STAT1 degradation, leading to decreased IFN-stimulated gene transcription (PubMed:23799612). Interacts with host STAT3; this interaction constitutively activates STAT3 (By similarity). Associates with host LTBR receptor (By similarity). Interacts with host TNFRSF1A receptor and possibly induces apoptosis (By similarity). Interacts with host HNRPK (By similarity). Interacts with host YWHAE (By similarity). Interacts with host UBE3A/E6AP (By similarity). Interacts with host DDX3X (By similarity). Interacts with host APOA2 (By similarity). Interacts with host RXRA protein (By similarity). Interacts with host SP110 isoform 3/Sp110b; this interaction sequesters the transcriptional corepressor SP110 away from the nucleus (By similarity). Interacts with host CREB3 nuclear transcription protein; this interaction triggers cell transformation (By similarity). Interacts with host ACY3 (PubMed:19486448). Interacts with host C1QR1 (PubMed:11086025). Interacts with host RBM24; this interaction, which enhances the interaction of the mature core protein with 5'-UTR, may inhibit viral translation and favor replication (By similarity). Interacts (via N-terminus) with host EIF2AK2/PKR (via N-terminus); this interaction induces the autophosphorylation of EIF2AK2 (By similarity). Part of the viral assembly initiation complex composed of NS2, E1, E2, NS3, NS4A, NS5A and the mature core protein (By similarity).</text>
</comment>
<comment type="subunit">
    <molecule>Envelope glycoprotein E1</molecule>
    <text evidence="10 24 44 75 85 107 109 119">Forms a heterodimer with envelope glycoprotein E2 (PubMed:11145889, PubMed:14990718, PubMed:24038151). Interacts with mature core protein (PubMed:8764026). Interacts with protease NS2 (PubMed:21147927). The heterodimer E1/E2 interacts with host CLDN1; this interaction plays a role in viral entry into host cell (PubMed:24038151). Interacts with host SPSB2 (via C-terminus) (PubMed:31344133). Part of the viral assembly initiation complex composed of NS2, E1, E2, NS3, NS4A, NS5A and the mature core protein (By similarity). Interacts with host NEURL3; this interaction prevents E1 binding to glycoprotein E2 (PubMed:30111563).</text>
</comment>
<comment type="subunit">
    <molecule>Envelope glycoprotein E2</molecule>
    <text evidence="10 11 19 24 34 40 41 44 49 75 85 108">Forms a heterodimer with envelope glycoprotein E1 (PubMed:11145889, PubMed:14990718, PubMed:24038151). Interacts with host CD81 and SCARB1 receptors; these interactions play a role in viral entry into host cell (PubMed:12356718, PubMed:12913001, PubMed:12970454). Interacts with host EIF2AK2/PKR; this interaction inhibits EIF2AK2 and probably allows the virus to evade the innate immune response (PubMed:10390359). Interacts with host CD209/DC-SIGN and CLEC4M/DC-SIGNR (PubMed:15371595). Interact with host SPCS1; this interaction is essential for viral particle assembly (By similarity). Interacts with protease NS2 (PubMed:21147927). The heterodimer E1/E2 interacts with host CLDN1; this interaction plays a role in viral entry into host cell (PubMed:24038151). Part of the viral assembly initiation complex composed of NS2, E1, E2, NS3, NS4A, NS5A and the mature core protein (By similarity). Interacts with host SLC3A2/4F2hc; the interaction may facilitate viral entry into host cell (PubMed:30341327). Interacts with human PLSCR1 (By similarity).</text>
</comment>
<comment type="subunit">
    <molecule>Viroporin p7</molecule>
    <text evidence="1 10 35">Homohexamer (PubMed:12560074). Homoheptamer (By similarity). Interacts with protease NS2 (By similarity).</text>
</comment>
<comment type="subunit">
    <molecule>Protease NS2</molecule>
    <text evidence="10 36 38 59 75">Homodimer (PubMed:16862121). Interacts with host SPCS1; this interaction is essential for viral particle assembly (By similarity). Interacts with envelope glycoprotein E1 (PubMed:21147927). Interacts with envelope glycoprotein E2 (PubMed:21147927). Interacts with viroporin p7 (By similarity). Interacts with serine protease/helicase NS3 (PubMed:21147927). Part of the replication complex composed of NS2, NS3, NS4A, NS4B, NS5A and the RNA-directed RNA polymerase embedded in an ER-derived membranous web (PubMed:12692242, PubMed:12692249). Part of the viral assembly initiation complex composed of NS2, E1, E2, NS3, NS4A, NS5A and the mature core protein (By similarity).</text>
</comment>
<comment type="subunit">
    <molecule>Serine protease/helicase NS3</molecule>
    <text evidence="3 10 11 32 36 38 52 53 75 114 120">Interacts with protease NS2 (PubMed:21147927). Interacts with non-structural protein 4A; this interaction stabilizes the folding of NS3 serine protease (By similarity). NS3-NS4A interaction is essential for NS3 activation and allows membrane anchorage of the latter (PubMed:7769699, PubMed:8861917). NS3/NS4A complex also prevents phosphorylation of host IRF3, thus preventing the establishment of dsRNA induced antiviral state (By similarity). Interacts with host MAVS; this interaction leads to the cleavage and inhibition of host MAVS (PubMed:16177806, PubMed:16301520). Interacts with host TICAM1; this interaction leads to the cleavage and inhibition of host TICAM1 (PubMed:16177806, PubMed:16301520). Interacts with host TANK-binding kinase/TBK1; this interaction results in the inhibition of the association between TBK1 and IRF3, which leads to the inhibition of IRF3 activation (By similarity). Interacts with host RBM24 (By similarity). Part of the replication complex composed of NS2, NS3, NS4A, NS4B, NS5A and the RNA-directed RNA polymerase embedded in an ER-derived membranous web (PubMed:12021330, PubMed:12692242, PubMed:12692249). Part of the viral assembly initiation complex composed of NS2, E1, E2, NS3, NS4A, NS5A and the mature core protein (By similarity).</text>
</comment>
<comment type="subunit">
    <molecule>Non-structural protein 4A</molecule>
    <text evidence="2 10 32 36 38 114 120">Interacts with NS3 serine protease; this interaction stabilizes the folding of NS3 serine protease (PubMed:7769699, PubMed:8861917). NS3-NS4A interaction is essential for NS3 activation and allows membrane anchorage of the latter (PubMed:7769699, PubMed:8861917). Interacts with non-structural protein 5A (via N-terminus) (By similarity). Part of the replication complex composed of NS2, NS3, NS4A, NS4B, NS5A and the RNA-directed RNA polymerase embedded in an ER-derived membranous web (PubMed:12021330, PubMed:12692242, PubMed:12692249). Part of the viral assembly initiation complex composed of NS2, E1, E2, NS3, NS4A, NS5A and the mature core protein (By similarity).</text>
</comment>
<comment type="subunit">
    <molecule>Non-structural protein 4B</molecule>
    <text evidence="10 32 36 38 82 84 94">Homomultimer (PubMed:23868571). Interacts with non-structural protein NS5A (PubMed:23868571). Interacts with host PLA2G4C; this interaction likely initiates the recruitment of replication complexes to lipid droplets (By similarity). Interacts with host STING; this interaction disrupts the interaction between STING and TBK1 thereby suppressing the interferon signaling (PubMed:23542348). Interacts with host METTL22; this interaction may promote the recruitment of NS4B in the proximity of lipid droplet (PubMed:26185986). Part of the replication complex composed of NS2, NS3, NS4A, NS4B, NS5A and the RNA-directed RNA polymerase embedded in an ER-derived membranous web (PubMed:12021330, PubMed:12692242, PubMed:12692249).</text>
</comment>
<comment type="subunit">
    <molecule>Non-structural protein 5A</molecule>
    <text evidence="2 3 4 10 21 30 32 36 38 55 74 79 84 96 97 99 102 109 111 128 134 135 141">Monomer (PubMed:20926572). Homodimer; dimerization is required for RNA-binding (PubMed:20926572). Interacts with the mature core protein (By similarity). Interacts (via N-terminus) with non-structural protein 4A (By similarity). Interacts with non-structural protein 4B (PubMed:23868571). Interacts (via region D2) with RNA-directed RNA polymerase (Probable). Part of the viral assembly initiation complex composed of NS2, E1, E2, NS3, NS4A, NS5A and the mature core protein (By similarity). Part of the replication complex composed of NS2, NS3, NS4A, NS4B, NS5A and the RNA-directed RNA polymerase embedded in an ER-derived membranous web (PubMed:12021330, PubMed:12692242, PubMed:12692249). Interacts with host GRB2 (By similarity). Interacts with host BIN1 (PubMed:16530520). Interacts with host PIK3R1 (By similarity). Interacts with host SRCAP (PubMed:10702287). Interacts with host FKBP8 (By similarity). Interacts (via C-terminus) with host VAPB (via MSP domain) (Probable) (PubMed:22720086). Interacts with host EIF2AK2/PKR; this interaction leads to disruption of EIF2AK2 dimerization by NS5A and probably allows the virus to evade the innate immune response (Probable). Interacts (via N-terminus) with host PACSIN2 (via N-terminus); this interaction attenuates protein kinase C alpha-mediated phosphorylation of PACSIN2 by disrupting the interaction between PACSIN2 and PRKCA (PubMed:31801866). Interacts (via N-terminus) with host SRC kinase (via SH2 domain) (By similarity). Interacts with most Src-family kinases (By similarity). Interacts with host IFI27 and SKP2; promotes the ubiquitin-mediated proteasomal degradation of NS5A (PubMed:27194766). Interacts with host GPS2 (By similarity). Interacts with host TNFRSF21; this interaction allows the modulation by the virus of JNK, p38 MAPK, STAT3, and Akt signaling pathways in a DR6-dependent manner (PubMed:28743875). Interacts (via N-terminus) with host CIDEB (via N-terminus); this interaction seems to regulate the association of HCV particles with APOE (PubMed:27282740). Interacts with host CHKA/Choline Kinase-alpha; CHKA bridges host PI4KA and NS5A and potentiates NS5A-stimulated PI4KA activity, which then facilitates the targeting of the ternary complex to the ER for viral replication (By similarity). Interacts with host SPSB2 (via C-terminus); this interaction targets NS5A for ubiquitination and degradation (PubMed:31344133). Interacts with host RAB18; this interaction may promote the association of NS5A and other replicase components with lipid droplets (By similarity). Interacts (via region D2) with host PPIA/CYPA; the interaction stimulates RNA-binding ability of NS5A and is dependent on the peptidyl-prolyl cis-trans isomerase activity of PPIA/CYPA (Probable). Interacts with host TRIM14; this interaction induces the degradation of NS5A (PubMed:27578425).</text>
</comment>
<comment type="subunit">
    <molecule>RNA-directed RNA polymerase</molecule>
    <text evidence="2 30 32 36 38 48 64">Homooligomer. Interacts with non-structural protein 5A (PubMed:11801599). Interacts with host VAPB (By similarity). Interacts with host PRK2/PKN2 (PubMed:15364941). Interacts with host HNRNPA1 and SEPT6; these interactions facilitate the viral replication (PubMed:17229681). Part of the replication complex composed of NS2, NS3, NS4A, NS4B, NS5A and the RNA-directed RNA polymerase embedded in an ER-derived membranous web (PubMed:12021330, PubMed:12692242, PubMed:12692249).</text>
</comment>
<comment type="interaction">
    <interactant intactId="EBI-706378">
        <id>P27958</id>
    </interactant>
    <interactant intactId="EBI-515315">
        <id>P06241</id>
        <label>FYN</label>
    </interactant>
    <organismsDiffer>true</organismsDiffer>
    <experiments>4</experiments>
</comment>
<comment type="interaction">
    <interactant intactId="EBI-706378">
        <id>P27958</id>
    </interactant>
    <interactant intactId="EBI-401755">
        <id>P62993</id>
        <label>GRB2</label>
    </interactant>
    <organismsDiffer>true</organismsDiffer>
    <experiments>3</experiments>
</comment>
<comment type="interaction">
    <interactant intactId="EBI-706378">
        <id>P27958</id>
    </interactant>
    <interactant intactId="EBI-346340">
        <id>P08631</id>
        <label>HCK</label>
    </interactant>
    <organismsDiffer>true</organismsDiffer>
    <experiments>5</experiments>
</comment>
<comment type="interaction">
    <interactant intactId="EBI-706378">
        <id>P27958</id>
    </interactant>
    <interactant intactId="EBI-1401">
        <id>P06240</id>
        <label>Lck</label>
    </interactant>
    <organismsDiffer>true</organismsDiffer>
    <experiments>3</experiments>
</comment>
<comment type="interaction">
    <interactant intactId="EBI-706378">
        <id>P27958</id>
    </interactant>
    <interactant intactId="EBI-79452">
        <id>P07948</id>
        <label>LYN</label>
    </interactant>
    <organismsDiffer>true</organismsDiffer>
    <experiments>4</experiments>
</comment>
<comment type="interaction">
    <interactant intactId="EBI-6377335">
        <id>PRO_0000037566</id>
    </interactant>
    <interactant intactId="EBI-6377335">
        <id>PRO_0000037566</id>
        <label>-</label>
        <dbReference type="UniProtKB" id="P27958"/>
    </interactant>
    <organismsDiffer>false</organismsDiffer>
    <experiments>4</experiments>
</comment>
<comment type="interaction">
    <interactant intactId="EBI-6377335">
        <id>PRO_0000037566</id>
    </interactant>
    <interactant intactId="EBI-297683">
        <id>Q96CW1</id>
        <label>AP2M1</label>
    </interactant>
    <organismsDiffer>true</organismsDiffer>
    <experiments>4</experiments>
</comment>
<comment type="interaction">
    <interactant intactId="EBI-6377335">
        <id>PRO_0000037566</id>
    </interactant>
    <interactant intactId="EBI-347528">
        <id>Q07021</id>
        <label>C1QBP</label>
    </interactant>
    <organismsDiffer>true</organismsDiffer>
    <experiments>4</experiments>
</comment>
<comment type="interaction">
    <interactant intactId="EBI-6377335">
        <id>PRO_0000037566</id>
    </interactant>
    <interactant intactId="EBI-375077">
        <id>P38936</id>
        <label>CDKN1A</label>
    </interactant>
    <organismsDiffer>true</organismsDiffer>
    <experiments>3</experiments>
</comment>
<comment type="interaction">
    <interactant intactId="EBI-6377335">
        <id>PRO_0000037566</id>
    </interactant>
    <interactant intactId="EBI-353779">
        <id>O00571</id>
        <label>DDX3X</label>
    </interactant>
    <organismsDiffer>true</organismsDiffer>
    <experiments>11</experiments>
</comment>
<comment type="interaction">
    <interactant intactId="EBI-6377335">
        <id>PRO_0000037566</id>
    </interactant>
    <interactant intactId="EBI-1034445">
        <id>P02675</id>
        <label>FGB</label>
    </interactant>
    <organismsDiffer>true</organismsDiffer>
    <experiments>4</experiments>
</comment>
<comment type="interaction">
    <interactant intactId="EBI-6377335">
        <id>PRO_0000037566</id>
    </interactant>
    <interactant intactId="EBI-1384657">
        <id>Q16644</id>
        <label>MAPKAPK3</label>
    </interactant>
    <organismsDiffer>true</organismsDiffer>
    <experiments>5</experiments>
</comment>
<comment type="interaction">
    <interactant intactId="EBI-6377335">
        <id>PRO_0000037566</id>
    </interactant>
    <interactant intactId="EBI-295890">
        <id>P29590</id>
        <label>PML</label>
    </interactant>
    <organismsDiffer>true</organismsDiffer>
    <experiments>6</experiments>
</comment>
<comment type="interaction">
    <interactant intactId="EBI-6377335">
        <id>PRO_0000037566</id>
    </interactant>
    <interactant intactId="EBI-1057697">
        <id>P42224</id>
        <label>STAT1</label>
    </interactant>
    <organismsDiffer>true</organismsDiffer>
    <experiments>2</experiments>
</comment>
<comment type="interaction">
    <interactant intactId="EBI-6377335">
        <id>PRO_0000037566</id>
    </interactant>
    <interactant intactId="EBI-77642">
        <id>Q13625</id>
        <label>TP53BP2</label>
    </interactant>
    <organismsDiffer>true</organismsDiffer>
    <experiments>5</experiments>
</comment>
<comment type="interaction">
    <interactant intactId="EBI-6377335">
        <id>PRO_0000037566</id>
    </interactant>
    <interactant intactId="EBI-353844">
        <id>P08670</id>
        <label>VIM</label>
    </interactant>
    <organismsDiffer>true</organismsDiffer>
    <experiments>4</experiments>
</comment>
<comment type="interaction">
    <interactant intactId="EBI-6377335">
        <id>PRO_0000037566</id>
    </interactant>
    <interactant intactId="EBI-6875462">
        <id>PRO_0000037615</id>
        <dbReference type="UniProtKB" id="P26660"/>
    </interactant>
    <organismsDiffer>true</organismsDiffer>
    <experiments>4</experiments>
</comment>
<comment type="interaction">
    <interactant intactId="EBI-6904259">
        <id>PRO_0000037569</id>
    </interactant>
    <interactant intactId="EBI-6904269">
        <id>PRO_0000037570</id>
        <label>-</label>
        <dbReference type="UniProtKB" id="P27958"/>
    </interactant>
    <organismsDiffer>false</organismsDiffer>
    <experiments>10</experiments>
</comment>
<comment type="interaction">
    <interactant intactId="EBI-6904259">
        <id>PRO_0000037569</id>
    </interactant>
    <interactant intactId="EBI-6919131">
        <id>PRO_0000037572</id>
        <label>-</label>
        <dbReference type="UniProtKB" id="P27958"/>
    </interactant>
    <organismsDiffer>false</organismsDiffer>
    <experiments>2</experiments>
</comment>
<comment type="interaction">
    <interactant intactId="EBI-6904259">
        <id>PRO_0000037569</id>
    </interactant>
    <interactant intactId="EBI-371776">
        <id>P07823</id>
        <label>HSPA5</label>
    </interactant>
    <organismsDiffer>true</organismsDiffer>
    <experiments>3</experiments>
</comment>
<comment type="interaction">
    <interactant intactId="EBI-6904259">
        <id>PRO_0000037569</id>
    </interactant>
    <interactant intactId="EBI-1058602">
        <id>P02788</id>
        <label>LTF</label>
    </interactant>
    <organismsDiffer>true</organismsDiffer>
    <experiments>3</experiments>
</comment>
<comment type="interaction">
    <interactant intactId="EBI-6904269">
        <id>PRO_0000037570</id>
    </interactant>
    <interactant intactId="EBI-1222467">
        <id>P02649</id>
        <label>APOE</label>
    </interactant>
    <organismsDiffer>true</organismsDiffer>
    <experiments>4</experiments>
</comment>
<comment type="interaction">
    <interactant intactId="EBI-6904269">
        <id>PRO_0000037570</id>
    </interactant>
    <interactant intactId="EBI-712921">
        <id>P60033</id>
        <label>CD81</label>
    </interactant>
    <organismsDiffer>true</organismsDiffer>
    <experiments>11</experiments>
</comment>
<comment type="interaction">
    <interactant intactId="EBI-6904269">
        <id>PRO_0000037570</id>
    </interactant>
    <interactant intactId="EBI-9209498">
        <id>Q920L9</id>
        <label>CNX</label>
    </interactant>
    <organismsDiffer>true</organismsDiffer>
    <experiments>2</experiments>
</comment>
<comment type="interaction">
    <interactant intactId="EBI-6904269">
        <id>PRO_0000037570</id>
    </interactant>
    <interactant intactId="EBI-640775">
        <id>P19525</id>
        <label>EIF2AK2</label>
    </interactant>
    <organismsDiffer>true</organismsDiffer>
    <experiments>4</experiments>
</comment>
<comment type="interaction">
    <interactant intactId="EBI-6904269">
        <id>PRO_0000037570</id>
    </interactant>
    <interactant intactId="EBI-1226344">
        <id>Q9Z2B5</id>
        <label>Eif2ak3</label>
    </interactant>
    <organismsDiffer>true</organismsDiffer>
    <experiments>5</experiments>
</comment>
<comment type="interaction">
    <interactant intactId="EBI-6904269">
        <id>PRO_0000037570</id>
    </interactant>
    <interactant intactId="EBI-371776">
        <id>P07823</id>
        <label>HSPA5</label>
    </interactant>
    <organismsDiffer>true</organismsDiffer>
    <experiments>3</experiments>
</comment>
<comment type="interaction">
    <interactant intactId="EBI-6904269">
        <id>PRO_0000037570</id>
    </interactant>
    <interactant intactId="EBI-1058602">
        <id>P02788</id>
        <label>LTF</label>
    </interactant>
    <organismsDiffer>true</organismsDiffer>
    <experiments>9</experiments>
</comment>
<comment type="interaction">
    <interactant intactId="EBI-6904269">
        <id>PRO_0000037570</id>
    </interactant>
    <interactant intactId="EBI-8076910">
        <id>P24627</id>
        <label>LTF</label>
    </interactant>
    <organismsDiffer>true</organismsDiffer>
    <experiments>3</experiments>
</comment>
<comment type="interaction">
    <interactant intactId="EBI-6904269">
        <id>PRO_0000037570</id>
    </interactant>
    <interactant intactId="EBI-5325353">
        <id>P11226</id>
        <label>MBL2</label>
    </interactant>
    <organismsDiffer>true</organismsDiffer>
    <experiments>6</experiments>
</comment>
<comment type="interaction">
    <interactant intactId="EBI-6904269">
        <id>PRO_0000037570</id>
    </interactant>
    <interactant intactId="EBI-78657">
        <id>Q8WTV0</id>
        <label>SCARB1</label>
    </interactant>
    <organismsDiffer>true</organismsDiffer>
    <experiments>2</experiments>
</comment>
<comment type="interaction">
    <interactant intactId="EBI-6927261">
        <id>PRO_0000037571</id>
    </interactant>
    <interactant intactId="EBI-6919131">
        <id>PRO_0000037572</id>
        <label>-</label>
        <dbReference type="UniProtKB" id="P27958"/>
    </interactant>
    <organismsDiffer>false</organismsDiffer>
    <experiments>3</experiments>
</comment>
<comment type="interaction">
    <interactant intactId="EBI-6919131">
        <id>PRO_0000037572</id>
    </interactant>
    <interactant intactId="EBI-6919131">
        <id>PRO_0000037572</id>
        <label>-</label>
        <dbReference type="UniProtKB" id="P27958"/>
    </interactant>
    <organismsDiffer>false</organismsDiffer>
    <experiments>2</experiments>
</comment>
<comment type="interaction">
    <interactant intactId="EBI-6919131">
        <id>PRO_0000037572</id>
    </interactant>
    <interactant intactId="EBI-8763498">
        <id>PRO_0000037575</id>
        <label>-</label>
        <dbReference type="UniProtKB" id="P27958"/>
    </interactant>
    <organismsDiffer>false</organismsDiffer>
    <experiments>5</experiments>
</comment>
<comment type="interaction">
    <interactant intactId="EBI-6919131">
        <id>PRO_0000037572</id>
    </interactant>
    <interactant intactId="EBI-8753518">
        <id>PRO_0000037576</id>
        <label>-</label>
        <dbReference type="UniProtKB" id="P27958"/>
    </interactant>
    <organismsDiffer>false</organismsDiffer>
    <experiments>4</experiments>
</comment>
<comment type="interaction">
    <interactant intactId="EBI-6919131">
        <id>PRO_0000037572</id>
    </interactant>
    <interactant intactId="EBI-7062247">
        <id>Q9UHD4</id>
        <label>CIDEB</label>
    </interactant>
    <organismsDiffer>true</organismsDiffer>
    <experiments>6</experiments>
</comment>
<comment type="interaction">
    <interactant intactId="EBI-6919131">
        <id>PRO_0000037572</id>
    </interactant>
    <interactant intactId="EBI-307369">
        <id>Q14164</id>
        <label>IKBKE</label>
    </interactant>
    <organismsDiffer>true</organismsDiffer>
    <experiments>2</experiments>
</comment>
<comment type="interaction">
    <interactant intactId="EBI-6919131">
        <id>PRO_0000037572</id>
    </interactant>
    <interactant intactId="EBI-356402">
        <id>Q9UHD2</id>
        <label>TBK1</label>
    </interactant>
    <organismsDiffer>true</organismsDiffer>
    <experiments>2</experiments>
</comment>
<comment type="interaction">
    <interactant intactId="EBI-3649474">
        <id>PRO_0000037573</id>
    </interactant>
    <interactant intactId="EBI-6919131">
        <id>PRO_0000037572</id>
        <label>-</label>
        <dbReference type="UniProtKB" id="P27958"/>
    </interactant>
    <organismsDiffer>false</organismsDiffer>
    <experiments>11</experiments>
</comment>
<comment type="interaction">
    <interactant intactId="EBI-3649474">
        <id>PRO_0000037573</id>
    </interactant>
    <interactant intactId="EBI-3649474">
        <id>PRO_0000037573</id>
        <label>-</label>
        <dbReference type="UniProtKB" id="P27958"/>
    </interactant>
    <organismsDiffer>false</organismsDiffer>
    <experiments>3</experiments>
</comment>
<comment type="interaction">
    <interactant intactId="EBI-3649474">
        <id>PRO_0000037573</id>
    </interactant>
    <interactant intactId="EBI-6904374">
        <id>PRO_0000037574</id>
        <label>-</label>
        <dbReference type="UniProtKB" id="P27958"/>
    </interactant>
    <organismsDiffer>false</organismsDiffer>
    <experiments>17</experiments>
</comment>
<comment type="interaction">
    <interactant intactId="EBI-3649474">
        <id>PRO_0000037573</id>
    </interactant>
    <interactant intactId="EBI-8763498">
        <id>PRO_0000037575</id>
        <label>-</label>
        <dbReference type="UniProtKB" id="P27958"/>
    </interactant>
    <organismsDiffer>false</organismsDiffer>
    <experiments>4</experiments>
</comment>
<comment type="interaction">
    <interactant intactId="EBI-3649474">
        <id>PRO_0000037573</id>
    </interactant>
    <interactant intactId="EBI-6904388">
        <id>PRO_0000037577</id>
        <label>-</label>
        <dbReference type="UniProtKB" id="P27958"/>
    </interactant>
    <organismsDiffer>false</organismsDiffer>
    <experiments>10</experiments>
</comment>
<comment type="interaction">
    <interactant intactId="EBI-3649474">
        <id>PRO_0000037573</id>
    </interactant>
    <interactant intactId="EBI-9352449">
        <id>Q8IUD2-3</id>
        <label>ERC1</label>
    </interactant>
    <organismsDiffer>true</organismsDiffer>
    <experiments>8</experiments>
</comment>
<comment type="interaction">
    <interactant intactId="EBI-3649474">
        <id>PRO_0000037573</id>
    </interactant>
    <interactant intactId="EBI-9352501">
        <id>Q8IUD2-4</id>
        <label>ERC1</label>
    </interactant>
    <organismsDiffer>true</organismsDiffer>
    <experiments>3</experiments>
</comment>
<comment type="interaction">
    <interactant intactId="EBI-3649474">
        <id>PRO_0000037573</id>
    </interactant>
    <interactant intactId="EBI-372294">
        <id>P28062</id>
        <label>PSMB8</label>
    </interactant>
    <organismsDiffer>true</organismsDiffer>
    <experiments>4</experiments>
</comment>
<comment type="interaction">
    <interactant intactId="EBI-3649474">
        <id>PRO_0000037573</id>
    </interactant>
    <interactant intactId="EBI-372177">
        <id>P62314</id>
        <label>SNRPD1</label>
    </interactant>
    <organismsDiffer>true</organismsDiffer>
    <experiments>7</experiments>
</comment>
<comment type="interaction">
    <interactant intactId="EBI-3649474">
        <id>PRO_0000037573</id>
    </interactant>
    <interactant intactId="EBI-356402">
        <id>Q9UHD2</id>
        <label>TBK1</label>
    </interactant>
    <organismsDiffer>true</organismsDiffer>
    <experiments>4</experiments>
</comment>
<comment type="interaction">
    <interactant intactId="EBI-6904374">
        <id>PRO_0000037574</id>
    </interactant>
    <interactant intactId="EBI-6919131">
        <id>PRO_0000037572</id>
        <label>-</label>
        <dbReference type="UniProtKB" id="P27958"/>
    </interactant>
    <organismsDiffer>false</organismsDiffer>
    <experiments>6</experiments>
</comment>
<comment type="interaction">
    <interactant intactId="EBI-6904374">
        <id>PRO_0000037574</id>
    </interactant>
    <interactant intactId="EBI-8763498">
        <id>PRO_0000037575</id>
        <label>-</label>
        <dbReference type="UniProtKB" id="P27958"/>
    </interactant>
    <organismsDiffer>false</organismsDiffer>
    <experiments>4</experiments>
</comment>
<comment type="interaction">
    <interactant intactId="EBI-6904374">
        <id>PRO_0000037574</id>
    </interactant>
    <interactant intactId="EBI-6904388">
        <id>PRO_0000037577</id>
        <label>-</label>
        <dbReference type="UniProtKB" id="P27958"/>
    </interactant>
    <organismsDiffer>false</organismsDiffer>
    <experiments>8</experiments>
</comment>
<comment type="interaction">
    <interactant intactId="EBI-8763498">
        <id>PRO_0000037575</id>
    </interactant>
    <interactant intactId="EBI-8763498">
        <id>PRO_0000037575</id>
        <label>-</label>
        <dbReference type="UniProtKB" id="P27958"/>
    </interactant>
    <organismsDiffer>false</organismsDiffer>
    <experiments>2</experiments>
</comment>
<comment type="interaction">
    <interactant intactId="EBI-8763498">
        <id>PRO_0000037575</id>
    </interactant>
    <interactant intactId="EBI-6904388">
        <id>PRO_0000037577</id>
        <label>-</label>
        <dbReference type="UniProtKB" id="P27958"/>
    </interactant>
    <organismsDiffer>false</organismsDiffer>
    <experiments>5</experiments>
</comment>
<comment type="interaction">
    <interactant intactId="EBI-8763498">
        <id>PRO_0000037575</id>
    </interactant>
    <interactant intactId="EBI-2841031">
        <id>Q99941</id>
        <label>ATF6B</label>
    </interactant>
    <organismsDiffer>true</organismsDiffer>
    <experiments>5</experiments>
</comment>
<comment type="interaction">
    <interactant intactId="EBI-8763498">
        <id>PRO_0000037575</id>
    </interactant>
    <interactant intactId="EBI-2800345">
        <id>Q86WV6</id>
        <label>STING1</label>
    </interactant>
    <organismsDiffer>true</organismsDiffer>
    <experiments>5</experiments>
</comment>
<comment type="interaction">
    <interactant intactId="EBI-8753518">
        <id>PRO_0000037576</id>
    </interactant>
    <interactant intactId="EBI-3649474">
        <id>PRO_0000037573</id>
        <label>-</label>
        <dbReference type="UniProtKB" id="P27958"/>
    </interactant>
    <organismsDiffer>false</organismsDiffer>
    <experiments>8</experiments>
</comment>
<comment type="interaction">
    <interactant intactId="EBI-8753518">
        <id>PRO_0000037576</id>
    </interactant>
    <interactant intactId="EBI-6904374">
        <id>PRO_0000037574</id>
        <label>-</label>
        <dbReference type="UniProtKB" id="P27958"/>
    </interactant>
    <organismsDiffer>false</organismsDiffer>
    <experiments>6</experiments>
</comment>
<comment type="interaction">
    <interactant intactId="EBI-8753518">
        <id>PRO_0000037576</id>
    </interactant>
    <interactant intactId="EBI-8763498">
        <id>PRO_0000037575</id>
        <label>-</label>
        <dbReference type="UniProtKB" id="P27958"/>
    </interactant>
    <organismsDiffer>false</organismsDiffer>
    <experiments>7</experiments>
</comment>
<comment type="interaction">
    <interactant intactId="EBI-8753518">
        <id>PRO_0000037576</id>
    </interactant>
    <interactant intactId="EBI-8753518">
        <id>PRO_0000037576</id>
        <label>-</label>
        <dbReference type="UniProtKB" id="P27958"/>
    </interactant>
    <organismsDiffer>false</organismsDiffer>
    <experiments>2</experiments>
</comment>
<comment type="interaction">
    <interactant intactId="EBI-8753518">
        <id>PRO_0000037576</id>
    </interactant>
    <interactant intactId="EBI-710003">
        <id>Q96P48</id>
        <label>ARAP1</label>
    </interactant>
    <organismsDiffer>true</organismsDiffer>
    <experiments>3</experiments>
</comment>
<comment type="interaction">
    <interactant intactId="EBI-8753518">
        <id>PRO_0000037576</id>
    </interactant>
    <interactant intactId="EBI-719094">
        <id>O00499</id>
        <label>BIN1</label>
    </interactant>
    <organismsDiffer>true</organismsDiffer>
    <experiments>11</experiments>
</comment>
<comment type="interaction">
    <interactant intactId="EBI-8753518">
        <id>PRO_0000037576</id>
    </interactant>
    <interactant intactId="EBI-8870146">
        <id>O00499-7</id>
        <label>BIN1</label>
    </interactant>
    <organismsDiffer>true</organismsDiffer>
    <experiments>2</experiments>
</comment>
<comment type="interaction">
    <interactant intactId="EBI-8753518">
        <id>PRO_0000037576</id>
    </interactant>
    <interactant intactId="EBI-721289">
        <id>Q9H6F5</id>
        <label>CCDC86</label>
    </interactant>
    <organismsDiffer>true</organismsDiffer>
    <experiments>3</experiments>
</comment>
<comment type="interaction">
    <interactant intactId="EBI-8753518">
        <id>PRO_0000037576</id>
    </interactant>
    <interactant intactId="EBI-725950">
        <id>P29762</id>
        <label>CRABP1</label>
    </interactant>
    <organismsDiffer>true</organismsDiffer>
    <experiments>3</experiments>
</comment>
<comment type="interaction">
    <interactant intactId="EBI-8753518">
        <id>PRO_0000037576</id>
    </interactant>
    <interactant intactId="EBI-640775">
        <id>P19525</id>
        <label>EIF2AK2</label>
    </interactant>
    <organismsDiffer>true</organismsDiffer>
    <experiments>5</experiments>
</comment>
<comment type="interaction">
    <interactant intactId="EBI-8753518">
        <id>PRO_0000037576</id>
    </interactant>
    <interactant intactId="EBI-356424">
        <id>O00410</id>
        <label>IPO5</label>
    </interactant>
    <organismsDiffer>true</organismsDiffer>
    <experiments>5</experiments>
</comment>
<comment type="interaction">
    <interactant intactId="EBI-8753518">
        <id>PRO_0000037576</id>
    </interactant>
    <interactant intactId="EBI-723050">
        <id>P42356</id>
        <label>PI4KA</label>
    </interactant>
    <organismsDiffer>true</organismsDiffer>
    <experiments>7</experiments>
</comment>
<comment type="interaction">
    <interactant intactId="EBI-8753518">
        <id>PRO_0000037576</id>
    </interactant>
    <interactant intactId="EBI-1057697">
        <id>P42224</id>
        <label>STAT1</label>
    </interactant>
    <organismsDiffer>true</organismsDiffer>
    <experiments>4</experiments>
</comment>
<comment type="interaction">
    <interactant intactId="EBI-8753518">
        <id>PRO_0000037576</id>
    </interactant>
    <interactant intactId="EBI-9254454">
        <id>Q96BZ9</id>
        <label>TBC1D20</label>
    </interactant>
    <organismsDiffer>true</organismsDiffer>
    <experiments>11</experiments>
</comment>
<comment type="interaction">
    <interactant intactId="EBI-8753518">
        <id>PRO_0000037576</id>
    </interactant>
    <interactant intactId="EBI-520016">
        <id>P39429</id>
        <label>Traf2</label>
    </interactant>
    <organismsDiffer>true</organismsDiffer>
    <experiments>5</experiments>
</comment>
<comment type="interaction">
    <interactant intactId="EBI-8753518">
        <id>PRO_0000037576</id>
    </interactant>
    <interactant intactId="EBI-1059156">
        <id>Q9P0L0</id>
        <label>VAPA</label>
    </interactant>
    <organismsDiffer>true</organismsDiffer>
    <experiments>7</experiments>
</comment>
<comment type="interaction">
    <interactant intactId="EBI-8753518">
        <id>PRO_0000037576</id>
    </interactant>
    <interactant intactId="EBI-6858513">
        <id>PRO_0000045592</id>
        <dbReference type="UniProtKB" id="Q99IB8"/>
    </interactant>
    <organismsDiffer>true</organismsDiffer>
    <experiments>3</experiments>
</comment>
<comment type="interaction">
    <interactant intactId="EBI-6904388">
        <id>PRO_0000037577</id>
    </interactant>
    <interactant intactId="EBI-6919131">
        <id>PRO_0000037572</id>
        <label>-</label>
        <dbReference type="UniProtKB" id="P27958"/>
    </interactant>
    <organismsDiffer>false</organismsDiffer>
    <experiments>5</experiments>
</comment>
<comment type="interaction">
    <interactant intactId="EBI-6904388">
        <id>PRO_0000037577</id>
    </interactant>
    <interactant intactId="EBI-8753518">
        <id>PRO_0000037576</id>
        <label>-</label>
        <dbReference type="UniProtKB" id="P27958"/>
    </interactant>
    <organismsDiffer>false</organismsDiffer>
    <experiments>6</experiments>
</comment>
<comment type="interaction">
    <interactant intactId="EBI-6904388">
        <id>PRO_0000037577</id>
    </interactant>
    <interactant intactId="EBI-351710">
        <id>P12814</id>
        <label>ACTN1</label>
    </interactant>
    <organismsDiffer>true</organismsDiffer>
    <experiments>7</experiments>
</comment>
<comment type="interaction">
    <interactant intactId="EBI-6904388">
        <id>PRO_0000037577</id>
    </interactant>
    <interactant intactId="EBI-495465">
        <id>Q13315</id>
        <label>ATM</label>
    </interactant>
    <organismsDiffer>true</organismsDiffer>
    <experiments>3</experiments>
</comment>
<comment type="interaction">
    <interactant intactId="EBI-6904388">
        <id>PRO_0000037577</id>
    </interactant>
    <interactant intactId="EBI-1180783">
        <id>O96017</id>
        <label>CHEK2</label>
    </interactant>
    <organismsDiffer>true</organismsDiffer>
    <experiments>3</experiments>
</comment>
<comment type="interaction">
    <interactant intactId="EBI-6904388">
        <id>PRO_0000037577</id>
    </interactant>
    <interactant intactId="EBI-351962">
        <id>P17844</id>
        <label>DDX5</label>
    </interactant>
    <organismsDiffer>true</organismsDiffer>
    <experiments>12</experiments>
</comment>
<comment type="interaction">
    <interactant intactId="EBI-6904388">
        <id>PRO_0000037577</id>
    </interactant>
    <interactant intactId="EBI-73473">
        <id>Q14240</id>
        <label>EIF4A2</label>
    </interactant>
    <organismsDiffer>true</organismsDiffer>
    <experiments>4</experiments>
</comment>
<comment type="interaction">
    <interactant intactId="EBI-6904388">
        <id>PRO_0000037577</id>
    </interactant>
    <interactant intactId="EBI-352662">
        <id>P09651</id>
        <label>HNRNPA1</label>
    </interactant>
    <organismsDiffer>true</organismsDiffer>
    <experiments>4</experiments>
</comment>
<comment type="interaction">
    <interactant intactId="EBI-6904388">
        <id>PRO_0000037577</id>
    </interactant>
    <interactant intactId="EBI-346967">
        <id>P19338</id>
        <label>NCL</label>
    </interactant>
    <organismsDiffer>true</organismsDiffer>
    <experiments>4</experiments>
</comment>
<comment type="interaction">
    <interactant intactId="EBI-6904388">
        <id>PRO_0000037577</id>
    </interactant>
    <interactant intactId="EBI-745901">
        <id>Q14141</id>
        <label>SEPTIN6</label>
    </interactant>
    <organismsDiffer>true</organismsDiffer>
    <experiments>4</experiments>
</comment>
<comment type="interaction">
    <interactant intactId="EBI-6904388">
        <id>PRO_0000037577</id>
    </interactant>
    <interactant intactId="EBI-1059156">
        <id>Q9P0L0</id>
        <label>VAPA</label>
    </interactant>
    <organismsDiffer>true</organismsDiffer>
    <experiments>5</experiments>
</comment>
<comment type="subcellular location">
    <molecule>Core protein precursor</molecule>
    <subcellularLocation>
        <location evidence="4">Host endoplasmic reticulum membrane</location>
        <topology evidence="12">Single-pass membrane protein</topology>
    </subcellularLocation>
    <subcellularLocation>
        <location evidence="4">Host mitochondrion membrane</location>
        <topology evidence="12">Single-pass type I membrane protein</topology>
    </subcellularLocation>
    <text>The C-terminal transmembrane domain of the core protein precursor contains an ER signal leading the nascent polyprotein to the ER membrane.</text>
</comment>
<comment type="subcellular location">
    <molecule>Mature core protein</molecule>
    <subcellularLocation>
        <location evidence="10">Virion</location>
    </subcellularLocation>
    <subcellularLocation>
        <location evidence="122">Host cytoplasm</location>
    </subcellularLocation>
    <subcellularLocation>
        <location evidence="2">Host nucleus</location>
    </subcellularLocation>
    <subcellularLocation>
        <location evidence="28 122">Host lipid droplet</location>
    </subcellularLocation>
    <text evidence="122">Only a minor proportion of core protein is present in the nucleus (PubMed:9037030). Probably present on the surface of lipid droplets (PubMed:9037030).</text>
</comment>
<comment type="subcellular location">
    <molecule>Envelope glycoprotein E1</molecule>
    <subcellularLocation>
        <location evidence="126">Virion membrane</location>
        <topology evidence="126">Single-pass type I membrane protein</topology>
    </subcellularLocation>
    <subcellularLocation>
        <location>Host endoplasmic reticulum membrane</location>
        <topology evidence="22">Single-pass type I membrane protein</topology>
    </subcellularLocation>
    <text evidence="22 33">The C-terminal transmembrane domain acts as a signal sequence and forms a hairpin structure before cleavage by host signal peptidase (PubMed:10729138). After cleavage, the membrane sequence is retained at the C-terminus of the protein, serving as ER membrane anchor (PubMed:10729138). A reorientation of the second hydrophobic stretch occurs after cleavage producing a single reoriented transmembrane domain (PubMed:12065403). These events explain the final topology of the protein (PubMed:12065403).</text>
</comment>
<comment type="subcellular location">
    <molecule>Envelope glycoprotein E2</molecule>
    <subcellularLocation>
        <location evidence="126">Virion membrane</location>
        <topology evidence="126">Single-pass type I membrane protein</topology>
    </subcellularLocation>
    <subcellularLocation>
        <location>Host endoplasmic reticulum membrane</location>
        <topology evidence="22">Single-pass type I membrane protein</topology>
    </subcellularLocation>
    <subcellularLocation>
        <location evidence="11">Host lipid droplet</location>
    </subcellularLocation>
    <text evidence="22 33">The C-terminal transmembrane domain acts as a signal sequence and forms a hairpin structure before cleavage by host signal peptidase (PubMed:10729138). After cleavage, the membrane sequence is retained at the C-terminus of the protein, serving as ER membrane anchor (PubMed:10729138). A reorientation of the second hydrophobic stretch occurs after cleavage producing a single reoriented transmembrane domain (PubMed:12065403). These events explain the final topology of the protein (PubMed:12065403).</text>
</comment>
<comment type="subcellular location">
    <molecule>Viroporin p7</molecule>
    <subcellularLocation>
        <location evidence="31">Host endoplasmic reticulum membrane</location>
        <topology evidence="31">Multi-pass membrane protein</topology>
    </subcellularLocation>
    <subcellularLocation>
        <location evidence="103">Host mitochondrion</location>
    </subcellularLocation>
    <subcellularLocation>
        <location evidence="31 98">Host cell membrane</location>
    </subcellularLocation>
    <text evidence="31">The C-terminus of p7 membrane domain acts as a signal sequence (PubMed:11907211). After cleavage by host signal peptidase, the membrane sequence is retained at the C-terminus of the protein, serving as ER membrane anchor (PubMed:11907211). ER retention of p7 is leaky and a small fraction reaches the plasma membrane (PubMed:11907211).</text>
</comment>
<comment type="subcellular location">
    <molecule>Protease NS2</molecule>
    <subcellularLocation>
        <location evidence="4">Host endoplasmic reticulum membrane</location>
        <topology evidence="4">Multi-pass membrane protein</topology>
    </subcellularLocation>
    <subcellularLocation>
        <location evidence="10">Host lipid droplet</location>
    </subcellularLocation>
    <text evidence="10">Probably present on the surface of lipid droplets.</text>
</comment>
<comment type="subcellular location">
    <molecule>Serine protease/helicase NS3</molecule>
    <subcellularLocation>
        <location evidence="126">Host endoplasmic reticulum membrane</location>
        <topology evidence="126">Peripheral membrane protein</topology>
    </subcellularLocation>
    <text evidence="126">NS3 is associated to the ER membrane through its binding to NS4A.</text>
</comment>
<comment type="subcellular location">
    <molecule>Non-structural protein 4A</molecule>
    <subcellularLocation>
        <location evidence="126">Host endoplasmic reticulum membrane</location>
        <topology evidence="126">Single-pass type I membrane protein</topology>
    </subcellularLocation>
    <text evidence="126">Host membrane insertion occurs after processing by the NS3 protease.</text>
</comment>
<comment type="subcellular location">
    <molecule>Non-structural protein 4B</molecule>
    <subcellularLocation>
        <location evidence="37 62">Host endoplasmic reticulum membrane</location>
        <topology evidence="37">Multi-pass membrane protein</topology>
    </subcellularLocation>
    <text evidence="62 94">A reorientation of the N-terminus into the ER lumen occurs post-translationally (PubMed:17030859). Localized in the vicinity of host lipid droplet (PubMed:26185986).</text>
</comment>
<comment type="subcellular location">
    <molecule>Non-structural protein 5A</molecule>
    <subcellularLocation>
        <location evidence="29 46">Host endoplasmic reticulum membrane</location>
        <topology evidence="46 63">Peripheral membrane protein</topology>
    </subcellularLocation>
    <subcellularLocation>
        <location evidence="46">Host cytoplasm</location>
        <location evidence="46">Host perinuclear region</location>
    </subcellularLocation>
    <subcellularLocation>
        <location evidence="2">Host mitochondrion</location>
    </subcellularLocation>
    <subcellularLocation>
        <location evidence="121">Host cytoplasm</location>
    </subcellularLocation>
    <subcellularLocation>
        <location evidence="21">Host nucleus</location>
    </subcellularLocation>
    <subcellularLocation>
        <location evidence="2">Host lipid droplet</location>
    </subcellularLocation>
    <text evidence="2 29">Host membrane insertion occurs after processing by the NS3 protease (PubMed:11744739). Localizes at the surface of lipid droplets (By similarity).</text>
</comment>
<comment type="subcellular location">
    <molecule>RNA-directed RNA polymerase</molecule>
    <subcellularLocation>
        <location evidence="64">Host cytoplasm</location>
    </subcellularLocation>
    <subcellularLocation>
        <location>Host endoplasmic reticulum membrane</location>
        <topology evidence="27">Single-pass type IV membrane protein</topology>
    </subcellularLocation>
    <text evidence="27">Host membrane insertion occurs after processing by the NS3 protease.</text>
</comment>
<comment type="alternative products">
    <event type="ribosomal frameshifting"/>
    <isoform>
        <id>P27958-1</id>
        <name>Genome polyprotein</name>
        <sequence type="displayed"/>
    </isoform>
    <isoform>
        <id>P0C045-1</id>
        <name>F protein</name>
        <name>Frameshifted protein</name>
        <sequence type="external"/>
    </isoform>
    <text evidence="26">The exact location of the ribosomal frameshift is unknown. The F protein seems to be generated by a -2 ribosomal frameshift located in the vicinity of codon 11 of the core protein coding sequence. However, some F proteins may also be generated by +1 ribosomal frameshift. Since the core gene encodes alternative reading frame proteins (ARFPs), many functions depicted for the core protein might belong to the ARFPs.</text>
</comment>
<comment type="induction">
    <molecule>Mature core protein</molecule>
    <text evidence="90">Expressed late in the infection cycle.</text>
</comment>
<comment type="domain">
    <molecule>Mature core protein</molecule>
    <text evidence="66 68 91">The disordered N-terminus allows the interaction with several host proteins (PubMed:18992225, PubMed:25424537). This disordered region also seems to play an important role in mediating RNA chaperoning (PubMed:18033802).</text>
</comment>
<comment type="domain">
    <molecule>Envelope glycoprotein E1</molecule>
    <text evidence="24">The transmembrane regions of envelope E1 and E2 glycoproteins are involved in heterodimer formation, ER localization, and assembly of these proteins.</text>
</comment>
<comment type="domain">
    <molecule>Envelope glycoprotein E2</molecule>
    <text evidence="3 24 25 80">The transmembrane regions of envelope E1 and E2 glycoproteins are involved in heterodimer formation, ER localization, and assembly of these proteins (PubMed:11145889). Envelope E2 glycoprotein contain two highly variable regions called hypervariable region 1 and 2 (HVR1 and HVR2) (PubMed:11356980). E2 also contain two segments involved in CD81-binding (By similarity). HVR1 is implicated in the SCARB1-mediated cell entry and probably acts as a regulator of the association of particles with lipids (PubMed:22767607).</text>
</comment>
<comment type="domain">
    <molecule>Protease NS2</molecule>
    <text evidence="3">The N-terminus of NS3 is required for the catalytic activity of protease NS2 (By similarity). The minimal catalytic region includes the C-terminus of NS2 and the N-terminus NS3 protease domain (active region NS2-3) (By similarity).</text>
</comment>
<comment type="domain">
    <molecule>Serine protease/helicase NS3</molecule>
    <text evidence="2 3 57">The N-terminal one-third contains the protease activity (By similarity). This region contains a zinc atom that does not belong to the active site, but may play a structural rather than a catalytic role (By similarity). This region is essential for the activity of protease NS2, maybe by contributing to the folding of the latter (By similarity). The NTPase/helicase activity is located in the twothirds C-terminus of NS3, this domain contains the NTPase and RNA-binding regions (PubMed:1658800).</text>
</comment>
<comment type="domain">
    <molecule>Non-structural protein 4B</molecule>
    <text evidence="10">Contains a glycine zipper region that critically contributes to the biogenesis of functional ER-derived replication organelles.</text>
</comment>
<comment type="domain">
    <molecule>Non-structural protein 5A</molecule>
    <text evidence="46 121">The N-terminus acts as a membrane anchor (PubMed:15247283). The C-terminus contains a nuclear localization signal (PubMed:8982089).</text>
</comment>
<comment type="domain">
    <molecule>Non-structural protein 5A</molecule>
    <text evidence="2">Contains a variable region called interferon sensitivity determining region (ISDR) and a variable region called variable region 3 (V3) (By similarity). ISDR and V3 may be involved in sensitivity and/or resistance to IFN-alpha therapy (By similarity).</text>
</comment>
<comment type="domain">
    <molecule>Non-structural protein 5A</molecule>
    <text evidence="55">The SH3-binding domain is involved in the interaction with host BIN1, GRB2 and Src-family kinases.</text>
</comment>
<comment type="domain">
    <molecule>Non-structural protein 5A</molecule>
    <text evidence="74">The structured region D1 is involved in RNA-binding.</text>
</comment>
<comment type="domain">
    <molecule>Non-structural protein 5A</molecule>
    <text evidence="79 95 96 100">The first disordered region named D2 interacts with several viral and host proteins (PubMed:27194766, PubMed:27676132). The largely disordered region D3 mediates the interaction with several host proteins and is involved in virion assembly (PubMed:22720086, PubMed:26727512, PubMed:27194766).</text>
</comment>
<comment type="PTM">
    <molecule>Genome polyprotein</molecule>
    <text evidence="3 4 10 45 51 113 115 116 118">Specific enzymatic cleavages in vivo yield mature proteins (PubMed:15722527, PubMed:8035505, PubMed:8189513, PubMed:8386278). The structural proteins, core, E1, E2 and p7 are produced by proteolytic processing by host signal peptidases (PubMed:15247249). The core protein precursor is synthesized as a 23 kDa, which is retained in the ER membrane through the hydrophobic signal peptide (By similarity). Cleavage by the signal peptidase releases the 21 kDa mature core protein (By similarity). The cleavage of the core protein precursor occurs between aminoacids 176 and 188 but the exact cleavage site is not known (By similarity). Some degraded forms of the core protein appear as well during the course of infection (By similarity). The other proteins (p7, NS2, NS3, NS4A, NS4B, NS5A and NS5B) are cleaved by the viral proteases (PubMed:15247249, PubMed:7679746, PubMed:8035505, PubMed:8189513, PubMed:8386278). Autoprocessing between NS2 and NS3 is mediated by the NS2 cysteine protease catalytic domain and regulated by the NS3 N-terminal domain (By similarity).</text>
</comment>
<comment type="PTM">
    <molecule>Mature core protein</molecule>
    <text evidence="6">Phosphorylated by host PKC and PKA.</text>
</comment>
<comment type="PTM">
    <molecule>Mature core protein</molecule>
    <text evidence="7">Ubiquitinated; mediated by UBE3A and leading to core protein subsequent proteasomal degradation.</text>
</comment>
<comment type="PTM">
    <molecule>Envelope glycoprotein E1</molecule>
    <text evidence="44">Highly N-glycosylated.</text>
</comment>
<comment type="PTM">
    <molecule>Envelope glycoprotein E2</molecule>
    <text evidence="44 67">Highly N-glycosylated.</text>
</comment>
<comment type="PTM">
    <molecule>Protease NS2</molecule>
    <text evidence="110">Palmitoylation is required for NS2/3 autoprocessing and E2 recruitment to membranes.</text>
</comment>
<comment type="PTM">
    <molecule>Non-structural protein 4B</molecule>
    <text evidence="58">Palmitoylated. This modification may play a role in its polymerization or in protein-protein interactions.</text>
</comment>
<comment type="PTM">
    <molecule>Non-structural protein 5A</molecule>
    <text evidence="2">Cleaved by host caspases which are probably activated by the viral infection.</text>
</comment>
<comment type="PTM">
    <molecule>Non-structural protein 5A</molecule>
    <text evidence="93 96">Ubiquitinated (PubMed:25683609, PubMed:27194766). Ubiquitination, most probably at Lys-2350, mediated by host IFI27 and SKP2 leads to proteasomal degradation, restricting viral infection (PubMed:27194766). Ubiquitination by host TRIM22 leads to interruption of viral replication (PubMed:25683609).</text>
</comment>
<comment type="PTM">
    <molecule>Non-structural protein 5A</molecule>
    <text evidence="2 3 10">Phosphorylated on serines in a basal form termed p56 (By similarity). p58 is a hyperphosphorylated form of p56 (By similarity). p56 and p58 coexist in the cell in roughly equivalent amounts (By similarity). Hyperphosphorylation is dependent on the presence of NS4A (By similarity). Host CSNK1A1/CKI-alpha, PI4KA or RPS6KB1 kinases may be responsible for NS5A phosphorylation (By similarity). Phosphorylated NS5A is involved in viral replication (By similarity).</text>
</comment>
<comment type="PTM">
    <molecule>Non-structural protein 5A</molecule>
    <text evidence="10">Tyrosine phosphorylation is essential for the interaction with host SRC.</text>
</comment>
<comment type="PTM">
    <molecule>RNA-directed RNA polymerase</molecule>
    <text evidence="48">The N-terminus is phosphorylated by host PRK2/PKN2.</text>
</comment>
<comment type="miscellaneous">
    <text evidence="126">Viral particle assembly takes place at the surface of ER-derived membranes in close proximity to lipid droplets. NS2 associates with E1/E2 glycoproteins, NS3 and NS5A, which interacts with the viral RNA and core protein to promote genome encapsidation. The nucleocapsid buds at the ER membrane where E1/E2 glycoproteins are anchored and afterward associate with nascent lipid droplet to acquire APOE and APOC. Secretion of viral particles is probably regulated by viroporin p7.</text>
</comment>
<comment type="miscellaneous">
    <molecule>Non-structural protein 5A</molecule>
    <text evidence="126">Cell culture adaptation of the virus leads to mutations in NS5A, reducing its inhibitory effect on replication.</text>
</comment>
<comment type="miscellaneous">
    <molecule>Mature core protein</molecule>
    <text evidence="2">Exerts viral interference on hepatitis B virus when HCV and HBV coinfect the same cell, by suppressing HBV gene expression, RNA encapsidation and budding.</text>
</comment>
<comment type="similarity">
    <text evidence="126">Belongs to the hepacivirus polyprotein family.</text>
</comment>
<comment type="caution">
    <text evidence="126">The core gene probably also codes for alternative reading frame proteins (ARFPs). Many functions depicted for the core protein might belong to the ARFPs.</text>
</comment>
<reference key="1">
    <citation type="journal article" date="1991" name="Proc. Natl. Acad. Sci. U.S.A.">
        <title>Genomic structure of the human prototype strain H of hepatitis C virus: comparison with American and Japanese isolates.</title>
        <authorList>
            <person name="Inchauspe G."/>
            <person name="Zebedee S."/>
            <person name="Lee D.H.H."/>
            <person name="Sugitani M."/>
            <person name="Nasoff M."/>
            <person name="Prince A.M."/>
        </authorList>
    </citation>
    <scope>NUCLEOTIDE SEQUENCE [GENOMIC RNA]</scope>
    <scope>DOMAIN (SERINE PROTEASE/HELICASE NS3)</scope>
</reference>
<reference key="2">
    <citation type="journal article" date="1997" name="Science">
        <title>Transmission of hepatitis C by intrahepatic inoculation with transcribed RNA.</title>
        <authorList>
            <person name="Kolykhalov A.A."/>
            <person name="Agapov E.V."/>
            <person name="Blight K.J."/>
            <person name="Mihalik K."/>
            <person name="Feinstone S.M."/>
            <person name="Rice C.M."/>
        </authorList>
    </citation>
    <scope>NUCLEOTIDE SEQUENCE [GENOMIC RNA]</scope>
    <source>
        <strain>Isolate H77</strain>
    </source>
</reference>
<reference key="3">
    <citation type="journal article" date="1997" name="Proc. Natl. Acad. Sci. U.S.A.">
        <title>Transcripts from a single full-length cDNA clone of hepatitis C virus are infectious when directly transfected into the liver of a chimpanzee.</title>
        <authorList>
            <person name="Yanagi M."/>
            <person name="Purcell R.H."/>
            <person name="Emerson S.U."/>
            <person name="Bukh J."/>
        </authorList>
    </citation>
    <scope>NUCLEOTIDE SEQUENCE [GENOMIC RNA]</scope>
    <source>
        <strain>Isolate H77</strain>
    </source>
</reference>
<reference key="4">
    <citation type="journal article" date="1999" name="J. Biol. Chem.">
        <title>Identification of the major phosphorylation site of the hepatitis C virus H strain NS5A protein as serine 2321.</title>
        <authorList>
            <person name="Reed K.E."/>
            <person name="Rice C.M."/>
        </authorList>
    </citation>
    <scope>PROTEIN SEQUENCE OF 2313-2328</scope>
    <scope>PHOSPHORYLATION AT SER-2321 (NON-STRUCTURAL PROTEIN 5A)</scope>
    <scope>MUTAGENESIS OF SER-2321</scope>
</reference>
<reference key="5">
    <citation type="journal article" date="1993" name="Proc. Natl. Acad. Sci. U.S.A.">
        <title>A second hepatitis C virus-encoded proteinase.</title>
        <authorList>
            <person name="Grakoui A."/>
            <person name="McCourt D.W."/>
            <person name="Wychowski C."/>
            <person name="Feinstone S.M."/>
            <person name="Rice C.M."/>
        </authorList>
    </citation>
    <scope>FUNCTION (PROTEASE NS2)</scope>
    <scope>MUTAGENESIS OF HIS-952; CYS-993 AND SER-1165</scope>
    <scope>ACTIVE SITE (SERINE PROTEASE/HELICASE NS3)</scope>
    <scope>ACTIVE SITE (PROTEASE NS2)</scope>
</reference>
<reference key="6">
    <citation type="journal article" date="1993" name="J. Virol.">
        <title>Characterization of the hepatitis C virus-encoded serine proteinase: determination of proteinase-dependent polyprotein cleavage sites.</title>
        <authorList>
            <person name="Grakoui A."/>
            <person name="McCourt D.W."/>
            <person name="Wychowski C."/>
            <person name="Feinstone S.M."/>
            <person name="Rice C.M."/>
        </authorList>
    </citation>
    <scope>FUNCTION (SERINE PROTEASE/HELICASE NS3)</scope>
    <scope>CATALYTIC ACTIVITY (SERINE PROTEASE/HELICASE NS3)</scope>
    <scope>PROTEOLYTIC CLEAVAGE (GENOME POLYPROTEIN)</scope>
    <scope>ACTIVE SITE (SERINE PROTEASE/HELICASE NS3)</scope>
    <scope>MUTAGENESIS OF HIS-1083 AND SER-1165</scope>
</reference>
<reference key="7">
    <citation type="journal article" date="1993" name="J. Virol.">
        <title>Expression and identification of hepatitis C virus polyprotein cleavage products.</title>
        <authorList>
            <person name="Grakoui A."/>
            <person name="Wychowski C."/>
            <person name="Lin C."/>
            <person name="Feinstone S.M."/>
            <person name="Rice C.M."/>
        </authorList>
    </citation>
    <scope>PROTEOLYTIC PROCESSING (GENOME POLYPROTEIN)</scope>
</reference>
<reference key="8">
    <citation type="journal article" date="1994" name="J. Virol.">
        <title>Both NS3 and NS4A are required for proteolytic processing of hepatitis C virus nonstructural proteins.</title>
        <authorList>
            <person name="Failla C."/>
            <person name="Tomei L."/>
            <person name="De Francesco R."/>
        </authorList>
    </citation>
    <scope>FUNCTION (NON-STRUCTURAL PROTEIN 4A)</scope>
    <scope>FUNCTION (SERINE PROTEASE/HELICASE NS3)</scope>
    <scope>PROTEOLYTIC CLEAVAGE (GENOME POLYPROTEIN)</scope>
</reference>
<reference key="9">
    <citation type="journal article" date="1994" name="J. Virol.">
        <title>Kinetic and structural analyses of hepatitis C virus polyprotein processing.</title>
        <authorList>
            <person name="Bartenschlager R."/>
            <person name="Ahlborn-Laake L."/>
            <person name="Mous J."/>
            <person name="Jacobsen H."/>
        </authorList>
    </citation>
    <scope>PROTEOLYTIC CLEAVAGE (GENOME POLYPROTEIN)</scope>
    <scope>CATALYTIC ACTIVITY (SERINE PROTEASE/HELICASE NS3)</scope>
    <scope>FUNCTION (SERINE PROTEASE/HELICASE NS3)</scope>
</reference>
<reference key="10">
    <citation type="journal article" date="1995" name="J. Virol.">
        <title>A central region in the hepatitis C virus NS4A protein allows formation of an active NS3-NS4A serine proteinase complex in vivo and in vitro.</title>
        <authorList>
            <person name="Lin C."/>
            <person name="Thomson J.A."/>
            <person name="Rice C.M."/>
        </authorList>
    </citation>
    <scope>INTERACTION WITH NON-STRUCTURAL PROTEIN 4A (SERINE PROTEASE/HELICASE NS3)</scope>
    <scope>INTERACTION WITH SERINE PROTEASE/HELICASE NS3 (NON-STRUCTURAL PROTEIN 4A)</scope>
</reference>
<reference key="11">
    <citation type="journal article" date="1996" name="J. Virol.">
        <title>Interaction between hepatitis C virus core protein and E1 envelope protein.</title>
        <authorList>
            <person name="Lo S.-Y."/>
            <person name="Selby M.J."/>
            <person name="Ou J.-H."/>
        </authorList>
    </citation>
    <scope>INTERACTION WITH ENVELOPE GLYCOPROTEIN E1 (MATURE CORE PROTEIN)</scope>
    <scope>INTERACTION WITH MATURE CORE PROTEIN (ENVELOPE GLYCOPROTEIN E1)</scope>
</reference>
<reference key="12">
    <citation type="journal article" date="1996" name="Gene">
        <title>Characterization of the nuclear localization signal and subcellular distribution of hepatitis C virus nonstructural protein NS5A.</title>
        <authorList>
            <person name="Ide Y."/>
            <person name="Zhang L."/>
            <person name="Chen M."/>
            <person name="Inchauspe G."/>
            <person name="Bahl C."/>
            <person name="Sasaguri Y."/>
            <person name="Padmanabhan R."/>
        </authorList>
    </citation>
    <scope>SUBCELLULAR LOCATION (NON-STRUCTURAL PROTEIN 5A)</scope>
    <scope>NUCLEAR LOCALIZATION SIGNAL (NON-STRUCTURAL PROTEIN 5A)</scope>
</reference>
<reference key="13">
    <citation type="journal article" date="1997" name="Proc. Natl. Acad. Sci. U.S.A.">
        <title>Hepatitis C virus core protein shows a cytoplasmic localization and associates to cellular lipid storage droplets.</title>
        <authorList>
            <person name="Barba G."/>
            <person name="Harper F."/>
            <person name="Harada T."/>
            <person name="Kohara M."/>
            <person name="Goulinet S."/>
            <person name="Matsuura Y."/>
            <person name="Eder G."/>
            <person name="Schaff Z."/>
            <person name="Chapman M.J."/>
            <person name="Miyamura T."/>
            <person name="Brechot C."/>
        </authorList>
    </citation>
    <scope>SUBCELLULAR LOCATION (MATURE CORE PROTEIN)</scope>
</reference>
<reference key="14">
    <citation type="journal article" date="1999" name="J. Gen. Virol.">
        <title>Analysis of the glycosylation sites of hepatitis C virus (HCV) glycoprotein E1 and the influence of E1 glycans on the formation of the HCV glycoprotein complex.</title>
        <authorList>
            <person name="Meunier J.C."/>
            <person name="Fournillier A."/>
            <person name="Choukhi A."/>
            <person name="Cahour A."/>
            <person name="Cocquerel L."/>
            <person name="Dubuisson J."/>
            <person name="Wychowski C."/>
        </authorList>
    </citation>
    <scope>GLYCOSYLATION AT ASN-196; ASN-209; ASN-234 AND ASN-305</scope>
</reference>
<reference key="15">
    <citation type="journal article" date="1999" name="Science">
        <title>Inhibition of the interferon-inducible protein kinase PKR by HCV E2 protein.</title>
        <authorList>
            <person name="Taylor D.R."/>
            <person name="Shi S.T."/>
            <person name="Romano P.R."/>
            <person name="Barber G.N."/>
            <person name="Lai M.M.C."/>
        </authorList>
    </citation>
    <scope>INTERACTION WITH HOST EIF2AK2 (ENVELOPE GLYCOPROTEIN E2)</scope>
</reference>
<reference key="16">
    <citation type="journal article" date="2000" name="J. Biol. Chem.">
        <title>Hepatitis C virus NS5A protein modulates transcription through a novel cellular transcription factor SRCAP.</title>
        <authorList>
            <person name="Ghosh A.K."/>
            <person name="Majumder M."/>
            <person name="Steele R."/>
            <person name="Yaciuk P."/>
            <person name="Chrivia J."/>
            <person name="Ray R."/>
            <person name="Ray R.B."/>
        </authorList>
    </citation>
    <scope>INTERACTION WITH HOST SRCAP (NON-STRUCTURAL PROTEIN 5A)</scope>
    <scope>SUBCELLULAR LOCATION (NON-STRUCTURAL PROTEIN 5A)</scope>
</reference>
<reference key="17">
    <citation type="journal article" date="2000" name="J. Virol.">
        <title>Charged residues in the transmembrane domains of hepatitis C virus glycoproteins play a major role in the processing, subcellular localization, and assembly of these envelope proteins.</title>
        <authorList>
            <person name="Cocquerel L."/>
            <person name="Wychowski C."/>
            <person name="Minner F."/>
            <person name="Penin F."/>
            <person name="Dubuisson J."/>
        </authorList>
    </citation>
    <scope>SUBCELLULAR LOCATION (ENVELOPE GLYCOPROTEIN E1)</scope>
    <scope>SUBCELLULAR LOCATION (ENVELOPE GLYCOPROTEIN E2)</scope>
</reference>
<reference key="18">
    <citation type="journal article" date="2000" name="J. Viral Hepat.">
        <title>Properties of the hepatitis C virus core protein: a structural protein that modulates cellular processes.</title>
        <authorList>
            <person name="McLauchlan J."/>
        </authorList>
    </citation>
    <scope>REVIEW</scope>
</reference>
<reference key="19">
    <citation type="journal article" date="2000" name="J. Clin. Invest.">
        <title>Interaction between complement receptor gC1qR and hepatitis C virus core protein inhibits T-lymphocyte proliferation.</title>
        <authorList>
            <person name="Kittlesen D.J."/>
            <person name="Chianese-Bullock K.A."/>
            <person name="Yao Z.Q."/>
            <person name="Braciale T.J."/>
            <person name="Hahn Y.S."/>
        </authorList>
    </citation>
    <scope>FUNCTION (MATURE CORE PROTEIN)</scope>
    <scope>INTERACTION WITH HOST C1QR1 (MATURE CORE PROTEIN)</scope>
</reference>
<reference key="20">
    <citation type="journal article" date="2001" name="J. Virol.">
        <title>Conservation of the conformation and positive charges of hepatitis C virus E2 envelope glycoprotein hypervariable region 1 points to a role in cell attachment.</title>
        <authorList>
            <person name="Penin F."/>
            <person name="Combet C."/>
            <person name="Germanidis G."/>
            <person name="Frainais P.-O."/>
            <person name="Deleage G."/>
            <person name="Pawlotsky J.-M."/>
        </authorList>
    </citation>
    <scope>DOMAIN (ENVELOPE GLYCOPROTEIN E2)</scope>
</reference>
<reference key="21">
    <citation type="journal article" date="2001" name="J. Biol. Chem.">
        <title>Determinants for membrane association of the hepatitis C virus RNA-dependent RNA polymerase.</title>
        <authorList>
            <person name="Schmidt-Mende J."/>
            <person name="Bieck E."/>
            <person name="Huegle T."/>
            <person name="Penin F."/>
            <person name="Rice C.M."/>
            <person name="Blum H.E."/>
            <person name="Moradpour D."/>
        </authorList>
    </citation>
    <scope>TOPOLOGY (RNA-DIRECTED RNA POLYMERASE)</scope>
    <scope>SUBCELLULAR LOCATION (RNA-DIRECTED RNA POLYMERASE)</scope>
</reference>
<reference key="22">
    <citation type="journal article" date="2001" name="EMBO J.">
        <title>Synthesis of a novel hepatitis C virus protein by ribosomal frameshift.</title>
        <authorList>
            <person name="Xu Z."/>
            <person name="Choi J."/>
            <person name="Yen T.S.B."/>
            <person name="Lu W."/>
            <person name="Strohecker A."/>
            <person name="Govindarajan S."/>
            <person name="Chien D."/>
            <person name="Selby M.J."/>
            <person name="Ou J.-H."/>
        </authorList>
    </citation>
    <scope>RIBOSOMAL FRAMESHIFT</scope>
</reference>
<reference key="23">
    <citation type="journal article" date="2001" name="Virology">
        <title>The transmembrane domain of the hepatitis C virus E2 glycoprotein is required for correct folding of the E1 glycoprotein and native complex formation.</title>
        <authorList>
            <person name="Patel J."/>
            <person name="Patel A.H."/>
            <person name="McLauchlan J."/>
        </authorList>
    </citation>
    <scope>DOMAIN (ENVELOPE GLYCOPROTEIN E1)</scope>
    <scope>DOMAIN (ENVELOPE GLYCOPROTEIN E2)</scope>
    <scope>INTERACTION WITH ENVELOPE GLYCOPROTEIN E2 (ENVELOPE GLYCOPROTEIN E1)</scope>
    <scope>INTERACTION WITH ENVELOPE GLYCOPROTEIN E1 (ENVELOPE GLYCOPROTEIN E2)</scope>
</reference>
<reference key="24">
    <citation type="journal article" date="2002" name="EMBO J.">
        <title>Topological changes in the transmembrane domains of hepatitis C virus envelope glycoproteins.</title>
        <authorList>
            <person name="Cocquerel L."/>
            <person name="Op de Beeck A."/>
            <person name="Lambot M."/>
            <person name="Roussel J."/>
            <person name="Delgrange D."/>
            <person name="Pillez A."/>
            <person name="Wychowski C."/>
            <person name="Penin F."/>
            <person name="Dubuisson J."/>
        </authorList>
    </citation>
    <scope>TOPOLOGY (ENVELOPE GLYCOPROTEIN E2)</scope>
    <scope>TOPOLOGY (ENVELOPE GLYCOPROTEIN E1)</scope>
    <scope>SUBCELLULAR LOCATION (ENVELOPE GLYCOPROTEIN E2)</scope>
    <scope>SUBCELLULAR LOCATION (ENVELOPE GLYCOPROTEIN E1)</scope>
</reference>
<reference key="25">
    <citation type="journal article" date="2002" name="J. Virol.">
        <title>Subcellular localization and topology of the p7 polypeptide of hepatitis C virus.</title>
        <authorList>
            <person name="Carrere-Kremer S."/>
            <person name="Montpellier-Pala C."/>
            <person name="Cocquerel L."/>
            <person name="Wychowski C."/>
            <person name="Penin F."/>
            <person name="Dubuisson J."/>
        </authorList>
    </citation>
    <scope>TOPOLOGY (VIROPORIN P7)</scope>
    <scope>SUBCELLULAR LOCATION (VIROPORIN P7)</scope>
</reference>
<reference key="26">
    <citation type="journal article" date="2002" name="J. Biol. Chem.">
        <title>The domains required to direct core proteins of hepatitis C virus and GB virus-B to lipid droplets share common features with plant oleosin proteins.</title>
        <authorList>
            <person name="Hope R.G."/>
            <person name="Murphy D.J."/>
            <person name="McLauchlan J."/>
        </authorList>
    </citation>
    <scope>SUBCELLULAR LOCATION (MATURE CORE PROTEIN)</scope>
</reference>
<reference key="27">
    <citation type="journal article" date="2002" name="J. Biol. Chem.">
        <title>An amino-terminal amphipathic alpha-helix mediates membrane association of the hepatitis C virus nonstructural protein 5A.</title>
        <authorList>
            <person name="Brass V."/>
            <person name="Bieck E."/>
            <person name="Montserret R."/>
            <person name="Woelk B."/>
            <person name="Hellings J.A."/>
            <person name="Blum H.E."/>
            <person name="Penin F."/>
            <person name="Moradpour D."/>
        </authorList>
    </citation>
    <scope>TOPOLOGY (NON-STRUCTURAL PROTEIN 5A)</scope>
    <scope>SUBCELLULAR LOCATION (NON-STRUCTURAL PROTEIN 5A)</scope>
</reference>
<reference key="28">
    <citation type="journal article" date="2002" name="J. Virol.">
        <title>Expression of hepatitis C virus proteins induces distinct membrane alterations including a candidate viral replication complex.</title>
        <authorList>
            <person name="Egger D."/>
            <person name="Woelk B."/>
            <person name="Gosert R."/>
            <person name="Bianchi L."/>
            <person name="Blum H.E."/>
            <person name="Moradpour D."/>
            <person name="Bienz K."/>
        </authorList>
    </citation>
    <scope>FUNCTION (NON-STRUCTURAL PROTEIN 4B)</scope>
    <scope>REPLICATION COMPLEX</scope>
</reference>
<reference key="29">
    <citation type="journal article" date="2002" name="J. Biol. Chem.">
        <title>Hepatitis C virus (HCV) NS5A binds RNA-dependent RNA polymerase (RdRP) NS5B and modulates RNA-dependent RNA polymerase activity.</title>
        <authorList>
            <person name="Shirota Y."/>
            <person name="Luo H."/>
            <person name="Qin W."/>
            <person name="Kaneko S."/>
            <person name="Yamashita T."/>
            <person name="Kobayashi K."/>
            <person name="Murakami S."/>
        </authorList>
    </citation>
    <scope>INTERACTION WITH RNA-DIRECTED RNA POLYMERASE (NON-STRUCTURAL PROTEIN 5A)</scope>
    <scope>INTERACTION WITH NON-STRUCTURAL PROTEIN 5A (RNA-DIRECTED RNA POLYMERASE)</scope>
</reference>
<reference key="30">
    <citation type="journal article" date="2002" name="EMBO J.">
        <title>The human scavenger receptor class B type I is a novel candidate receptor for the hepatitis C virus.</title>
        <authorList>
            <person name="Scarselli E."/>
            <person name="Ansuini H."/>
            <person name="Cerino R."/>
            <person name="Roccasecca R.M."/>
            <person name="Acali S."/>
            <person name="Filocamo G."/>
            <person name="Traboni C."/>
            <person name="Nicosia A."/>
            <person name="Cortese R."/>
            <person name="Vitelli A."/>
        </authorList>
    </citation>
    <scope>INTERACTION WITH HOST CD81 AND SCARB1 (ENVELOPE GLYCOPROTEIN E2)</scope>
    <scope>FUNCTION (ENVELOPE GLYCOPROTEIN E2)</scope>
    <scope>FUNCTION (ENVELOPE GLYCOPROTEIN E1)</scope>
</reference>
<reference key="31">
    <citation type="journal article" date="2003" name="J. Virol.">
        <title>CD81-dependent binding of hepatitis C virus E1E2 heterodimers.</title>
        <authorList>
            <person name="Cocquerel L."/>
            <person name="Kuo C.-C."/>
            <person name="Dubuisson J."/>
            <person name="Levy S."/>
        </authorList>
    </citation>
    <scope>INTERACTION WITH HOST CD81 (ENVELOPE GLYCOPROTEIN E2)</scope>
    <scope>FUNCTION (ENVELOPE GLYCOPROTEIN E1)</scope>
    <scope>FUNCTION (ENVELOPE GLYCOPROTEIN E2)</scope>
</reference>
<reference key="32">
    <citation type="journal article" date="2003" name="J. Biol. Chem.">
        <title>Cell entry of hepatitis C virus requires a set of co-receptors that include the CD81 tetraspanin and the SR-B1 scavenger receptor.</title>
        <authorList>
            <person name="Bartosch B."/>
            <person name="Vitelli A."/>
            <person name="Granier C."/>
            <person name="Goujon C."/>
            <person name="Dubuisson J."/>
            <person name="Pascale S."/>
            <person name="Scarselli E."/>
            <person name="Cortese R."/>
            <person name="Nicosia A."/>
            <person name="Cosset F.-L."/>
        </authorList>
    </citation>
    <scope>INTERACTION WITH HOST CD81 (ENVELOPE GLYCOPROTEIN E2)</scope>
    <scope>FUNCTION (ENVELOPE GLYCOPROTEIN E1)</scope>
    <scope>FUNCTION (ENVELOPE GLYCOPROTEIN E2)</scope>
</reference>
<reference key="33">
    <citation type="journal article" date="2003" name="J. Virol.">
        <title>Identification of the hepatitis C virus RNA replication complex in Huh-7 cells harboring subgenomic replicons.</title>
        <authorList>
            <person name="Gosert R."/>
            <person name="Egger D."/>
            <person name="Lohmann V."/>
            <person name="Bartenschlager R."/>
            <person name="Blum H.E."/>
            <person name="Bienz K."/>
            <person name="Moradpour D."/>
        </authorList>
    </citation>
    <scope>REPLICATION COMPLEX</scope>
</reference>
<reference key="34">
    <citation type="journal article" date="2003" name="FEBS Lett.">
        <title>The p7 protein of hepatitis C virus forms an ion channel that is blocked by the antiviral drug, Amantadine.</title>
        <authorList>
            <person name="Griffin S.D."/>
            <person name="Beales L.P."/>
            <person name="Clarke D.S."/>
            <person name="Worsfold O."/>
            <person name="Evans S.D."/>
            <person name="Jaeger J."/>
            <person name="Harris M.P."/>
            <person name="Rowlands D.J."/>
        </authorList>
    </citation>
    <scope>SUBUNIT (VIROPORIN P7)</scope>
    <scope>FUNCTION (VIROPORIN P7)</scope>
</reference>
<reference key="35">
    <citation type="journal article" date="2003" name="Proc. Natl. Acad. Sci. U.S.A.">
        <title>The hepatitis C virus p7 protein forms an ion channel that is inhibited by long-alkyl-chain iminosugar derivatives.</title>
        <authorList>
            <person name="Pavlovic D."/>
            <person name="Neville D.C."/>
            <person name="Argaud O."/>
            <person name="Blumberg B."/>
            <person name="Dwek R.A."/>
            <person name="Fischer W.B."/>
            <person name="Zitzmann N."/>
        </authorList>
    </citation>
    <scope>FUNCTION (VIROPORIN P7)</scope>
</reference>
<reference key="36">
    <citation type="journal article" date="2003" name="Proc. Natl. Acad. Sci. U.S.A.">
        <title>The p7 polypeptide of hepatitis C virus is critical for infectivity and contains functionally important genotype-specific sequences.</title>
        <authorList>
            <person name="Sakai A."/>
            <person name="Claire M.S."/>
            <person name="Faulk K."/>
            <person name="Govindarajan S."/>
            <person name="Emerson S.U."/>
            <person name="Purcell R.H."/>
            <person name="Bukh J."/>
        </authorList>
    </citation>
    <scope>MUTAGENESIS OF LYS-779 AND ARG-781</scope>
    <source>
        <strain>Isolate H77</strain>
    </source>
</reference>
<reference key="37">
    <citation type="journal article" date="2003" name="J. Virol.">
        <title>Protein-protein interactions between hepatitis C virus nonstructural proteins.</title>
        <authorList>
            <person name="Dimitrova M."/>
            <person name="Imbert I."/>
            <person name="Kieny M.P."/>
            <person name="Schuster C."/>
        </authorList>
    </citation>
    <scope>REPLICATION COMPLEX</scope>
</reference>
<reference key="38">
    <citation type="journal article" date="2003" name="J. Virol.">
        <title>Topology of the membrane-associated hepatitis C virus protein NS4B.</title>
        <authorList>
            <person name="Lundin M."/>
            <person name="Monne M."/>
            <person name="Widell A."/>
            <person name="Von Heijne G."/>
            <person name="Persson M.A.A."/>
        </authorList>
    </citation>
    <scope>TOPOLOGY (NON-STRUCTURAL PROTEIN 4B)</scope>
    <scope>SUBCELLULAR LOCATION (NON-STRUCTURAL PROTEIN 4B)</scope>
    <source>
        <strain>Isolate H77</strain>
    </source>
</reference>
<reference key="39">
    <citation type="journal article" date="2003" name="Virus Res.">
        <title>Induction of FAS ligand expression in a human hepatoblastoma cell line by HCV core protein.</title>
        <authorList>
            <person name="Ruggieri A."/>
            <person name="Murdolo M."/>
            <person name="Rapicetta M."/>
        </authorList>
    </citation>
    <scope>FUNCTION (MATURE CORE PROTEIN)</scope>
</reference>
<reference key="40">
    <citation type="journal article" date="2004" name="J. Biol. Chem.">
        <title>Protein kinase C-related kinase 2 regulates hepatitis C virus RNA polymerase function by phosphorylation.</title>
        <authorList>
            <person name="Kim S.J."/>
            <person name="Kim J.H."/>
            <person name="Kim Y.G."/>
            <person name="Lim H.S."/>
            <person name="Oh J.W."/>
        </authorList>
    </citation>
    <scope>ACTIVITY REGULATION (RNA-DIRECTED RNA POLYMERASE)</scope>
    <scope>PHOSPHORYLATION (RNA-DIRECTED RNA POLYMERASE)</scope>
    <scope>INTERACTION WITH HOST PRK2/PKN2 (RNA-DIRECTED RNA POLYMERASE)</scope>
</reference>
<reference key="41">
    <citation type="journal article" date="2004" name="Hepatology">
        <title>Structural biology of hepatitis C virus.</title>
        <authorList>
            <person name="Penin F."/>
            <person name="Dubuisson J."/>
            <person name="Rey F.A."/>
            <person name="Moradpour D."/>
            <person name="Pawlotsky J.-M."/>
        </authorList>
    </citation>
    <scope>REVIEW</scope>
</reference>
<reference key="42">
    <citation type="journal article" date="2004" name="J. Virol.">
        <title>Characterization of functional hepatitis C virus envelope glycoproteins.</title>
        <authorList>
            <person name="Op De Beeck A."/>
            <person name="Voisset C."/>
            <person name="Bartosch B."/>
            <person name="Ciczora Y."/>
            <person name="Cocquerel L."/>
            <person name="Keck Z."/>
            <person name="Foung S."/>
            <person name="Cosset F.-L."/>
            <person name="Dubuisson J."/>
        </authorList>
    </citation>
    <scope>FUNCTION (ENVELOPE GLYCOPROTEIN E1)</scope>
    <scope>FUNCTION (ENVELOPE GLYCOPROTEIN E2)</scope>
    <scope>SUBUNIT (ENVELOPE GLYCOPROTEIN E1)</scope>
    <scope>SUBUNIT (ENVELOPE GLYCOPROTEIN E2)</scope>
    <scope>GLYCOSYLATION (ENVELOPE GLYCOPROTEIN E1)</scope>
    <scope>GLYCOSYLATION (ENVELOPE GLYCOPROTEIN E2)</scope>
</reference>
<reference key="43">
    <citation type="journal article" date="2004" name="FEBS Lett.">
        <title>Cation-selective ion channels formed by p7 of hepatitis C virus are blocked by hexamethylene amiloride.</title>
        <authorList>
            <person name="Premkumar A."/>
            <person name="Wilson L."/>
            <person name="Ewart G.D."/>
            <person name="Gage P.W."/>
        </authorList>
    </citation>
    <scope>FUNCTION (VIROPORIN P7)</scope>
</reference>
<reference key="44">
    <citation type="journal article" date="2004" name="J. Biol. Chem.">
        <title>Regulation of hepatitis C virus polyprotein processing by signal peptidase involves structural determinants at the p7 sequence junctions.</title>
        <authorList>
            <person name="Carrere-Kremer S."/>
            <person name="Montpellier C."/>
            <person name="Lorenzo L."/>
            <person name="Brulin B."/>
            <person name="Cocquerel L."/>
            <person name="Belouzard S."/>
            <person name="Penin F."/>
            <person name="Dubuisson J."/>
        </authorList>
    </citation>
    <scope>PROTEOLYTIC PROCESSING (GENOME POLYPROTEIN)</scope>
</reference>
<reference key="45">
    <citation type="journal article" date="2004" name="Proc. Natl. Acad. Sci. U.S.A.">
        <title>L-SIGN (CD209L) and DC-SIGN (CD209) mediate transinfection of liver cells by hepatitis C virus.</title>
        <authorList>
            <person name="Cormier E.G."/>
            <person name="Durso R.J."/>
            <person name="Tsamis F."/>
            <person name="Boussemart L."/>
            <person name="Manix C."/>
            <person name="Olson W.C."/>
            <person name="Gardner J.P."/>
            <person name="Dragic T."/>
        </authorList>
    </citation>
    <scope>FUNCTION (ENVELOPE GLYCOPROTEIN E2)</scope>
    <scope>INTERACTION WITH HOST CD209/DC-SIGN AND CLEC4M/DC-SIGNR (ENVELOPE GLYCOPROTEIN E2)</scope>
    <source>
        <strain>Isolate H77</strain>
    </source>
</reference>
<reference key="46">
    <citation type="journal article" date="2004" name="Nature">
        <title>Periodic cycles of RNA unwinding and pausing by hepatitis C virus NS3 helicase.</title>
        <authorList>
            <person name="Serebrov V."/>
            <person name="Pyle A.M."/>
        </authorList>
    </citation>
    <scope>FUNCTION (SERINE PROTEASE/HELICASE NS3)</scope>
    <scope>CATALYTIC ACTIVITY (SERINE PROTEASE/HELICASE NS3)</scope>
</reference>
<reference key="47">
    <citation type="journal article" date="2005" name="J. Virol.">
        <title>Human VAP-B is involved in hepatitis C virus replication through interaction with NS5A and NS5B.</title>
        <authorList>
            <person name="Hamamoto I."/>
            <person name="Nishimura Y."/>
            <person name="Okamoto T."/>
            <person name="Aizaki H."/>
            <person name="Liu M."/>
            <person name="Mori Y."/>
            <person name="Abe T."/>
            <person name="Suzuki T."/>
            <person name="Lai M.M."/>
            <person name="Miyamura T."/>
            <person name="Moriishi K."/>
            <person name="Matsuura Y."/>
        </authorList>
    </citation>
    <scope>INTERACTION WITH HOST VAPB</scope>
</reference>
<reference key="48">
    <citation type="journal article" date="2005" name="J. Gen. Virol.">
        <title>Analysis of the processing and transmembrane topology of the E2p7 protein of hepatitis C virus.</title>
        <authorList>
            <person name="Isherwood B.J."/>
            <person name="Patel A.H."/>
        </authorList>
    </citation>
    <scope>PROTEOLYTIC CLEAVAGE (GENOME POLYPROTEIN)</scope>
    <scope>TOPOLOGY (VIROPORIN P7)</scope>
    <scope>MUTAGENESIS OF VAL-720</scope>
</reference>
<reference key="49">
    <citation type="journal article" date="2005" name="Proc. Natl. Acad. Sci. U.S.A.">
        <title>Hepatitis C virus protease NS3/4A cleaves mitochondrial antiviral signaling protein off the mitochondria to evade innate immunity.</title>
        <authorList>
            <person name="Li X.D."/>
            <person name="Sun L."/>
            <person name="Seth R.B."/>
            <person name="Pineda G."/>
            <person name="Chen Z.J."/>
        </authorList>
    </citation>
    <scope>FUNCTION (SERINE PROTEASE/HELICASE NS3)</scope>
    <scope>INTERACTION WITH HOST MAVS (SERINE PROTEASE/HELICASE NS3)</scope>
</reference>
<reference key="50">
    <citation type="journal article" date="2005" name="Nature">
        <title>Cardif is an adaptor protein in the RIG-I antiviral pathway and is targeted by hepatitis C virus.</title>
        <authorList>
            <person name="Meylan E."/>
            <person name="Curran J."/>
            <person name="Hofmann K."/>
            <person name="Moradpour D."/>
            <person name="Binder M."/>
            <person name="Bartenschlager R."/>
            <person name="Tschopp J."/>
        </authorList>
    </citation>
    <scope>FUNCTION (SERINE PROTEASE/HELICASE NS3)</scope>
    <scope>INTERACTION WITH HOST MAVS (SERINE PROTEASE/HELICASE NS3)</scope>
</reference>
<reference key="51">
    <citation type="journal article" date="2005" name="Proc. Natl. Acad. Sci. U.S.A.">
        <title>Immune evasion by hepatitis C virus NS3/4A protease-mediated cleavage of the Toll-like receptor 3 adaptor protein TRIF.</title>
        <authorList>
            <person name="Li K."/>
            <person name="Foy E."/>
            <person name="Ferreon J.C."/>
            <person name="Nakamura M."/>
            <person name="Ferreon A.C."/>
            <person name="Ikeda M."/>
            <person name="Ray S.C."/>
            <person name="Gale M. Jr."/>
            <person name="Lemon S.M."/>
        </authorList>
    </citation>
    <scope>FUNCTION (SERINE PROTEASE/HELICASE NS3)</scope>
    <scope>INTERACTION WITH HOST TICAM1 (SERINE PROTEASE/HELICASE NS3)</scope>
</reference>
<reference key="52">
    <citation type="journal article" date="2006" name="Nature">
        <title>RNA translocation and unwinding mechanism of HCV NS3 helicase and its coordination by ATP.</title>
        <authorList>
            <person name="Dumont S."/>
            <person name="Cheng W."/>
            <person name="Serebrov V."/>
            <person name="Beran R.K."/>
            <person name="Tinoco I. Jr."/>
            <person name="Pyle A.M."/>
            <person name="Bustamante C."/>
        </authorList>
    </citation>
    <scope>CATALYTIC ACTIVITY (SERINE PROTEASE/HELICASE NS3)</scope>
</reference>
<reference key="53">
    <citation type="journal article" date="2006" name="Gastroenterology">
        <title>The SH3 binding motif of HCV NS5A protein interacts with Bin1 and is important for apoptosis and infectivity.</title>
        <authorList>
            <person name="Nanda S.K."/>
            <person name="Herion D."/>
            <person name="Liang T.J."/>
        </authorList>
    </citation>
    <scope>DOMAIN (NON-STRUCTURAL PROTEIN 5A)</scope>
    <scope>INTERACTION WITH HOST BIN1 (NON-STRUCTURAL PROTEIN 5A)</scope>
    <scope>FUNCTION (NON-STRUCTURAL PROTEIN 5A)</scope>
</reference>
<reference key="54">
    <citation type="journal article" date="2006" name="J. Virol.">
        <title>Palmitoylation and polymerization or in protein-protein interactions of hepatitis C virus NS4B protein.</title>
        <authorList>
            <person name="Yu G.-Y."/>
            <person name="Lee K.-J."/>
            <person name="Gao L."/>
            <person name="Lai M.M.C."/>
        </authorList>
    </citation>
    <scope>FUNCTION (NON-STRUCTURAL PROTEIN 4B)</scope>
    <scope>PALMITOYLATION AT CYS-1968 AND CYS-1972 (NON-STRUCTURAL PROTEIN 4B)</scope>
    <scope>MUTAGENESIS OF CYS-1968 AND CYS-1972</scope>
    <source>
        <strain>Isolate H77</strain>
    </source>
</reference>
<reference key="55">
    <citation type="journal article" date="2006" name="J. Gen. Virol.">
        <title>Entry of hepatitis C virus pseudotypes into primary human hepatocytes by clathrin-dependent endocytosis.</title>
        <authorList>
            <person name="Codran A."/>
            <person name="Royer C."/>
            <person name="Jaeck D."/>
            <person name="Bastien-Valle M."/>
            <person name="Baumert T.F."/>
            <person name="Kieny M.P."/>
            <person name="Pereira C.A."/>
            <person name="Martin J.P."/>
        </authorList>
    </citation>
    <scope>FUNCTION (ENVELOPE GLYCOPROTEIN E1)</scope>
    <scope>FUNCTION (ENVELOPE GLYCOPROTEIN E2)</scope>
    <source>
        <strain>Isolate H77</strain>
    </source>
</reference>
<reference key="56">
    <citation type="journal article" date="2006" name="Biochemistry">
        <title>The membrane-active regions of the hepatitis C virus E1 and E2 envelope glycoproteins.</title>
        <authorList>
            <person name="Perez-Berna A.J."/>
            <person name="Moreno M.R."/>
            <person name="Guillen J."/>
            <person name="Bernabeu A."/>
            <person name="Villalain J."/>
        </authorList>
    </citation>
    <scope>FUNCTION (ENVELOPE GLYCOPROTEIN E1)</scope>
    <scope>FUNCTION (ENVELOPE GLYCOPROTEIN E2)</scope>
    <source>
        <strain>Isolate H77</strain>
    </source>
</reference>
<reference key="57">
    <citation type="journal article" date="2006" name="J. Gen. Virol.">
        <title>Dual topology of the processed hepatitis C virus protein NS4B is influenced by the NS5A protein.</title>
        <authorList>
            <person name="Lundin M."/>
            <person name="Lindstrom H."/>
            <person name="Groenwall C."/>
            <person name="Persson M.A."/>
        </authorList>
    </citation>
    <scope>TOPOLOGY (NON-STRUCTURAL PROTEIN 4B)</scope>
    <scope>SUBCELLULAR LOCATION (NON-STRUCTURAL PROTEIN 4B)</scope>
    <source>
        <strain>Isolate H77</strain>
    </source>
</reference>
<reference key="58">
    <citation type="journal article" date="2006" name="Mol. Cells">
        <title>Molecular and structural characterization of the domain 2 of hepatitis C virus non-structural protein 5A.</title>
        <authorList>
            <person name="Liang Y."/>
            <person name="Kang C.B."/>
            <person name="Yoon H.S."/>
        </authorList>
    </citation>
    <scope>INTERACTION WITH HOST EIF2AK2/PKR (NON-STRUCTURAL PROTEIN 5A)</scope>
    <scope>FUNCTION (NON-STRUCTURAL PROTEIN 5A)</scope>
</reference>
<reference key="59">
    <citation type="journal article" date="2007" name="J. Virol.">
        <title>Conserved determinants for membrane association of nonstructural protein 5A from hepatitis C virus and related viruses.</title>
        <authorList>
            <person name="Brass V."/>
            <person name="Pal Z."/>
            <person name="Sapay N."/>
            <person name="Deleage G."/>
            <person name="Blum H.E."/>
            <person name="Penin F."/>
            <person name="Moradpour D."/>
        </authorList>
    </citation>
    <scope>SUBCELLULAR LOCATION (NON-STRUCTURAL PROTEIN 5A)</scope>
</reference>
<reference key="60">
    <citation type="journal article" date="2007" name="J. Virol.">
        <title>An RNA-binding protein, hnRNP A1, and a scaffold protein, septin 6, facilitate hepatitis C virus replication.</title>
        <authorList>
            <person name="Kim C.S."/>
            <person name="Seol S.K."/>
            <person name="Song O.-K."/>
            <person name="Park J.H."/>
            <person name="Jang S.K."/>
        </authorList>
    </citation>
    <scope>INTERACTION WITH HNRNPA1 AND SEPT6 (RNA-DIRECTED RNA POLYMERASE)</scope>
    <scope>SUBCELLULAR LOCATION (RNA-DIRECTED RNA POLYMERASE)</scope>
</reference>
<reference key="61">
    <citation type="journal article" date="2007" name="J. Leukoc. Biol.">
        <title>HCV core protein interaction with gC1q receptor inhibits Th1 differentiation of CD4+ T cells via suppression of dendritic cell IL-12 production.</title>
        <authorList>
            <person name="Waggoner S.N."/>
            <person name="Hall C.H."/>
            <person name="Hahn Y.S."/>
        </authorList>
    </citation>
    <scope>FUNCTION (MATURE CORE PROTEIN)</scope>
</reference>
<reference key="62">
    <citation type="journal article" date="2008" name="J. Am. Soc. Mass Spectrom.">
        <title>Mass spectrometric characterization of glycosylation of hepatitis C virus E2 envelope glycoprotein reveals extended microheterogeneity of N-glycans.</title>
        <authorList>
            <person name="Iacob R.E."/>
            <person name="Perdivara I."/>
            <person name="Przybylski M."/>
            <person name="Tomer K.B."/>
        </authorList>
    </citation>
    <scope>GLYCOSYLATION AT ASN-417; ASN-423; ASN-430; ASN-448; ASN-476; ASN-532; ASN-540; ASN-556; ASN-576; ASN-623 AND ASN-645</scope>
    <scope>IDENTIFICATION BY MASS SPECTROMETRY</scope>
</reference>
<reference key="63">
    <citation type="journal article" date="2008" name="Nucleic Acids Res.">
        <title>RNA chaperoning and intrinsic disorder in the core proteins of Flaviviridae.</title>
        <authorList>
            <person name="Ivanyi-Nagy R."/>
            <person name="Lavergne J.P."/>
            <person name="Gabus C."/>
            <person name="Ficheux D."/>
            <person name="Darlix J.L."/>
        </authorList>
    </citation>
    <scope>FUNCTION (MATURE CORE PROTEIN)</scope>
    <scope>RNA-BINDING (MATURE CORE PROTEIN)</scope>
    <scope>DOMAIN (MATURE CORE PROTEIN)</scope>
</reference>
<reference key="64">
    <citation type="journal article" date="2009" name="J. Gastroenterol. Hepatol.">
        <title>Identification of a novel protein binding to hepatitis C virus core protein.</title>
        <authorList>
            <person name="Chen Y.R."/>
            <person name="Chen T.Y."/>
            <person name="Zhang S.L."/>
            <person name="Lin S.M."/>
            <person name="Zhao Y.R."/>
            <person name="Ye F."/>
            <person name="Zhang X."/>
            <person name="Shi L."/>
            <person name="Dang S.S."/>
            <person name="Liu M."/>
        </authorList>
    </citation>
    <scope>INTERACTION WITH HOST ACY3 (MATURE CORE PROTEIN)</scope>
</reference>
<reference key="65">
    <citation type="journal article" date="2009" name="Nature">
        <title>Human occludin is a hepatitis C virus entry factor required for infection of mouse cells.</title>
        <authorList>
            <person name="Ploss A."/>
            <person name="Evans M.J."/>
            <person name="Gaysinskaya V.A."/>
            <person name="Panis M."/>
            <person name="You H."/>
            <person name="de Jong Y.P."/>
            <person name="Rice C.M."/>
        </authorList>
    </citation>
    <scope>FUNCTION (ENVELOPE GLYCOPROTEIN E2)</scope>
    <scope>FUNCTION (ENVELOPE GLYCOPROTEIN E1)</scope>
</reference>
<reference key="66">
    <citation type="journal article" date="2009" name="Biochem. Biophys. Res. Commun.">
        <title>Structure and dynamics of the N-terminal half of hepatitis C virus core protein: an intrinsically unstructured protein.</title>
        <authorList>
            <person name="Duvignaud J.B."/>
            <person name="Savard C."/>
            <person name="Fromentin R."/>
            <person name="Majeau N."/>
            <person name="Leclerc D."/>
            <person name="Gagne S.M."/>
        </authorList>
    </citation>
    <scope>DOMAIN (MATURE CORE PROTEIN)</scope>
</reference>
<reference key="67">
    <citation type="journal article" date="2010" name="J. Biol. Chem.">
        <title>Claudin association with CD81 defines hepatitis C virus entry.</title>
        <authorList>
            <person name="Harris H.J."/>
            <person name="Davis C."/>
            <person name="Mullins J.G."/>
            <person name="Hu K."/>
            <person name="Goodall M."/>
            <person name="Farquhar M.J."/>
            <person name="Mee C.J."/>
            <person name="McCaffrey K."/>
            <person name="Young S."/>
            <person name="Drummer H."/>
            <person name="Balfe P."/>
            <person name="McKeating J.A."/>
        </authorList>
    </citation>
    <scope>FUNCTION (ENVELOPE GLYCOPROTEIN E2)</scope>
    <scope>FUNCTION (ENVELOPE GLYCOPROTEIN E1)</scope>
</reference>
<reference key="68">
    <citation type="journal article" date="2010" name="PLoS Pathog.">
        <title>Intracellular proton conductance of the hepatitis C virus p7 protein and its contribution to infectious virus production.</title>
        <authorList>
            <person name="Wozniak A.L."/>
            <person name="Griffin S."/>
            <person name="Rowlands D."/>
            <person name="Harris M."/>
            <person name="Yi M."/>
            <person name="Lemon S.M."/>
            <person name="Weinman S.A."/>
        </authorList>
    </citation>
    <scope>FUNCTION (VIROPORIN P7)</scope>
</reference>
<reference key="69">
    <citation type="journal article" date="2010" name="J. Virol.">
        <title>Hepatitis C virus nonstructural protein 5A: biochemical characterization of a novel structural class of RNA-binding proteins.</title>
        <authorList>
            <person name="Hwang J."/>
            <person name="Huang L."/>
            <person name="Cordek D.G."/>
            <person name="Vaughan R."/>
            <person name="Reynolds S.L."/>
            <person name="Kihara G."/>
            <person name="Raney K.D."/>
            <person name="Kao C.C."/>
            <person name="Cameron C.E."/>
        </authorList>
    </citation>
    <scope>FUNCTION (NON-STRUCTURAL PROTEIN 5A)</scope>
    <scope>RNA-BINDING (NON-STRUCTURAL PROTEIN 5A)</scope>
    <scope>SUBUNIT (NON-STRUCTURAL PROTEIN 5A)</scope>
    <scope>DOMAIN (NON-STRUCTURAL PROTEIN 5A)</scope>
</reference>
<reference key="70">
    <citation type="journal article" date="2011" name="J. Virol.">
        <title>Hepatitis C virus NS2 coordinates virus particle assembly through physical interactions with the E1-E2 glycoprotein and NS3-NS4A enzyme complexes.</title>
        <authorList>
            <person name="Stapleford K.A."/>
            <person name="Lindenbach B.D."/>
        </authorList>
    </citation>
    <scope>FUNCTION (PROTEASE NS2)</scope>
    <scope>INTERACTION WITH ENVELOPE GLYCOPROTEIN E1 (PROTEASE NS2)</scope>
    <scope>INTERACTION WITH ENVELOPE GLYCOPROTEIN E2 (PROTEASE NS2)</scope>
    <scope>INTERACTION WITH PROTEASE NS2 (ENVELOPE GLYCOPROTEIN E1)</scope>
    <scope>INTERACTION WITH PROTEASE NS2 (ENVELOPE GLYCOPROTEIN E2)</scope>
    <scope>INTERACTION WITH SERINE PROTEASE/HELICASE NS3 (PROTEASE NS2)</scope>
    <scope>INTERACTION WITH PROTEASE NS2 (SERINE PROTEASE/HELICASE NS3)</scope>
</reference>
<reference key="71">
    <citation type="journal article" date="2011" name="Science">
        <title>Single-base pair unwinding and asynchronous RNA release by the hepatitis C virus NS3 helicase.</title>
        <authorList>
            <person name="Cheng W."/>
            <person name="Arunajadai S.G."/>
            <person name="Moffitt J.R."/>
            <person name="Tinoco I. Jr."/>
            <person name="Bustamante C."/>
        </authorList>
    </citation>
    <scope>FUNCTION (SERINE PROTEASE/HELICASE NS3)</scope>
</reference>
<reference key="72">
    <citation type="journal article" date="2012" name="PLoS ONE">
        <title>Intrinsically unstructured domain 3 of hepatitis C Virus NS5A forms a 'fuzzy complex' with VAPB-MSP domain which carries ALS-causing mutations.</title>
        <authorList>
            <person name="Gupta G."/>
            <person name="Qin H."/>
            <person name="Song J."/>
        </authorList>
    </citation>
    <scope>DOMAIN (NON-STRUCTURAL PROTEIN 5A)</scope>
    <scope>INTERACTION WITH HOST VAPB (NON-STRUCTURAL PROTEIN 5A)</scope>
</reference>
<reference key="73">
    <citation type="journal article" date="2012" name="J. Biol. Chem.">
        <title>Characterization of hepatitis C virus particle subpopulations reveals multiple usage of the scavenger receptor BI for entry steps.</title>
        <authorList>
            <person name="Dao Thi V.L."/>
            <person name="Granier C."/>
            <person name="Zeisel M.B."/>
            <person name="Guerin M."/>
            <person name="Mancip J."/>
            <person name="Granio O."/>
            <person name="Penin F."/>
            <person name="Lavillette D."/>
            <person name="Bartenschlager R."/>
            <person name="Baumert T.F."/>
            <person name="Cosset F.L."/>
            <person name="Dreux M."/>
        </authorList>
    </citation>
    <scope>FUNCTION (ENVELOPE GLYCOPROTEIN E2)</scope>
    <scope>FUNCTION (ENVELOPE GLYCOPROTEIN E1)</scope>
    <scope>MUTAGENESIS OF LEU-399</scope>
    <scope>DOMAIN (ENVELOPE GLYCOPROTEIN E2)</scope>
</reference>
<reference key="74">
    <citation type="journal article" date="2012" name="J. Virol.">
        <title>Role of conserved cysteine residues in hepatitis C virus glycoprotein e2 folding and function.</title>
        <authorList>
            <person name="McCaffrey K."/>
            <person name="Boo I."/>
            <person name="Tewierek K."/>
            <person name="Edmunds M.L."/>
            <person name="Poumbourios P."/>
            <person name="Drummer H.E."/>
        </authorList>
    </citation>
    <scope>DISULFIDE BOND (ENVELOPE GLYCOPROTEIN E2)</scope>
    <scope>MUTAGENESIS OF CYS-429; CYS-452; CYS-459; CYS-503; CYS-508; CYS-552; CYS-564; CYS-569; CYS-581; CYS-585; CYS-597; CYS-607; CYS-620; CYS-644; CYS-652 AND CYS-677</scope>
</reference>
<reference key="75">
    <citation type="journal article" date="2012" name="J. Virol.">
        <title>Hepatitis C virus induces epidermal growth factor receptor activation via CD81 binding for viral internalization and entry.</title>
        <authorList>
            <person name="Diao J."/>
            <person name="Pantua H."/>
            <person name="Ngu H."/>
            <person name="Komuves L."/>
            <person name="Diehl L."/>
            <person name="Schaefer G."/>
            <person name="Kapadia S.B."/>
        </authorList>
    </citation>
    <scope>FUNCTION (ENVELOPE GLYCOPROTEIN E2)</scope>
    <scope>FUNCTION (ENVELOPE GLYCOPROTEIN E1)</scope>
</reference>
<reference key="76">
    <citation type="journal article" date="2013" name="Virus Genes">
        <title>A hepatitis C virus NS4B inhibitor suppresses viral genome replication by disrupting NS4B's dimerization/multimerization as well as its interaction with NS5A.</title>
        <authorList>
            <person name="Choi M."/>
            <person name="Lee S."/>
            <person name="Choi T."/>
            <person name="Lee C."/>
        </authorList>
    </citation>
    <scope>SUBUNIT (NON-STRUCTURAL PROTEIN 4B)</scope>
    <scope>INTERACTION WITH NON-STRUCTURAL PROTEIN 5A (NON-STRUCTURAL PROTEIN 4B)</scope>
    <scope>INTERACTION WITH NON-STRUCTURAL PROTEIN 4B (NON-STRUCTURAL PROTEIN 5A)</scope>
</reference>
<reference key="77">
    <citation type="journal article" date="2013" name="J. Virol.">
        <title>Hepatitis C virus induces interleukin-1beta (IL-1beta)/IL-18 in circulatory and resident liver macrophages.</title>
        <authorList>
            <person name="Shrivastava S."/>
            <person name="Mukherjee A."/>
            <person name="Ray R."/>
            <person name="Ray R.B."/>
        </authorList>
    </citation>
    <scope>FUNCTION (VIROPORIN P7)</scope>
</reference>
<reference key="78">
    <citation type="journal article" date="2013" name="J. Hepatol.">
        <title>Hepatitis C virus NS4B blocks the interaction of STING and TBK1 to evade host innate immunity.</title>
        <authorList>
            <person name="Ding Q."/>
            <person name="Cao X."/>
            <person name="Lu J."/>
            <person name="Huang B."/>
            <person name="Liu Y.J."/>
            <person name="Kato N."/>
            <person name="Shu H.B."/>
            <person name="Zhong J."/>
        </authorList>
    </citation>
    <scope>INTERACTION WITH HOST STING (NON-STRUCTURAL PROTEIN 4B)</scope>
    <scope>FUNCTION (NON-STRUCTURAL PROTEIN 4B)</scope>
</reference>
<reference key="79">
    <citation type="journal article" date="2013" name="Mol. Med. Report.">
        <title>Mutations in the STAT1-interacting domain of the hepatitis C virus core protein modulate the response to antiviral therapy.</title>
        <authorList>
            <person name="Anjum S."/>
            <person name="Afzal M.S."/>
            <person name="Ahmad T."/>
            <person name="Aslam B."/>
            <person name="Waheed Y."/>
            <person name="Shafi T."/>
            <person name="Qadri I."/>
        </authorList>
    </citation>
    <scope>FUNCTION (MATURE CORE PROTEIN)</scope>
    <scope>INTERACTION WITH HOST STAT1 (MATURE CORE PROTEIN)</scope>
</reference>
<reference key="80">
    <citation type="journal article" date="2014" name="J. Biol. Chem.">
        <title>The association of hepatitis C virus glycoproteins with apolipoproteins E and B early in assembly is conserved in lipoviral particles.</title>
        <authorList>
            <person name="Boyer A."/>
            <person name="Dumans A."/>
            <person name="Beaumont E."/>
            <person name="Etienne L."/>
            <person name="Roingeard P."/>
            <person name="Meunier J.C."/>
        </authorList>
    </citation>
    <scope>FUNCTION (ENVELOPE GLYCOPROTEIN E2)</scope>
    <scope>FUNCTION (ENVELOPE GLYCOPROTEIN E1)</scope>
</reference>
<reference key="81">
    <citation type="journal article" date="2014" name="Hepatology">
        <title>Critical interaction between E1 and E2 glycoproteins determines binding and fusion properties of hepatitis C virus during cell entry.</title>
        <authorList>
            <person name="Douam F."/>
            <person name="Dao Thi V.L."/>
            <person name="Maurin G."/>
            <person name="Fresquet J."/>
            <person name="Mompelat D."/>
            <person name="Zeisel M.B."/>
            <person name="Baumert T.F."/>
            <person name="Cosset F.L."/>
            <person name="Lavillette D."/>
        </authorList>
    </citation>
    <scope>INTERACTION WITH HOST CLDN1 (ENVELOPE GLYCOPROTEIN E1)</scope>
    <scope>INTERACTION WITH HOST CLDN1 (ENVELOPE GLYCOPROTEIN E2)</scope>
    <scope>FUNCTION (ENVELOPE GLYCOPROTEIN E2)</scope>
    <scope>FUNCTION (ENVELOPE GLYCOPROTEIN E1)</scope>
</reference>
<reference key="82">
    <citation type="journal article" date="2014" name="PLoS ONE">
        <title>pH-dependent conformational changes in the HCV NS3 protein modulate its ATPase and helicase activities.</title>
        <authorList>
            <person name="Ventura G.T."/>
            <person name="Costa E.C."/>
            <person name="Capaccia A.M."/>
            <person name="Mohana-Borges R."/>
        </authorList>
    </citation>
    <scope>FUNCTION (SERINE PROTEASE/HELICASE NS3)</scope>
    <scope>CATALYTIC ACTIVITY (SERINE PROTEASE/HELICASE NS3)</scope>
</reference>
<reference key="83">
    <citation type="journal article" date="2014" name="J. Virol.">
        <title>Apolipoprotein E likely contributes to a maturation step of infectious hepatitis C virus particles and interacts with viral envelope glycoproteins.</title>
        <authorList>
            <person name="Lee J.Y."/>
            <person name="Acosta E.G."/>
            <person name="Stoeck I.K."/>
            <person name="Long G."/>
            <person name="Hiet M.S."/>
            <person name="Mueller B."/>
            <person name="Fackler O.T."/>
            <person name="Kallis S."/>
            <person name="Bartenschlager R."/>
        </authorList>
    </citation>
    <scope>INTERACTION WITH HOST APOE (ENVELOPE GLYCOPROTEIN E2)</scope>
    <scope>FUNCTION (ENVELOPE GLYCOPROTEIN E2)</scope>
    <scope>FUNCTION (ENVELOPE GLYCOPROTEIN E1)</scope>
</reference>
<reference key="84">
    <citation type="journal article" date="2014" name="FEBS J.">
        <title>Fusogenic properties of the ectodomains of hepatitis C virus envelope proteins.</title>
        <authorList>
            <person name="Tello D."/>
            <person name="Rodriguez-Rodriguez M."/>
            <person name="Ortega S."/>
            <person name="Lombana L."/>
            <person name="Yelamos B."/>
            <person name="Gomez-Gutierrez J."/>
            <person name="Peterson D.L."/>
            <person name="Gavilanes F."/>
        </authorList>
    </citation>
    <scope>FUNCTION (ENVELOPE GLYCOPROTEIN E2)</scope>
    <scope>FUNCTION (ENVELOPE GLYCOPROTEIN E1)</scope>
</reference>
<reference key="85">
    <citation type="journal article" date="2015" name="Protein Sci.">
        <title>Intrinsic disorder mediates hepatitis C virus core-host cell protein interactions.</title>
        <authorList>
            <person name="Dolan P.T."/>
            <person name="Roth A.P."/>
            <person name="Xue B."/>
            <person name="Sun R."/>
            <person name="Dunker A.K."/>
            <person name="Uversky V.N."/>
            <person name="LaCount D.J."/>
        </authorList>
    </citation>
    <scope>DOMAIN (MATURE CORE PROTEIN)</scope>
</reference>
<reference key="86">
    <citation type="journal article" date="2015" name="PLoS ONE">
        <title>AAM-B Interacts with Nonstructural 4B and Regulates Hepatitis C Virus Propagation.</title>
        <authorList>
            <person name="Park E.M."/>
            <person name="Lim Y.S."/>
            <person name="Ahn B.Y."/>
            <person name="Hwang S.B."/>
        </authorList>
    </citation>
    <scope>INTERACTION WITH HOST METTL7A (NON-STRUCTURAL PROTEIN 4B)</scope>
    <scope>SUBCELLULAR LOCATION (NON-STRUCTURAL PROTEIN 4B)</scope>
</reference>
<reference key="87">
    <citation type="journal article" date="2016" name="ACS Infect. Dis.">
        <title>Interactions of the Disordered Domain II of Hepatitis C Virus NS5A with Cyclophilin A, NS5B, and Viral RNA Show Extensive Overlap.</title>
        <authorList>
            <person name="Ngure M."/>
            <person name="Issur M."/>
            <person name="Shkriabai N."/>
            <person name="Liu H.W."/>
            <person name="Cosa G."/>
            <person name="Kvaratskhelia M."/>
            <person name="Goette M."/>
        </authorList>
    </citation>
    <scope>DOMAIN (NON-STRUCTURAL PROTEIN 5A)</scope>
    <scope>INTERACTION WITH HOST PPIA</scope>
    <scope>RNA-BINDING</scope>
    <scope>INTERACTION WITH RNA-DIRECTED RNA POLYMERASE</scope>
</reference>
<reference key="88">
    <citation type="journal article" date="2016" name="PLoS Pathog.">
        <title>Coordination of Hepatitis C Virus Assembly by Distinct Regulatory Regions in Nonstructural Protein 5A.</title>
        <authorList>
            <person name="Zayas M."/>
            <person name="Long G."/>
            <person name="Madan V."/>
            <person name="Bartenschlager R."/>
        </authorList>
    </citation>
    <scope>DOMAIN (NON-STRUCTURAL PROTEIN 5A)</scope>
</reference>
<reference key="89">
    <citation type="journal article" date="2015" name="J. Gen. Virol.">
        <title>Regulation of core expression during the hepatitis C virus life cycle.</title>
        <authorList>
            <person name="Afzal M.S."/>
            <person name="Alsaleh K."/>
            <person name="Farhat R."/>
            <person name="Belouzard S."/>
            <person name="Danneels A."/>
            <person name="Descamps V."/>
            <person name="Duverlie G."/>
            <person name="Wychowski C."/>
            <person name="Zaidi N."/>
            <person name="Dubuisson J."/>
            <person name="Rouille Y."/>
        </authorList>
    </citation>
    <scope>SUBUNIT (MATURE CORE PROTEIN)</scope>
    <scope>INDUCTION (MATURE CORE PROTEIN)</scope>
</reference>
<reference key="90">
    <citation type="journal article" date="2016" name="Sci. Rep.">
        <title>Cell-death-inducing DFFA-like Effector B Contributes to the Assembly of Hepatitis C Virus (HCV) Particles and Interacts with HCV NS5A.</title>
        <authorList>
            <person name="Cai H."/>
            <person name="Yao W."/>
            <person name="Li L."/>
            <person name="Li X."/>
            <person name="Hu L."/>
            <person name="Mai R."/>
            <person name="Peng T."/>
        </authorList>
    </citation>
    <scope>INTERACTION WITH HOST CIDEB (NON-STRUCTURAL PROTEIN 5A)</scope>
</reference>
<reference key="91">
    <citation type="journal article" date="2016" name="Cell. Mol. Immunol.">
        <title>Interferon alpha (IFNalpha)-induced TRIM22 interrupts HCV replication by ubiquitinating NS5A.</title>
        <authorList>
            <person name="Yang C."/>
            <person name="Zhao X."/>
            <person name="Sun D."/>
            <person name="Yang L."/>
            <person name="Chong C."/>
            <person name="Pan Y."/>
            <person name="Chi X."/>
            <person name="Gao Y."/>
            <person name="Wang M."/>
            <person name="Shi X."/>
            <person name="Sun H."/>
            <person name="Lv J."/>
            <person name="Gao Y."/>
            <person name="Zhong J."/>
            <person name="Niu J."/>
            <person name="Sun B."/>
        </authorList>
    </citation>
    <scope>FUNCTION (NON-STRUCTURAL PROTEIN 5A)</scope>
    <scope>UBIQUITINATION (NON-STRUCTURAL PROTEIN 5A)</scope>
</reference>
<reference key="92">
    <citation type="journal article" date="2016" name="Biochim. Biophys. Acta">
        <title>Hepatitis C virus p7 mediates membrane-to-membrane adhesion.</title>
        <authorList>
            <person name="Lee G.Y."/>
            <person name="Lee S."/>
            <person name="Lee H.R."/>
            <person name="Yoo Y.D."/>
        </authorList>
    </citation>
    <scope>FUNCTION (VIROPORIN P7)</scope>
    <scope>SUBCELLULAR LOCATION (VIROPORIN P7)</scope>
</reference>
<reference key="93">
    <citation type="journal article" date="2016" name="J. Virol.">
        <title>ISG12a Restricts Hepatitis C Virus Infection through the Ubiquitination-Dependent Degradation Pathway.</title>
        <authorList>
            <person name="Xue B."/>
            <person name="Yang D."/>
            <person name="Wang J."/>
            <person name="Xu Y."/>
            <person name="Wang X."/>
            <person name="Qin Y."/>
            <person name="Tian R."/>
            <person name="Chen S."/>
            <person name="Xie Q."/>
            <person name="Liu N."/>
            <person name="Zhu H."/>
        </authorList>
    </citation>
    <scope>INTERACTION WITH HOST IFI27 (NON-STRUCTURAL PROTEIN 5A)</scope>
    <scope>INTERACTION WITH HOST SKP2 (NON-STRUCTURAL PROTEIN 5A)</scope>
    <scope>UBIQUITINATION AT LYS-2350 (NON-STRUCTURAL PROTEIN 5A)</scope>
    <scope>DOMAIN (NON-STRUCTURAL PROTEIN 5A)</scope>
</reference>
<reference key="94">
    <citation type="journal article" date="2016" name="Sci. Rep.">
        <title>TRIM14 inhibits hepatitis C virus infection by SPRY domain-dependent targeted degradation of the viral NS5A protein.</title>
        <authorList>
            <person name="Wang S."/>
            <person name="Chen Y."/>
            <person name="Li C."/>
            <person name="Wu Y."/>
            <person name="Guo L."/>
            <person name="Peng C."/>
            <person name="Huang Y."/>
            <person name="Cheng G."/>
            <person name="Qin F.X."/>
        </authorList>
    </citation>
    <scope>FUNCTION (NON-STRUCTURAL PROTEIN 5A)</scope>
    <scope>INTERACTION WITH HOST TRIM14 (NON-STRUCTURAL PROTEIN 5A)</scope>
</reference>
<reference key="95">
    <citation type="journal article" date="2017" name="Mol. Med. Report.">
        <title>Hepatitis C virus p7 induces mitochondrial depolarization of isolated liver mitochondria.</title>
        <authorList>
            <person name="You D.G."/>
            <person name="Lee H.R."/>
            <person name="Kim W.K."/>
            <person name="Kim H.J."/>
            <person name="Lee G.Y."/>
            <person name="Yoo Y.D."/>
        </authorList>
    </citation>
    <scope>FUNCTION (VIROPORIN P7)</scope>
    <scope>SUBCELLULAR LOCATION (VIROPORIN P7)</scope>
</reference>
<reference key="96">
    <citation type="journal article" date="2017" name="J. Virol.">
        <title>Attachment and Postattachment Receptors Important for Hepatitis C Virus Infection and Cell-to-Cell Transmission.</title>
        <authorList>
            <person name="Fan H."/>
            <person name="Qiao L."/>
            <person name="Kang K.D."/>
            <person name="Fan J."/>
            <person name="Wei W."/>
            <person name="Luo G."/>
        </authorList>
    </citation>
    <scope>FUNCTION (ENVELOPE GLYCOPROTEIN E2)</scope>
    <scope>FUNCTION (ENVELOPE GLYCOPROTEIN E1)</scope>
</reference>
<reference key="97">
    <citation type="journal article" date="2017" name="Sci. Rep.">
        <title>Hepatitis C Virus Exploits Death Receptor 6-mediated Signaling Pathway to Facilitate Viral Propagation.</title>
        <authorList>
            <person name="Luong T.T.D."/>
            <person name="Tran G.V.Q."/>
            <person name="Shin D.J."/>
            <person name="Lim Y.S."/>
            <person name="Hwang S.B."/>
        </authorList>
    </citation>
    <scope>INTERACTION WITH HOST TNFRSF21 (NON-STRUCTURAL PROTEIN 5A)</scope>
    <scope>FUNCTION (NON-STRUCTURAL PROTEIN 5A)</scope>
</reference>
<reference key="98">
    <citation type="journal article" date="2018" name="J. Virol.">
        <title>Regulation of Apolipoprotein E Trafficking by Hepatitis C Virus-Induced Autophagy.</title>
        <authorList>
            <person name="Kim J.Y."/>
            <person name="Ou J.J."/>
        </authorList>
    </citation>
    <scope>INTERACTION WITH HOST APOE (ENVELOPE GLYCOPROTEIN E2)</scope>
    <scope>FUNCTION (ENVELOPE GLYCOPROTEIN E2)</scope>
    <scope>FUNCTION (ENVELOPE GLYCOPROTEIN E1)</scope>
</reference>
<reference key="99">
    <citation type="journal article" date="2018" name="PLoS Pathog.">
        <title>Hepatitis C virus NS4B induces the degradation of TRIF to inhibit TLR3-mediated interferon signaling pathway.</title>
        <authorList>
            <person name="Liang Y."/>
            <person name="Cao X."/>
            <person name="Ding Q."/>
            <person name="Zhao Y."/>
            <person name="He Z."/>
            <person name="Zhong J."/>
        </authorList>
    </citation>
    <scope>FUNCTION (NON-STRUCTURAL PROTEIN 4B)</scope>
</reference>
<reference key="100">
    <citation type="journal article" date="2018" name="PLoS Pathog.">
        <title>A protein coevolution method uncovers critical features of the Hepatitis C Virus fusion mechanism.</title>
        <authorList>
            <person name="Douam F."/>
            <person name="Fusil F."/>
            <person name="Enguehard M."/>
            <person name="Dib L."/>
            <person name="Nadalin F."/>
            <person name="Schwaller L."/>
            <person name="Hrebikova G."/>
            <person name="Mancip J."/>
            <person name="Mailly L."/>
            <person name="Montserret R."/>
            <person name="Ding Q."/>
            <person name="Maisse C."/>
            <person name="Carlot E."/>
            <person name="Xu K."/>
            <person name="Verhoeyen E."/>
            <person name="Baumert T.F."/>
            <person name="Ploss A."/>
            <person name="Carbone A."/>
            <person name="Cosset F.L."/>
            <person name="Lavillette D."/>
        </authorList>
    </citation>
    <scope>FUNCTION (ENVELOPE GLYCOPROTEIN E2)</scope>
    <scope>FUNCTION (ENVELOPE GLYCOPROTEIN E1)</scope>
</reference>
<reference key="101">
    <citation type="journal article" date="2018" name="J. Virol.">
        <title>Neuralized E3 Ubiquitin Protein Ligase 3 Is an Inducible Antiviral Effector That Inhibits Hepatitis C Virus Assembly by Targeting Viral E1 Glycoprotein.</title>
        <authorList>
            <person name="Zhao Y."/>
            <person name="Cao X."/>
            <person name="Guo M."/>
            <person name="Wang X."/>
            <person name="Yu T."/>
            <person name="Ye L."/>
            <person name="Han L."/>
            <person name="Hei L."/>
            <person name="Tao W."/>
            <person name="Tong Y."/>
            <person name="Xu Y."/>
            <person name="Zhong J."/>
        </authorList>
    </citation>
    <scope>INTERACTION WITH HOST NEURL3 (ENVELOPE GLYCOPROTEIN E1)</scope>
</reference>
<reference key="102">
    <citation type="journal article" date="2018" name="Sci. Rep.">
        <title>Hepatitis C Virus Modulates Solute carrier family 3 member 2 for Viral Propagation.</title>
        <authorList>
            <person name="Nguyen N.N.T."/>
            <person name="Lim Y.S."/>
            <person name="Nguyen L.P."/>
            <person name="Tran S.C."/>
            <person name="Luong T.T.D."/>
            <person name="Nguyen T.T.T."/>
            <person name="Pham H.T."/>
            <person name="Mai H.N."/>
            <person name="Choi J.W."/>
            <person name="Han S.S."/>
            <person name="Hwang S.B."/>
        </authorList>
    </citation>
    <scope>FUNCTION (ENVELOPE GLYCOPROTEIN E2)</scope>
    <scope>FUNCTION (SERINE PROTEASE/HELICASE NS3)</scope>
    <scope>FUNCTION (NON-STRUCTURAL PROTEIN 4A)</scope>
    <scope>SUBUNIT</scope>
    <scope>INTERACTION WITH HOST SLC3A2 (ENVELOPE GLYCOPROTEIN E2)</scope>
</reference>
<reference key="103">
    <citation type="journal article" date="2019" name="PLoS ONE">
        <title>SPSB2 inhibits hepatitis C virus replication by targeting NS5A for ubiquitination and degradation.</title>
        <authorList>
            <person name="Wang M."/>
            <person name="Wang Y."/>
            <person name="Liu Y."/>
            <person name="Wang H."/>
            <person name="Xin X."/>
            <person name="Li J."/>
            <person name="Hao Y."/>
            <person name="Han L."/>
            <person name="Yu F."/>
            <person name="Zheng C."/>
            <person name="Shen C."/>
        </authorList>
    </citation>
    <scope>INTERACTION WITH HOST SPSB2 (ENVELOPE GLYCOPROTEIN E1)</scope>
    <scope>INTERACTION WITH HOST SPSB2 (NON-STRUCTURAL PROTEIN 5A)</scope>
</reference>
<reference key="104">
    <citation type="journal article" date="2019" name="J. Virol.">
        <title>Palmitoylation of Hepatitis C Virus NS2 Regulates Its Subcellular Localization and NS2-NS3 Autocleavage.</title>
        <authorList>
            <person name="Wu M.J."/>
            <person name="Shanmugam S."/>
            <person name="Welsch C."/>
            <person name="Yi M."/>
        </authorList>
    </citation>
    <scope>PALMITOYLATION AT CYS-922 (PROTEASE NS2)</scope>
    <scope>SUBCELLULAR LOCATION (PROTEASE NS2)</scope>
    <scope>MUTAGENESIS OF CYS-922</scope>
</reference>
<reference key="105">
    <citation type="journal article" date="2020" name="J. Virol.">
        <title>PACSIN2 Interacts with Nonstructural Protein 5A and Regulates Hepatitis C Virus Assembly.</title>
        <authorList>
            <person name="Nguyen L.P."/>
            <person name="Tran S.C."/>
            <person name="Suetsugu S."/>
            <person name="Lim Y.S."/>
            <person name="Hwang S.B."/>
        </authorList>
    </citation>
    <scope>INTERACTION WITH HOST PACSIN2 (NON-STRUCTURAL PROTEIN 5A)</scope>
    <scope>FUNCTION (NON-STRUCTURAL PROTEIN 5A)</scope>
</reference>
<reference key="106">
    <citation type="journal article" date="2020" name="Int. J. Biochem. Cell Biol.">
        <title>Viroporins and inflammasomes: A key to understand virus-induced inflammation.</title>
        <authorList>
            <person name="Farag N.S."/>
            <person name="Breitinger U."/>
            <person name="Breitinger H.G."/>
            <person name="El Azizi M.A."/>
        </authorList>
    </citation>
    <scope>FUNCTION (VIROPORIN P7)</scope>
</reference>
<reference key="107">
    <citation type="journal article" date="2023" name="Nature">
        <title>Hepatitis C virus RNA is 5'-capped with flavin adenine dinucleotide.</title>
        <authorList>
            <person name="Sherwood A.V."/>
            <person name="Rivera-Rangel L.R."/>
            <person name="Ryberg L.A."/>
            <person name="Larsen H.S."/>
            <person name="Anker K.M."/>
            <person name="Costa R."/>
            <person name="Vaagboe C.B."/>
            <person name="Jakljevic E."/>
            <person name="Pham L.V."/>
            <person name="Fernandez-Antunez C."/>
            <person name="Indrisiunaite G."/>
            <person name="Podolska-Charlery A."/>
            <person name="Grothen J.E.R."/>
            <person name="Langvad N.W."/>
            <person name="Fossat N."/>
            <person name="Offersgaard A."/>
            <person name="Al-Chaer A."/>
            <person name="Nielsen L."/>
            <person name="Kusnierczyk A."/>
            <person name="Soelund C."/>
            <person name="Weis N."/>
            <person name="Gottwein J.M."/>
            <person name="Holmbeck K."/>
            <person name="Bottaro S."/>
            <person name="Ramirez S."/>
            <person name="Bukh J."/>
            <person name="Scheel T.K.H."/>
            <person name="Vinther J."/>
        </authorList>
    </citation>
    <scope>FUNCTION (RNA-DIRECTED RNA POLYMERASE)</scope>
</reference>
<reference evidence="144" key="108">
    <citation type="journal article" date="1997" name="Nat. Struct. Biol.">
        <title>Structure of the hepatitis C virus RNA helicase domain.</title>
        <authorList>
            <person name="Yao N."/>
            <person name="Hesson T."/>
            <person name="Cable M.B."/>
            <person name="Hong Z."/>
            <person name="Kwong A.D."/>
            <person name="Le H.V."/>
            <person name="Weber P.C."/>
        </authorList>
    </citation>
    <scope>X-RAY CRYSTALLOGRAPHY (2.10 ANGSTROMS) OF 1206-1656 IN COMPLEX WITH CALCIUM</scope>
</reference>
<reference evidence="143" key="109">
    <citation type="journal article" date="1996" name="Cell">
        <title>Crystal structure of the hepatitis C virus NS3 protease domain complexed with a synthetic NS4A cofactor peptide.</title>
        <authorList>
            <person name="Kim J.L."/>
            <person name="Morgenstern K.A."/>
            <person name="Lin C."/>
            <person name="Fox T."/>
            <person name="Dwyer M.D."/>
            <person name="Landro J.A."/>
            <person name="Chambers S.P."/>
            <person name="Markland W."/>
            <person name="Lepre C.A."/>
            <person name="O'Malley E.T."/>
            <person name="Harbeson S.L."/>
            <person name="Rice C.M."/>
            <person name="Murcko M.A."/>
            <person name="Caron P.R."/>
            <person name="Thomson J.A."/>
        </authorList>
    </citation>
    <scope>X-RAY CRYSTALLOGRAPHY (2.50 ANGSTROMS) OF 1019-1206 IN COMPLEX WITH NON-STRUCTURAL PROTEIN 4A</scope>
    <scope>INTERACTION WITH NON-STRUCTURAL PROTEIN 4A (SERINE PROTEASE/HELICASE NS3)</scope>
    <scope>INTERACTION WITH SERINE PROTEASE/HELICASE NS3 (NON-STRUCTURAL PROTEIN 4A)</scope>
    <scope>ACTIVE SITE (SERINE PROTEASE/HELICASE NS3)</scope>
</reference>
<reference key="110">
    <citation type="journal article" date="1998" name="Structure">
        <title>Hepatitis C virus NS3 RNA helicase domain with a bound oligonucleotide: the crystal structure provides insights into the mode of unwinding.</title>
        <authorList>
            <person name="Kim J.L."/>
            <person name="Morgenstern K.A."/>
            <person name="Griffith J.P."/>
            <person name="Dwyer M.D."/>
            <person name="Thomson J.A."/>
            <person name="Murcko M.A."/>
            <person name="Lin C."/>
            <person name="Caron P.R."/>
        </authorList>
    </citation>
    <scope>X-RAY CRYSTALLOGRAPHY (2.2 ANGSTROMS) OF 1193-1659</scope>
</reference>
<reference key="111">
    <citation type="journal article" date="2001" name="J. Mol. Biol.">
        <title>Solution structure and backbone dynamics of an engineered arginine-rich subdomain 2 of the hepatitis C virus NS3 RNA helicase.</title>
        <authorList>
            <person name="Liu D."/>
            <person name="Wang Y.-S."/>
            <person name="Gesell J.J."/>
            <person name="Wyss D.F."/>
        </authorList>
    </citation>
    <scope>STRUCTURE BY NMR OF 1353-1507</scope>
</reference>
<reference key="112">
    <citation type="journal article" date="2002" name="Org. Lett.">
        <title>Pyrrolidine-5,5-trans-lactams. 2. The use of X-ray crystal structure data in the optimization of P3 and P4 substituents.</title>
        <authorList>
            <person name="Andrews D.M."/>
            <person name="Chaignot H."/>
            <person name="Coomber B.A."/>
            <person name="Good A.C."/>
            <person name="Hind S.L."/>
            <person name="Johnson M.R."/>
            <person name="Jones P.S."/>
            <person name="Mills G."/>
            <person name="Robinson J.E."/>
            <person name="Skarzynski T."/>
            <person name="Slater M.J."/>
            <person name="Somers D.O."/>
        </authorList>
    </citation>
    <scope>X-RAY CRYSTALLOGRAPHY (2.6 ANGSTROMS) OF 1027-1207</scope>
</reference>
<reference evidence="146 147 148 149 150" key="113">
    <citation type="journal article" date="2004" name="J. Biol. Chem.">
        <title>Structure and function of the membrane anchor domain of hepatitis C virus nonstructural protein 5A.</title>
        <authorList>
            <person name="Penin F."/>
            <person name="Brass V."/>
            <person name="Appel N."/>
            <person name="Ramboarina S."/>
            <person name="Montserret R."/>
            <person name="Ficheux D."/>
            <person name="Blum H.E."/>
            <person name="Bartenschlager R."/>
            <person name="Moradpour D."/>
        </authorList>
    </citation>
    <scope>STRUCTURE BY NMR OF 1973-2003</scope>
    <scope>TOPOLOGY (NON-STRUCTURAL PROTEIN 5A)</scope>
    <scope>SUBCELLULAR LOCATION (NON-STRUCTURAL PROTEIN 5A)</scope>
    <scope>DOMAIN (NON-STRUCTURAL PROTEIN 5A)</scope>
</reference>
<reference key="114">
    <citation type="journal article" date="2006" name="Nature">
        <title>Structure of the catalytic domain of the hepatitis C virus NS2-3 protease.</title>
        <authorList>
            <person name="Lorenz I.C."/>
            <person name="Marcotrigiano J."/>
            <person name="Dentzer T.G."/>
            <person name="Rice C.M."/>
        </authorList>
    </citation>
    <scope>X-RAY CRYSTALLOGRAPHY (2.28 ANGSTROMS) OF 903-1026</scope>
    <scope>MUTAGENESIS OF HIS-952 AND CYS-993</scope>
    <scope>ACTIVE SITE (PROTEASE NS2)</scope>
    <scope>SUBUNIT (PROTEASE NS2)</scope>
</reference>
<reference evidence="155" key="115">
    <citation type="journal article" date="2009" name="J. Virol.">
        <title>An amphipathic alpha-helix at the C terminus of hepatitis C virus nonstructural protein 4B mediates membrane association.</title>
        <authorList>
            <person name="Gouttenoire J."/>
            <person name="Montserret R."/>
            <person name="Kennel A."/>
            <person name="Penin F."/>
            <person name="Moradpour D."/>
        </authorList>
    </citation>
    <scope>STRUCTURE BY NMR OF 1938-1965</scope>
</reference>
<reference evidence="154" key="116">
    <citation type="journal article" date="2009" name="J. Virol.">
        <title>Identification of a novel determinant for membrane association in hepatitis C virus nonstructural protein 4B.</title>
        <authorList>
            <person name="Gouttenoire J."/>
            <person name="Castet V."/>
            <person name="Montserret R."/>
            <person name="Arora N."/>
            <person name="Raussens V."/>
            <person name="Ruysschaert J.M."/>
            <person name="Diesis E."/>
            <person name="Blum H.E."/>
            <person name="Penin F."/>
            <person name="Moradpour D."/>
        </authorList>
    </citation>
    <scope>STRUCTURE BY NMR OF 1751-1780</scope>
</reference>
<reference evidence="163 164" key="117">
    <citation type="journal article" date="2010" name="J. Biol. Chem.">
        <title>Further insights into the roles of GTP and the C terminus of the hepatitis C virus polymerase in the initiation of RNA synthesis.</title>
        <authorList>
            <person name="Harrus D."/>
            <person name="Ahmed-El-Sayed N."/>
            <person name="Simister P.C."/>
            <person name="Miller S."/>
            <person name="Triconnet M."/>
            <person name="Hagedorn C.H."/>
            <person name="Mahias K."/>
            <person name="Rey F.A."/>
            <person name="Astier-Gin T."/>
            <person name="Bressanelli S."/>
        </authorList>
    </citation>
    <scope>X-RAY CRYSTALLOGRAPHY (1.70 ANGSTROMS) OF 2421-2990 IN COMPLEX WITH GTP</scope>
    <scope>FUNCTION (RNA-DIRECTED RNA POLYMERASE)</scope>
    <scope>CATALYTIC ACTIVITY (RNA-DIRECTED RNA POLYMERASE)</scope>
</reference>
<reference evidence="166 167" key="118">
    <citation type="journal article" date="2011" name="J. Virol.">
        <title>Molecular mechanisms of viral and host cell substrate recognition by hepatitis C virus NS3/4A protease.</title>
        <authorList>
            <person name="Romano K.P."/>
            <person name="Laine J.M."/>
            <person name="Deveau L.M."/>
            <person name="Cao H."/>
            <person name="Massi F."/>
            <person name="Schiffer C.A."/>
        </authorList>
    </citation>
    <scope>X-RAY CRYSTALLOGRAPHY (1.50 ANGSTROMS) OF 1026-1208 IN COMPLEX WITH ZINC</scope>
    <scope>FUNCTION (NON-STRUCTURAL PROTEIN 4A)</scope>
</reference>
<reference evidence="168" key="119">
    <citation type="journal article" date="2013" name="Science">
        <title>Hepatitis C virus E2 envelope glycoprotein core structure.</title>
        <authorList>
            <person name="Kong L."/>
            <person name="Giang E."/>
            <person name="Nieusma T."/>
            <person name="Kadam R.U."/>
            <person name="Cogburn K.E."/>
            <person name="Hua Y."/>
            <person name="Dai X."/>
            <person name="Stanfield R.L."/>
            <person name="Burton D.R."/>
            <person name="Ward A.B."/>
            <person name="Wilson I.A."/>
            <person name="Law M."/>
        </authorList>
    </citation>
    <scope>X-RAY CRYSTALLOGRAPHY (2.65 ANGSTROMS) OF 412-459 AND 486-645</scope>
    <scope>GLYCOSYLATION AT ASN-430; ASN-532; ASN-540; ASN-556 AND ASN-623</scope>
</reference>
<name>POLG_HCV77</name>
<proteinExistence type="evidence at protein level"/>
<feature type="initiator methionine" description="Removed; by host" evidence="4">
    <location>
        <position position="1"/>
    </location>
</feature>
<feature type="chain" id="PRO_0000450854" description="Genome polyprotein">
    <location>
        <begin position="2"/>
        <end position="3011"/>
    </location>
</feature>
<feature type="chain" id="PRO_0000037566" description="Core protein precursor">
    <location>
        <begin position="2"/>
        <end position="191"/>
    </location>
</feature>
<feature type="chain" id="PRO_0000037567" description="Mature core protein">
    <location>
        <begin position="2"/>
        <end position="177"/>
    </location>
</feature>
<feature type="propeptide" id="PRO_0000037568" description="ER anchor for the core protein, removed in mature form by host signal peptidase" evidence="33">
    <location>
        <begin position="178"/>
        <end position="191"/>
    </location>
</feature>
<feature type="chain" id="PRO_0000037569" description="Envelope glycoprotein E1">
    <location>
        <begin position="192"/>
        <end position="383"/>
    </location>
</feature>
<feature type="chain" id="PRO_0000037570" description="Envelope glycoprotein E2">
    <location>
        <begin position="384"/>
        <end position="746"/>
    </location>
</feature>
<feature type="chain" id="PRO_0000037571" description="Viroporin p7">
    <location>
        <begin position="747"/>
        <end position="809"/>
    </location>
</feature>
<feature type="chain" id="PRO_0000037572" description="Protease NS2" evidence="15">
    <location>
        <begin position="810"/>
        <end position="1026"/>
    </location>
</feature>
<feature type="chain" id="PRO_0000037573" description="Serine protease/helicase NS3">
    <location>
        <begin position="1027"/>
        <end position="1657"/>
    </location>
</feature>
<feature type="chain" id="PRO_0000037574" description="Non-structural protein 4A">
    <location>
        <begin position="1658"/>
        <end position="1711"/>
    </location>
</feature>
<feature type="chain" id="PRO_0000037575" description="Non-structural protein 4B">
    <location>
        <begin position="1712"/>
        <end position="1972"/>
    </location>
</feature>
<feature type="chain" id="PRO_0000037576" description="Non-structural protein 5A">
    <location>
        <begin position="1973"/>
        <end position="2420"/>
    </location>
</feature>
<feature type="chain" id="PRO_0000037577" description="RNA-directed RNA polymerase">
    <location>
        <begin position="2421"/>
        <end position="3011"/>
    </location>
</feature>
<feature type="topological domain" description="Cytoplasmic" evidence="12">
    <location>
        <begin position="2"/>
        <end position="168"/>
    </location>
</feature>
<feature type="transmembrane region" description="Helical" evidence="12">
    <location>
        <begin position="169"/>
        <end position="189"/>
    </location>
</feature>
<feature type="topological domain" description="Lumenal" evidence="130">
    <location>
        <begin position="190"/>
        <end position="358"/>
    </location>
</feature>
<feature type="transmembrane region" description="Helical" evidence="130">
    <location>
        <begin position="359"/>
        <end position="379"/>
    </location>
</feature>
<feature type="topological domain" description="Lumenal" evidence="130">
    <location>
        <begin position="380"/>
        <end position="725"/>
    </location>
</feature>
<feature type="transmembrane region" description="Helical" evidence="130">
    <location>
        <begin position="726"/>
        <end position="746"/>
    </location>
</feature>
<feature type="topological domain" description="Lumenal" evidence="129 133">
    <location>
        <begin position="747"/>
        <end position="757"/>
    </location>
</feature>
<feature type="transmembrane region" description="Helical" evidence="129 133">
    <location>
        <begin position="758"/>
        <end position="778"/>
    </location>
</feature>
<feature type="topological domain" description="Cytoplasmic" evidence="129 133">
    <location>
        <begin position="779"/>
        <end position="781"/>
    </location>
</feature>
<feature type="transmembrane region" description="Helical" evidence="129 133">
    <location>
        <begin position="782"/>
        <end position="803"/>
    </location>
</feature>
<feature type="topological domain" description="Lumenal" evidence="129 133">
    <location>
        <begin position="804"/>
        <end position="813"/>
    </location>
</feature>
<feature type="transmembrane region" description="Helical" evidence="11">
    <location>
        <begin position="814"/>
        <end position="834"/>
    </location>
</feature>
<feature type="topological domain" description="Cytoplasmic" evidence="11">
    <location>
        <begin position="835"/>
        <end position="838"/>
    </location>
</feature>
<feature type="transmembrane region" description="Helical" evidence="11">
    <location>
        <begin position="839"/>
        <end position="859"/>
    </location>
</feature>
<feature type="topological domain" description="Lumenal" evidence="11">
    <location>
        <begin position="860"/>
        <end position="881"/>
    </location>
</feature>
<feature type="transmembrane region" description="Helical" evidence="11">
    <location>
        <begin position="882"/>
        <end position="902"/>
    </location>
</feature>
<feature type="topological domain" description="Cytoplasmic" evidence="11">
    <location>
        <begin position="903"/>
        <end position="1657"/>
    </location>
</feature>
<feature type="transmembrane region" description="Helical" evidence="12">
    <location>
        <begin position="1658"/>
        <end position="1678"/>
    </location>
</feature>
<feature type="topological domain" description="Cytoplasmic" evidence="12">
    <location>
        <begin position="1679"/>
        <end position="1805"/>
    </location>
</feature>
<feature type="transmembrane region" description="Helical" evidence="12">
    <location>
        <begin position="1806"/>
        <end position="1824"/>
    </location>
</feature>
<feature type="topological domain" description="Lumenal" evidence="62">
    <location>
        <begin position="1825"/>
        <end position="1828"/>
    </location>
</feature>
<feature type="transmembrane region" description="Helical" evidence="12">
    <location>
        <begin position="1829"/>
        <end position="1849"/>
    </location>
</feature>
<feature type="topological domain" description="Cytoplasmic" evidence="12">
    <location>
        <position position="1850"/>
    </location>
</feature>
<feature type="transmembrane region" description="Helical" evidence="12">
    <location>
        <begin position="1851"/>
        <end position="1871"/>
    </location>
</feature>
<feature type="topological domain" description="Lumenal" evidence="12">
    <location>
        <begin position="1872"/>
        <end position="1881"/>
    </location>
</feature>
<feature type="transmembrane region" description="Helical" evidence="12">
    <location>
        <begin position="1882"/>
        <end position="1902"/>
    </location>
</feature>
<feature type="topological domain" description="Cytoplasmic" evidence="12">
    <location>
        <begin position="1903"/>
        <end position="1972"/>
    </location>
</feature>
<feature type="intramembrane region" evidence="46 127">
    <location>
        <begin position="1973"/>
        <end position="2003"/>
    </location>
</feature>
<feature type="topological domain" description="Cytoplasmic" evidence="27">
    <location>
        <begin position="2004"/>
        <end position="2990"/>
    </location>
</feature>
<feature type="transmembrane region" description="Helical" evidence="27">
    <location>
        <begin position="2991"/>
        <end position="3011"/>
    </location>
</feature>
<feature type="domain" description="Peptidase C18" evidence="15">
    <location>
        <begin position="899"/>
        <end position="1026"/>
    </location>
</feature>
<feature type="domain" description="Peptidase S29" evidence="16">
    <location>
        <begin position="1027"/>
        <end position="1208"/>
    </location>
</feature>
<feature type="domain" description="Helicase ATP-binding" evidence="14">
    <location>
        <begin position="1217"/>
        <end position="1369"/>
    </location>
</feature>
<feature type="domain" description="RdRp catalytic" evidence="13">
    <location>
        <begin position="2634"/>
        <end position="2752"/>
    </location>
</feature>
<feature type="region of interest" description="Disordered" evidence="68 136">
    <location>
        <begin position="2"/>
        <end position="75"/>
    </location>
</feature>
<feature type="region of interest" description="Interaction with DDX3X" evidence="8">
    <location>
        <begin position="2"/>
        <end position="59"/>
    </location>
</feature>
<feature type="region of interest" description="Interaction with EIF2AK2/PKR" evidence="2">
    <location>
        <begin position="2"/>
        <end position="58"/>
    </location>
</feature>
<feature type="region of interest" description="Interaction with STAT1" evidence="2">
    <location>
        <begin position="2"/>
        <end position="23"/>
    </location>
</feature>
<feature type="region of interest" description="Important for endoplasmic reticulum and mitochondrial localization" evidence="2">
    <location>
        <begin position="112"/>
        <end position="152"/>
    </location>
</feature>
<feature type="region of interest" description="Interaction with APOA2" evidence="5">
    <location>
        <begin position="122"/>
        <end position="173"/>
    </location>
</feature>
<feature type="region of interest" description="Important for lipid droplets localization" evidence="28">
    <location>
        <begin position="164"/>
        <end position="167"/>
    </location>
</feature>
<feature type="region of interest" description="Important for fusion" evidence="56">
    <location>
        <begin position="265"/>
        <end position="296"/>
    </location>
</feature>
<feature type="region of interest" description="HVR1" evidence="25">
    <location>
        <begin position="385"/>
        <end position="411"/>
    </location>
</feature>
<feature type="region of interest" description="HVR2" evidence="25">
    <location>
        <begin position="474"/>
        <end position="479"/>
    </location>
</feature>
<feature type="region of interest" description="CD81-binding 1" evidence="3">
    <location>
        <begin position="480"/>
        <end position="493"/>
    </location>
</feature>
<feature type="region of interest" description="CD81-binding 2" evidence="3">
    <location>
        <begin position="544"/>
        <end position="551"/>
    </location>
</feature>
<feature type="region of interest" description="EIF2AK2/eIF2-alpha phosphorylation homology domain (PePHD)">
    <location>
        <begin position="660"/>
        <end position="671"/>
    </location>
</feature>
<feature type="region of interest" description="Protease NS2-3" evidence="3">
    <location>
        <begin position="904"/>
        <end position="1206"/>
    </location>
</feature>
<feature type="region of interest" description="Interaction with host SCPS1" evidence="10">
    <location>
        <begin position="929"/>
        <end position="949"/>
    </location>
</feature>
<feature type="region of interest" description="RNA-binding" evidence="3">
    <location>
        <begin position="1486"/>
        <end position="1497"/>
    </location>
</feature>
<feature type="region of interest" description="NS3-binding" evidence="114 120">
    <location>
        <begin position="1679"/>
        <end position="1690"/>
    </location>
</feature>
<feature type="region of interest" description="Glycine zipper" evidence="10">
    <location>
        <begin position="1833"/>
        <end position="1861"/>
    </location>
</feature>
<feature type="region of interest" description="Membrane-binding" evidence="46">
    <location>
        <begin position="1978"/>
        <end position="1998"/>
    </location>
</feature>
<feature type="region of interest" description="D1; RNA-binding" evidence="74">
    <location>
        <begin position="2005"/>
        <end position="2221"/>
    </location>
</feature>
<feature type="region of interest" description="Transcriptional activation" evidence="12">
    <location>
        <begin position="2120"/>
        <end position="2332"/>
    </location>
</feature>
<feature type="region of interest" description="FKBP8-binding" evidence="2">
    <location>
        <begin position="2120"/>
        <end position="2208"/>
    </location>
</feature>
<feature type="region of interest" description="Interaction with non-structural protein 4A" evidence="2">
    <location>
        <begin position="2135"/>
        <end position="2139"/>
    </location>
</feature>
<feature type="region of interest" description="Interaction with host SKP2" evidence="140">
    <location>
        <begin position="2189"/>
        <end position="2441"/>
    </location>
</feature>
<feature type="region of interest" description="Interaction with EIF2AK2/PKR" evidence="3">
    <location>
        <begin position="2210"/>
        <end position="2275"/>
    </location>
</feature>
<feature type="region of interest" description="ISDR" evidence="2">
    <location>
        <begin position="2210"/>
        <end position="2249"/>
    </location>
</feature>
<feature type="region of interest" description="D2" evidence="141">
    <location>
        <begin position="2223"/>
        <end position="2315"/>
    </location>
</feature>
<feature type="region of interest" description="Disordered" evidence="141">
    <location>
        <begin position="2224"/>
        <end position="2315"/>
    </location>
</feature>
<feature type="region of interest" description="NS4B-binding" evidence="12">
    <location>
        <begin position="2249"/>
        <end position="2306"/>
    </location>
</feature>
<feature type="region of interest" description="Interaction with human PPIA/CYPA" evidence="10">
    <location>
        <begin position="2281"/>
        <end position="2297"/>
    </location>
</feature>
<feature type="region of interest" description="D3" evidence="138">
    <location>
        <begin position="2329"/>
        <end position="2420"/>
    </location>
</feature>
<feature type="region of interest" description="Interaction with host IFI27" evidence="140">
    <location>
        <begin position="2332"/>
        <end position="2441"/>
    </location>
</feature>
<feature type="region of interest" description="Disordered" evidence="17">
    <location>
        <begin position="2346"/>
        <end position="2409"/>
    </location>
</feature>
<feature type="region of interest" description="V3">
    <location>
        <begin position="2354"/>
        <end position="2377"/>
    </location>
</feature>
<feature type="region of interest" description="Interaction with host VAPB" evidence="79">
    <location>
        <begin position="2367"/>
        <end position="2417"/>
    </location>
</feature>
<feature type="short sequence motif" description="Nuclear localization signal" evidence="10">
    <location>
        <begin position="5"/>
        <end position="13"/>
    </location>
</feature>
<feature type="short sequence motif" description="Nuclear localization signal" evidence="10">
    <location>
        <begin position="38"/>
        <end position="43"/>
    </location>
</feature>
<feature type="short sequence motif" description="Nuclear localization signal" evidence="10">
    <location>
        <begin position="58"/>
        <end position="64"/>
    </location>
</feature>
<feature type="short sequence motif" description="Nuclear localization signal" evidence="10">
    <location>
        <begin position="66"/>
        <end position="71"/>
    </location>
</feature>
<feature type="short sequence motif" description="DECH box" evidence="10">
    <location>
        <begin position="1316"/>
        <end position="1319"/>
    </location>
</feature>
<feature type="short sequence motif" description="SH3-binding" evidence="12">
    <location>
        <begin position="2322"/>
        <end position="2325"/>
    </location>
</feature>
<feature type="short sequence motif" description="Nuclear localization signal" evidence="2">
    <location>
        <begin position="2326"/>
        <end position="2334"/>
    </location>
</feature>
<feature type="compositionally biased region" description="Basic residues" evidence="17">
    <location>
        <begin position="7"/>
        <end position="16"/>
    </location>
</feature>
<feature type="compositionally biased region" description="Low complexity" evidence="17">
    <location>
        <begin position="32"/>
        <end position="47"/>
    </location>
</feature>
<feature type="compositionally biased region" description="Basic residues" evidence="17">
    <location>
        <begin position="58"/>
        <end position="68"/>
    </location>
</feature>
<feature type="compositionally biased region" description="Pro residues" evidence="17">
    <location>
        <begin position="2315"/>
        <end position="2326"/>
    </location>
</feature>
<feature type="compositionally biased region" description="Low complexity" evidence="17">
    <location>
        <begin position="2349"/>
        <end position="2369"/>
    </location>
</feature>
<feature type="active site" description="For protease NS2 activity; shared with dimeric partner" evidence="15 59 117">
    <location>
        <position position="952"/>
    </location>
</feature>
<feature type="active site" description="For protease NS2 activity; shared with dimeric partner" evidence="15">
    <location>
        <position position="972"/>
    </location>
</feature>
<feature type="active site" description="For protease NS2 activity; shared with dimeric partner" evidence="15 59 117">
    <location>
        <position position="993"/>
    </location>
</feature>
<feature type="active site" description="Charge relay system; for serine protease NS3 activity" evidence="16 118 142">
    <location>
        <position position="1083"/>
    </location>
</feature>
<feature type="active site" description="Charge relay system; for serine protease NS3 activity" evidence="16 142">
    <location>
        <position position="1107"/>
    </location>
</feature>
<feature type="active site" description="Charge relay system; for serine protease NS3 activity" evidence="16 117 118 142">
    <location>
        <position position="1165"/>
    </location>
</feature>
<feature type="binding site" evidence="16 76 143 145 151 152 153 156 157 158 159 160 161 162 165">
    <location>
        <position position="1123"/>
    </location>
    <ligand>
        <name>Zn(2+)</name>
        <dbReference type="ChEBI" id="CHEBI:29105"/>
        <label>1</label>
        <note>structural; for NS3 protease activity and NS2/3 auto-cleavage activity</note>
    </ligand>
</feature>
<feature type="binding site" evidence="16 76 143 145 151 152 153 156 157 158 159 160 161 162 165">
    <location>
        <position position="1125"/>
    </location>
    <ligand>
        <name>Zn(2+)</name>
        <dbReference type="ChEBI" id="CHEBI:29105"/>
        <label>1</label>
        <note>structural; for NS3 protease activity and NS2/3 auto-cleavage activity</note>
    </ligand>
</feature>
<feature type="binding site" evidence="16 76 145 151 152 153 156 157 158 159 160 161 162 165">
    <location>
        <position position="1171"/>
    </location>
    <ligand>
        <name>Zn(2+)</name>
        <dbReference type="ChEBI" id="CHEBI:29105"/>
        <label>1</label>
        <note>structural; for NS3 protease activity and NS2/3 auto-cleavage activity</note>
    </ligand>
</feature>
<feature type="binding site" evidence="16 76">
    <location>
        <position position="1175"/>
    </location>
    <ligand>
        <name>Zn(2+)</name>
        <dbReference type="ChEBI" id="CHEBI:29105"/>
        <label>1</label>
        <note>structural; for NS3 protease activity and NS2/3 auto-cleavage activity</note>
    </ligand>
</feature>
<feature type="binding site" evidence="14">
    <location>
        <begin position="1230"/>
        <end position="1237"/>
    </location>
    <ligand>
        <name>ATP</name>
        <dbReference type="ChEBI" id="CHEBI:30616"/>
    </ligand>
</feature>
<feature type="binding site" evidence="11">
    <location>
        <position position="1237"/>
    </location>
    <ligand>
        <name>Mg(2+)</name>
        <dbReference type="ChEBI" id="CHEBI:18420"/>
        <label>1</label>
        <note>catalytic; for NS3 helicase activity</note>
    </ligand>
</feature>
<feature type="binding site" evidence="11">
    <location>
        <position position="1317"/>
    </location>
    <ligand>
        <name>Mg(2+)</name>
        <dbReference type="ChEBI" id="CHEBI:18420"/>
        <label>1</label>
        <note>catalytic; for NS3 helicase activity</note>
    </ligand>
</feature>
<feature type="binding site" evidence="11">
    <location>
        <position position="2011"/>
    </location>
    <ligand>
        <name>Zn(2+)</name>
        <dbReference type="ChEBI" id="CHEBI:29105"/>
        <label>2</label>
        <note>structural</note>
    </ligand>
</feature>
<feature type="binding site" evidence="11">
    <location>
        <position position="2029"/>
    </location>
    <ligand>
        <name>Zn(2+)</name>
        <dbReference type="ChEBI" id="CHEBI:29105"/>
        <label>2</label>
        <note>structural</note>
    </ligand>
</feature>
<feature type="binding site" evidence="11">
    <location>
        <position position="2031"/>
    </location>
    <ligand>
        <name>Zn(2+)</name>
        <dbReference type="ChEBI" id="CHEBI:29105"/>
        <label>2</label>
        <note>structural</note>
    </ligand>
</feature>
<feature type="binding site" evidence="11">
    <location>
        <position position="2052"/>
    </location>
    <ligand>
        <name>Zn(2+)</name>
        <dbReference type="ChEBI" id="CHEBI:29105"/>
        <label>2</label>
        <note>structural</note>
    </ligand>
</feature>
<feature type="binding site" evidence="3">
    <location>
        <position position="2640"/>
    </location>
    <ligand>
        <name>Mg(2+)</name>
        <dbReference type="ChEBI" id="CHEBI:18420"/>
        <label>2</label>
        <note>catalytic; for RNA-directed RNA polymerase activity</note>
    </ligand>
</feature>
<feature type="binding site" evidence="3">
    <location>
        <position position="2738"/>
    </location>
    <ligand>
        <name>Mg(2+)</name>
        <dbReference type="ChEBI" id="CHEBI:18420"/>
        <label>2</label>
        <note>catalytic; for RNA-directed RNA polymerase activity</note>
    </ligand>
</feature>
<feature type="binding site" evidence="3">
    <location>
        <position position="2739"/>
    </location>
    <ligand>
        <name>Mg(2+)</name>
        <dbReference type="ChEBI" id="CHEBI:18420"/>
        <label>2</label>
        <note>catalytic; for RNA-directed RNA polymerase activity</note>
    </ligand>
</feature>
<feature type="site" description="Cleavage; by host signal peptide peptidase" evidence="2">
    <location>
        <begin position="177"/>
        <end position="178"/>
    </location>
</feature>
<feature type="site" description="Cleavage; by host signal peptidase" evidence="2">
    <location>
        <begin position="191"/>
        <end position="192"/>
    </location>
</feature>
<feature type="site" description="Cleavage; by host signal peptidase" evidence="2">
    <location>
        <begin position="383"/>
        <end position="384"/>
    </location>
</feature>
<feature type="site" description="Cleavage; by host signal peptidase">
    <location>
        <begin position="746"/>
        <end position="747"/>
    </location>
</feature>
<feature type="site" description="Cleavage; by host signal peptidase">
    <location>
        <begin position="809"/>
        <end position="810"/>
    </location>
</feature>
<feature type="site" description="Cleavage; by protease NS2" evidence="15">
    <location>
        <begin position="1026"/>
        <end position="1027"/>
    </location>
</feature>
<feature type="site" description="Cleavage; by serine protease/helicase NS3" evidence="118">
    <location>
        <begin position="1657"/>
        <end position="1658"/>
    </location>
</feature>
<feature type="site" description="Cleavage; by serine protease/helicase NS3" evidence="118">
    <location>
        <begin position="1711"/>
        <end position="1712"/>
    </location>
</feature>
<feature type="site" description="Cleavage; by serine protease/helicase NS3" evidence="118">
    <location>
        <begin position="1972"/>
        <end position="1973"/>
    </location>
</feature>
<feature type="site" description="Cleavage; by serine protease/helicase NS3" evidence="118">
    <location>
        <begin position="2420"/>
        <end position="2421"/>
    </location>
</feature>
<feature type="modified residue" description="N-acetylserine; by host" evidence="9">
    <location>
        <position position="2"/>
    </location>
</feature>
<feature type="modified residue" description="Phosphoserine; by host" evidence="6">
    <location>
        <position position="53"/>
    </location>
</feature>
<feature type="modified residue" description="Phosphoserine; by host" evidence="6">
    <location>
        <position position="99"/>
    </location>
</feature>
<feature type="modified residue" description="Phosphoserine; by host PKA" evidence="6">
    <location>
        <position position="116"/>
    </location>
</feature>
<feature type="modified residue" description="Phosphoserine; by host; in p56" evidence="10">
    <location>
        <position position="2194"/>
    </location>
</feature>
<feature type="modified residue" description="Phosphoserine; by host; in p58" evidence="2">
    <location>
        <position position="2197"/>
    </location>
</feature>
<feature type="modified residue" description="Phosphoserine; by host; in p56 and p58, regulates intracellular NS5A distribution" evidence="10">
    <location>
        <position position="2201"/>
    </location>
</feature>
<feature type="modified residue" description="Phosphoserine; by host; in p58" evidence="10">
    <location>
        <position position="2204"/>
    </location>
</feature>
<feature type="modified residue" description="Phosphoserine; by host; in p58" evidence="10">
    <location>
        <position position="2207"/>
    </location>
</feature>
<feature type="modified residue" description="Phosphoserine; by host; in p58" evidence="10">
    <location>
        <position position="2210"/>
    </location>
</feature>
<feature type="modified residue" description="Phosphoserine; by host" evidence="20">
    <location>
        <position position="2321"/>
    </location>
</feature>
<feature type="modified residue" description="Phosphoserine; by host" evidence="2">
    <location>
        <position position="2449"/>
    </location>
</feature>
<feature type="modified residue" description="Phosphoserine; by host" evidence="2">
    <location>
        <position position="2462"/>
    </location>
</feature>
<feature type="lipid moiety-binding region" description="S-palmitoyl cysteine; by host" evidence="110">
    <location>
        <position position="922"/>
    </location>
</feature>
<feature type="lipid moiety-binding region" description="S-palmitoyl cysteine; by host" evidence="58">
    <location>
        <position position="1968"/>
    </location>
</feature>
<feature type="lipid moiety-binding region" description="S-palmitoyl cysteine; by host; partial" evidence="58">
    <location>
        <position position="1972"/>
    </location>
</feature>
<feature type="glycosylation site" description="N-linked (GlcNAc...) asparagine; by host" evidence="18">
    <location>
        <position position="196"/>
    </location>
</feature>
<feature type="glycosylation site" description="N-linked (GlcNAc...) asparagine; by host" evidence="18">
    <location>
        <position position="209"/>
    </location>
</feature>
<feature type="glycosylation site" description="N-linked (GlcNAc...) asparagine; by host" evidence="18">
    <location>
        <position position="234"/>
    </location>
</feature>
<feature type="glycosylation site" description="N-linked (GlcNAc...) asparagine; by host" evidence="18">
    <location>
        <position position="305"/>
    </location>
</feature>
<feature type="glycosylation site" description="N-linked (GlcNAc...) (high mannose) asparagine; by host" evidence="67">
    <location>
        <position position="417"/>
    </location>
</feature>
<feature type="glycosylation site" description="N-linked (GlcNAc...) (high mannose) asparagine; by host" evidence="67">
    <location>
        <position position="423"/>
    </location>
</feature>
<feature type="glycosylation site" description="N-linked (GlcNAc...) (high mannose) asparagine; by host" evidence="67 86">
    <location>
        <position position="430"/>
    </location>
</feature>
<feature type="glycosylation site" description="N-linked (GlcNAc...) (high mannose) asparagine; by host" evidence="67">
    <location>
        <position position="448"/>
    </location>
</feature>
<feature type="glycosylation site" description="N-linked (GlcNAc...) (high mannose) asparagine; by host" evidence="67">
    <location>
        <position position="476"/>
    </location>
</feature>
<feature type="glycosylation site" description="N-linked (GlcNAc...) (high mannose) asparagine; by host" evidence="67 86">
    <location>
        <position position="532"/>
    </location>
</feature>
<feature type="glycosylation site" description="N-linked (GlcNAc...) (high mannose) asparagine; by host" evidence="67">
    <location>
        <position position="540"/>
    </location>
</feature>
<feature type="glycosylation site" description="N-linked (GlcNAc...) (high mannose) asparagine; by host" evidence="67 86">
    <location>
        <position position="556"/>
    </location>
</feature>
<feature type="glycosylation site" description="N-linked (GlcNAc...) (high mannose) asparagine; by host" evidence="67">
    <location>
        <position position="576"/>
    </location>
</feature>
<feature type="glycosylation site" description="N-linked (GlcNAc...) (high mannose) asparagine; by host" evidence="67 86">
    <location>
        <position position="623"/>
    </location>
</feature>
<feature type="glycosylation site" description="N-linked (GlcNAc...) (high mannose) asparagine; by host" evidence="67">
    <location>
        <position position="645"/>
    </location>
</feature>
<feature type="disulfide bond" evidence="78">
    <location>
        <begin position="429"/>
        <end position="552"/>
    </location>
</feature>
<feature type="disulfide bond" evidence="78">
    <location>
        <begin position="452"/>
        <end position="459"/>
    </location>
</feature>
<feature type="disulfide bond" evidence="78">
    <location>
        <begin position="486"/>
        <end position="494"/>
    </location>
</feature>
<feature type="disulfide bond" evidence="78">
    <location>
        <begin position="503"/>
        <end position="508"/>
    </location>
</feature>
<feature type="disulfide bond" evidence="78">
    <location>
        <begin position="564"/>
        <end position="569"/>
    </location>
</feature>
<feature type="disulfide bond" evidence="78">
    <location>
        <begin position="581"/>
        <end position="585"/>
    </location>
</feature>
<feature type="disulfide bond" evidence="78">
    <location>
        <begin position="597"/>
        <end position="620"/>
    </location>
</feature>
<feature type="disulfide bond" evidence="78">
    <location>
        <begin position="607"/>
        <end position="644"/>
    </location>
</feature>
<feature type="disulfide bond" evidence="78">
    <location>
        <begin position="652"/>
        <end position="677"/>
    </location>
</feature>
<feature type="cross-link" description="Glycyl lysine isopeptide (Lys-Gly) (interchain with G-Cter in ubiquitin)" evidence="140">
    <location>
        <position position="2350"/>
    </location>
</feature>
<feature type="sequence variant" description="In strain: Isolate H77.">
    <original>V</original>
    <variation>I</variation>
    <location>
        <position position="212"/>
    </location>
</feature>
<feature type="sequence variant" description="In strain: Isolate H77.">
    <original>H</original>
    <variation>R</variation>
    <location>
        <position position="297"/>
    </location>
</feature>
<feature type="sequence variant" description="In strain: Isolate H77.">
    <original>D</original>
    <variation>S</variation>
    <location>
        <position position="303"/>
    </location>
</feature>
<feature type="sequence variant" description="In strain: Isolate H77.">
    <original>N</original>
    <variation>D</variation>
    <location>
        <position position="321"/>
    </location>
</feature>
<feature type="sequence variant" description="In strain: Isolate H77.">
    <original>K</original>
    <variation>A</variation>
    <location>
        <position position="360"/>
    </location>
</feature>
<feature type="sequence variant" description="In strain: Isolate H77.">
    <original>N</original>
    <variation>S</variation>
    <location>
        <position position="391"/>
    </location>
</feature>
<feature type="sequence variant" description="In strain: Isolate H77.">
    <original>R</original>
    <variation>H</variation>
    <location>
        <position position="394"/>
    </location>
</feature>
<feature type="sequence variant" description="In strain: Isolate H77.">
    <original>E</original>
    <variation>D</variation>
    <location>
        <position position="431"/>
    </location>
</feature>
<feature type="sequence variant" description="In strain: Isolate H77.">
    <original>N</original>
    <variation>T</variation>
    <location>
        <position position="434"/>
    </location>
</feature>
<feature type="sequence variant" description="In strain: Isolate H77.">
    <original>Q</original>
    <variation>R</variation>
    <location>
        <position position="444"/>
    </location>
</feature>
<feature type="sequence variant" description="In strain: Isolate H77.">
    <original>A</original>
    <variation>T</variation>
    <location>
        <position position="457"/>
    </location>
</feature>
<feature type="sequence variant" description="In strain: Isolate H77.">
    <original>CGA</original>
    <variation>RGV</variation>
    <location>
        <begin position="564"/>
        <end position="566"/>
    </location>
</feature>
<feature type="sequence variant" description="In strain: Isolate H77.">
    <original>Y</original>
    <variation>H</variation>
    <location>
        <position position="589"/>
    </location>
</feature>
<feature type="sequence variant" description="In strain: Isolate H77.">
    <original>R</original>
    <variation>W</variation>
    <location>
        <position position="602"/>
    </location>
</feature>
<feature type="sequence variant" description="In strain: Isolate H77.">
    <original>E</original>
    <variation>G</variation>
    <location>
        <position position="650"/>
    </location>
</feature>
<feature type="sequence variant" description="In strain: Isolate H77.">
    <original>C</original>
    <variation>R</variation>
    <location>
        <position position="773"/>
    </location>
</feature>
<feature type="sequence variant" description="In strain: Isolate H77.">
    <original>V</original>
    <variation>A</variation>
    <location>
        <position position="787"/>
    </location>
</feature>
<feature type="sequence variant" description="In strain: Isolate H77.">
    <original>L</original>
    <variation>F</variation>
    <location>
        <position position="790"/>
    </location>
</feature>
<feature type="sequence variant" description="In strain: Isolate H77.">
    <original>T</original>
    <variation>M</variation>
    <location>
        <position position="877"/>
    </location>
</feature>
<feature type="sequence variant" description="In strain: Isolate H77.">
    <original>A</original>
    <variation>T</variation>
    <location>
        <position position="883"/>
    </location>
</feature>
<feature type="sequence variant" description="In strain: Isolate H77.">
    <original>C</original>
    <variation>Y</variation>
    <location>
        <position position="948"/>
    </location>
</feature>
<feature type="sequence variant" description="In strain: Isolate H77.">
    <original>A</original>
    <variation>T</variation>
    <location>
        <position position="954"/>
    </location>
</feature>
<feature type="sequence variant" description="In strain: Isolate H77.">
    <original>L</original>
    <variation>Q</variation>
    <location>
        <position position="1026"/>
    </location>
</feature>
<feature type="sequence variant" description="In strain: Isolate H77.">
    <original>A</original>
    <variation>T</variation>
    <location>
        <position position="1033"/>
    </location>
</feature>
<feature type="sequence variant" description="In strain: Isolate H77.">
    <original>G</original>
    <variation>S</variation>
    <location>
        <position position="1049"/>
    </location>
</feature>
<feature type="sequence variant" description="In strain: Isolate H77.">
    <original>T</original>
    <variation>M</variation>
    <location>
        <position position="1100"/>
    </location>
</feature>
<feature type="sequence variant" description="In strain: Isolate H77.">
    <original>T</original>
    <variation>A</variation>
    <location>
        <position position="1121"/>
    </location>
</feature>
<feature type="sequence variant" description="In strain: Isolate H77.">
    <original>T</original>
    <variation>A</variation>
    <location>
        <position position="1173"/>
    </location>
</feature>
<feature type="sequence variant" description="In strain: Isolate H77.">
    <original>E</original>
    <variation>G</variation>
    <location>
        <position position="1202"/>
    </location>
</feature>
<feature type="sequence variant" description="In strain: Isolate H77.">
    <original>S</original>
    <variation>P</variation>
    <location>
        <position position="1214"/>
    </location>
</feature>
<feature type="sequence variant" description="In strain: Isolate H77.">
    <original>K</original>
    <variation>Q</variation>
    <location>
        <position position="1247"/>
    </location>
</feature>
<feature type="sequence variant" description="In strain: Isolate H77.">
    <original>A</original>
    <variation>G</variation>
    <location>
        <position position="1303"/>
    </location>
</feature>
<feature type="sequence variant" description="In strain: Isolate H77.">
    <original>S</original>
    <variation>L</variation>
    <location>
        <position position="1327"/>
    </location>
</feature>
<feature type="sequence variant" description="In strain: Isolate H77.">
    <original>G</original>
    <variation>E</variation>
    <location>
        <position position="1556"/>
    </location>
</feature>
<feature type="sequence variant" description="In strain: Isolate H77.">
    <original>R</original>
    <variation>W</variation>
    <location>
        <position position="1608"/>
    </location>
</feature>
<feature type="sequence variant" description="In strain: Isolate H77.">
    <original>H</original>
    <variation>Q</variation>
    <location>
        <position position="1742"/>
    </location>
</feature>
<feature type="sequence variant" description="In strain: Isolate H77.">
    <original>LD</original>
    <variation>IG</variation>
    <location>
        <begin position="1839"/>
        <end position="1840"/>
    </location>
</feature>
<feature type="sequence variant" description="In strain: Isolate H77.">
    <original>A</original>
    <variation>V</variation>
    <location>
        <position position="1893"/>
    </location>
</feature>
<feature type="sequence variant" description="In strain: Isolate H77.">
    <original>FAS</original>
    <variation>CAA</variation>
    <location>
        <begin position="1898"/>
        <end position="1900"/>
    </location>
</feature>
<feature type="sequence variant" description="In strain: Isolate H77.">
    <original>R</original>
    <variation>H</variation>
    <location>
        <position position="1905"/>
    </location>
</feature>
<feature type="sequence variant" description="In strain: Isolate H77.">
    <original>A</original>
    <variation>V</variation>
    <location>
        <position position="1940"/>
    </location>
</feature>
<feature type="sequence variant" description="In strain: Isolate H77.">
    <original>T</original>
    <variation>A</variation>
    <location>
        <position position="2043"/>
    </location>
</feature>
<feature type="sequence variant" description="In strain: Isolate H77.">
    <original>K</original>
    <variation>R</variation>
    <location>
        <position position="2053"/>
    </location>
</feature>
<feature type="sequence variant" description="In strain: Isolate H77.">
    <original>F</original>
    <variation>L</variation>
    <location>
        <position position="2061"/>
    </location>
</feature>
<feature type="sequence variant" description="In strain: Isolate H77.">
    <original>V</original>
    <variation>I</variation>
    <location>
        <position position="2102"/>
    </location>
</feature>
<feature type="sequence variant" description="In strain: Isolate H77.">
    <original>A</original>
    <variation>E</variation>
    <location>
        <position position="2185"/>
    </location>
</feature>
<feature type="sequence variant" description="In strain: Isolate H77.">
    <original>P</original>
    <variation>R</variation>
    <location>
        <position position="2283"/>
    </location>
</feature>
<feature type="sequence variant" description="In strain: Isolate H77.">
    <original>L</original>
    <variation>P</variation>
    <location>
        <position position="2296"/>
    </location>
</feature>
<feature type="sequence variant" description="In strain: Isolate H77.">
    <original>P</original>
    <variation>S</variation>
    <location>
        <position position="2341"/>
    </location>
</feature>
<feature type="sequence variant" description="In strain: Isolate H77.">
    <original>S</original>
    <variation>P</variation>
    <location>
        <position position="2355"/>
    </location>
</feature>
<feature type="sequence variant" description="In strain: Isolate H77.">
    <original>L</original>
    <variation>F</variation>
    <location>
        <position position="2400"/>
    </location>
</feature>
<feature type="sequence variant" description="In strain: Isolate H77.">
    <original>S</original>
    <variation>T</variation>
    <location>
        <position position="2425"/>
    </location>
</feature>
<feature type="sequence variant" description="In strain: Isolate H77.">
    <original>K</original>
    <variation>Q</variation>
    <location>
        <position position="2469"/>
    </location>
</feature>
<feature type="sequence variant" description="In strain: Isolate H77.">
    <original>A</original>
    <variation>T</variation>
    <location>
        <position position="2512"/>
    </location>
</feature>
<feature type="sequence variant" description="In strain: Isolate H77.">
    <original>L</original>
    <variation>F</variation>
    <location>
        <position position="2637"/>
    </location>
</feature>
<feature type="sequence variant" description="In strain: Isolate H77.">
    <original>R</original>
    <variation>G</variation>
    <location>
        <position position="2703"/>
    </location>
</feature>
<feature type="sequence variant" description="In strain: Isolate H77.">
    <original>R</original>
    <variation>C</variation>
    <location>
        <position position="2715"/>
    </location>
</feature>
<feature type="sequence variant" description="In strain: Isolate H77.">
    <original>S</original>
    <variation>N</variation>
    <location>
        <position position="2755"/>
    </location>
</feature>
<feature type="sequence variant" description="In strain: Isolate H77.">
    <original>W</original>
    <variation>R</variation>
    <location>
        <position position="2925"/>
    </location>
</feature>
<feature type="sequence variant" description="In strain: Isolate H77.">
    <original>A</original>
    <variation>S</variation>
    <location>
        <position position="2933"/>
    </location>
</feature>
<feature type="sequence variant" description="In strain: Isolate H77.">
    <original>K</original>
    <variation>R</variation>
    <location>
        <position position="2937"/>
    </location>
</feature>
<feature type="sequence variant" description="In strain: Isolate H77.">
    <original>T</original>
    <variation>A</variation>
    <location>
        <position position="2960"/>
    </location>
</feature>
<feature type="mutagenesis site" description="Complete loss of E2 binding to host SCARB1; 5-10-fold decrease of infectivity for the viral particles." evidence="80">
    <original>L</original>
    <variation>R</variation>
    <location>
        <position position="399"/>
    </location>
</feature>
<feature type="mutagenesis site" description="Complete loss of infectivity." evidence="78">
    <original>C</original>
    <variation>A</variation>
    <location>
        <position position="429"/>
    </location>
</feature>
<feature type="mutagenesis site" description="Complete loss of infectivity. Loss of heterodimerization with E1. No effect on CD81-binding function." evidence="78">
    <original>C</original>
    <variation>A</variation>
    <location>
        <position position="452"/>
    </location>
</feature>
<feature type="mutagenesis site" description="Complete loss of infectivity. Loss of heterodimerization with E1. 78% loss of CD81-binding function." evidence="78">
    <original>C</original>
    <variation>A</variation>
    <location>
        <position position="459"/>
    </location>
</feature>
<feature type="mutagenesis site" description="Complete loss of infectivity. No effect on CD81-binding function. Loss of heterodimerization with E1." evidence="78">
    <original>C</original>
    <variation>A</variation>
    <location>
        <position position="486"/>
    </location>
</feature>
<feature type="mutagenesis site" description="Complete loss of infectivity and CD81-binding function. Loss of heterodimerization with E1." evidence="78">
    <original>C</original>
    <variation>A</variation>
    <location>
        <position position="494"/>
    </location>
</feature>
<feature type="mutagenesis site" description="Complete loss of infectivity and CD81-binding function." evidence="78">
    <original>C</original>
    <variation>A</variation>
    <location>
        <position position="503"/>
    </location>
</feature>
<feature type="mutagenesis site" description="Complete loss of infectivity and CD81-binding function." evidence="78">
    <original>C</original>
    <variation>A</variation>
    <location>
        <position position="508"/>
    </location>
</feature>
<feature type="mutagenesis site" description="Complete loss of infectivity." evidence="78">
    <original>C</original>
    <variation>A</variation>
    <location>
        <position position="552"/>
    </location>
</feature>
<feature type="mutagenesis site" description="Complete loss of infectivity and CD81-binding function." evidence="78">
    <original>C</original>
    <variation>A</variation>
    <location>
        <position position="564"/>
    </location>
</feature>
<feature type="mutagenesis site" description="Complete loss of infectivity. No effect on CD81-binding function. Loss of heterodimerization with E1." evidence="78">
    <original>C</original>
    <variation>A</variation>
    <location>
        <position position="569"/>
    </location>
</feature>
<feature type="mutagenesis site" description="Complete loss of infectivity. No effect on CD81-binding function. Loss of heterodimerization with E1." evidence="78">
    <original>C</original>
    <variation>A</variation>
    <location>
        <position position="581"/>
    </location>
</feature>
<feature type="mutagenesis site" description="Complete loss of infectivity. No effect on CD81-binding function. Loss of heterodimerization with E1." evidence="78">
    <original>C</original>
    <variation>A</variation>
    <location>
        <position position="585"/>
    </location>
</feature>
<feature type="mutagenesis site" description="Complete loss of infectivity. Reduced CD81-binding function." evidence="78">
    <original>C</original>
    <variation>A</variation>
    <location>
        <position position="597"/>
    </location>
</feature>
<feature type="mutagenesis site" description="Complete loss of infectivity. Complete loss of E2 expression probably due to the disruption of the global conformation of the protein." evidence="78">
    <original>C</original>
    <variation>A</variation>
    <location>
        <position position="607"/>
    </location>
</feature>
<feature type="mutagenesis site" description="Complete loss of infectivity. Reduced CD81-binding function." evidence="78">
    <original>C</original>
    <variation>A</variation>
    <location>
        <position position="620"/>
    </location>
</feature>
<feature type="mutagenesis site" description="Complete loss of infectivity. Complete loss of E2 expression probably due to the disruption of the global conformation of the protein." evidence="78">
    <original>C</original>
    <variation>A</variation>
    <location>
        <position position="644"/>
    </location>
</feature>
<feature type="mutagenesis site" description="Complete loss of infectivity. Reduced heterodimerization with E1. No effect on CD81-binding function." evidence="78">
    <original>C</original>
    <variation>A</variation>
    <location>
        <position position="652"/>
    </location>
</feature>
<feature type="mutagenesis site" description="Complete loss of infectivity. Reduced heterodimerization with E1. No effect on CD81-binding function." evidence="78">
    <original>C</original>
    <variation>A</variation>
    <location>
        <position position="677"/>
    </location>
</feature>
<feature type="mutagenesis site" description="Increases processing between E2 and p7." evidence="51">
    <original>V</original>
    <variation>L</variation>
    <location>
        <position position="720"/>
    </location>
</feature>
<feature type="mutagenesis site" description="Virus can no longer infect chimpanzee." evidence="42">
    <original>K</original>
    <variation>I</variation>
    <location>
        <position position="779"/>
    </location>
</feature>
<feature type="mutagenesis site" description="Virus can no longer infect chimpanzee." evidence="42">
    <original>R</original>
    <variation>S</variation>
    <location>
        <position position="781"/>
    </location>
</feature>
<feature type="mutagenesis site" description="Complete loss of palmitoylation of NS2." evidence="110">
    <original>C</original>
    <variation>S</variation>
    <location>
        <position position="922"/>
    </location>
</feature>
<feature type="mutagenesis site" description="Complete loss of NS2-NS3 cleavage." evidence="59 117">
    <original>H</original>
    <variation>A</variation>
    <location>
        <position position="952"/>
    </location>
</feature>
<feature type="mutagenesis site" description="Complete loss of NS2-NS3 cleavage." evidence="59 117">
    <original>C</original>
    <variation>A</variation>
    <location>
        <position position="993"/>
    </location>
</feature>
<feature type="mutagenesis site" description="Complete loss of NS3-NS4A, NS4A-NS4B, NS4B-NS5A and NS5A-NS5B cleavages." evidence="118">
    <original>H</original>
    <variation>A</variation>
    <location>
        <position position="1083"/>
    </location>
</feature>
<feature type="mutagenesis site" description="Complete loss of NS3-NS4A, NS4A-NS4B, NS4B-NS5A and NS5A-NS5B cleavages." evidence="117 118">
    <original>S</original>
    <variation>A</variation>
    <location>
        <position position="1165"/>
    </location>
</feature>
<feature type="mutagenesis site" description="Strong decrease in NS4B palmitoylation." evidence="58">
    <original>C</original>
    <variation>A</variation>
    <location>
        <position position="1968"/>
    </location>
</feature>
<feature type="mutagenesis site" description="Slight decrease in NS4B palmitoylation." evidence="58">
    <original>C</original>
    <variation>A</variation>
    <location>
        <position position="1972"/>
    </location>
</feature>
<feature type="mutagenesis site" description="Loss of phosphorylation." evidence="20">
    <original>S</original>
    <variation>A</variation>
    <location>
        <position position="2321"/>
    </location>
</feature>
<feature type="strand" evidence="170">
    <location>
        <begin position="10"/>
        <end position="12"/>
    </location>
</feature>
<feature type="strand" evidence="170">
    <location>
        <begin position="16"/>
        <end position="18"/>
    </location>
</feature>
<feature type="turn" evidence="170">
    <location>
        <begin position="19"/>
        <end position="23"/>
    </location>
</feature>
<feature type="strand" evidence="170">
    <location>
        <begin position="30"/>
        <end position="35"/>
    </location>
</feature>
<feature type="turn" evidence="170">
    <location>
        <begin position="36"/>
        <end position="38"/>
    </location>
</feature>
<feature type="strand" evidence="170">
    <location>
        <begin position="39"/>
        <end position="41"/>
    </location>
</feature>
<feature type="helix" evidence="183">
    <location>
        <begin position="316"/>
        <end position="323"/>
    </location>
</feature>
<feature type="strand" evidence="184">
    <location>
        <begin position="412"/>
        <end position="414"/>
    </location>
</feature>
<feature type="strand" evidence="186">
    <location>
        <begin position="416"/>
        <end position="418"/>
    </location>
</feature>
<feature type="strand" evidence="185">
    <location>
        <begin position="419"/>
        <end position="421"/>
    </location>
</feature>
<feature type="helix" evidence="187">
    <location>
        <begin position="422"/>
        <end position="424"/>
    </location>
</feature>
<feature type="strand" evidence="182">
    <location>
        <begin position="425"/>
        <end position="427"/>
    </location>
</feature>
<feature type="turn" evidence="182">
    <location>
        <begin position="432"/>
        <end position="435"/>
    </location>
</feature>
<feature type="helix" evidence="187">
    <location>
        <begin position="437"/>
        <end position="441"/>
    </location>
</feature>
<feature type="strand" evidence="187">
    <location>
        <begin position="496"/>
        <end position="498"/>
    </location>
</feature>
<feature type="helix" evidence="187">
    <location>
        <begin position="499"/>
        <end position="501"/>
    </location>
</feature>
<feature type="strand" evidence="187">
    <location>
        <begin position="502"/>
        <end position="516"/>
    </location>
</feature>
<feature type="strand" evidence="182">
    <location>
        <begin position="532"/>
        <end position="534"/>
    </location>
</feature>
<feature type="strand" evidence="187">
    <location>
        <begin position="536"/>
        <end position="538"/>
    </location>
</feature>
<feature type="turn" evidence="188">
    <location>
        <begin position="544"/>
        <end position="546"/>
    </location>
</feature>
<feature type="strand" evidence="187">
    <location>
        <begin position="551"/>
        <end position="556"/>
    </location>
</feature>
<feature type="strand" evidence="187">
    <location>
        <begin position="561"/>
        <end position="564"/>
    </location>
</feature>
<feature type="helix" evidence="182">
    <location>
        <begin position="568"/>
        <end position="571"/>
    </location>
</feature>
<feature type="turn" evidence="182">
    <location>
        <begin position="574"/>
        <end position="577"/>
    </location>
</feature>
<feature type="strand" evidence="182">
    <location>
        <begin position="579"/>
        <end position="581"/>
    </location>
</feature>
<feature type="strand" evidence="187">
    <location>
        <begin position="602"/>
        <end position="609"/>
    </location>
</feature>
<feature type="helix" evidence="187">
    <location>
        <begin position="614"/>
        <end position="617"/>
    </location>
</feature>
<feature type="helix" evidence="187">
    <location>
        <begin position="619"/>
        <end position="621"/>
    </location>
</feature>
<feature type="strand" evidence="187">
    <location>
        <begin position="625"/>
        <end position="633"/>
    </location>
</feature>
<feature type="strand" evidence="187">
    <location>
        <begin position="636"/>
        <end position="644"/>
    </location>
</feature>
<feature type="helix" evidence="174">
    <location>
        <begin position="911"/>
        <end position="923"/>
    </location>
</feature>
<feature type="turn" evidence="174">
    <location>
        <begin position="924"/>
        <end position="927"/>
    </location>
</feature>
<feature type="helix" evidence="174">
    <location>
        <begin position="931"/>
        <end position="944"/>
    </location>
</feature>
<feature type="turn" evidence="174">
    <location>
        <begin position="951"/>
        <end position="953"/>
    </location>
</feature>
<feature type="helix" evidence="174">
    <location>
        <begin position="956"/>
        <end position="958"/>
    </location>
</feature>
<feature type="helix" evidence="174">
    <location>
        <begin position="964"/>
        <end position="967"/>
    </location>
</feature>
<feature type="turn" evidence="174">
    <location>
        <begin position="971"/>
        <end position="974"/>
    </location>
</feature>
<feature type="strand" evidence="174">
    <location>
        <begin position="975"/>
        <end position="977"/>
    </location>
</feature>
<feature type="strand" evidence="174">
    <location>
        <begin position="982"/>
        <end position="984"/>
    </location>
</feature>
<feature type="turn" evidence="174">
    <location>
        <begin position="988"/>
        <end position="990"/>
    </location>
</feature>
<feature type="strand" evidence="174">
    <location>
        <begin position="1000"/>
        <end position="1008"/>
    </location>
</feature>
<feature type="strand" evidence="174">
    <location>
        <begin position="1010"/>
        <end position="1013"/>
    </location>
</feature>
<feature type="turn" evidence="174">
    <location>
        <begin position="1016"/>
        <end position="1018"/>
    </location>
</feature>
<feature type="helix" evidence="174">
    <location>
        <begin position="1019"/>
        <end position="1021"/>
    </location>
</feature>
<feature type="strand" evidence="181">
    <location>
        <begin position="1027"/>
        <end position="1030"/>
    </location>
</feature>
<feature type="strand" evidence="181">
    <location>
        <begin position="1032"/>
        <end position="1035"/>
    </location>
</feature>
<feature type="helix" evidence="181">
    <location>
        <begin position="1039"/>
        <end position="1048"/>
    </location>
</feature>
<feature type="strand" evidence="181">
    <location>
        <begin position="1057"/>
        <end position="1063"/>
    </location>
</feature>
<feature type="strand" evidence="181">
    <location>
        <begin position="1068"/>
        <end position="1074"/>
    </location>
</feature>
<feature type="strand" evidence="181">
    <location>
        <begin position="1077"/>
        <end position="1080"/>
    </location>
</feature>
<feature type="helix" evidence="181">
    <location>
        <begin position="1082"/>
        <end position="1085"/>
    </location>
</feature>
<feature type="strand" evidence="179">
    <location>
        <begin position="1090"/>
        <end position="1092"/>
    </location>
</feature>
<feature type="strand" evidence="179">
    <location>
        <begin position="1095"/>
        <end position="1097"/>
    </location>
</feature>
<feature type="strand" evidence="181">
    <location>
        <begin position="1100"/>
        <end position="1103"/>
    </location>
</feature>
<feature type="turn" evidence="181">
    <location>
        <begin position="1104"/>
        <end position="1107"/>
    </location>
</feature>
<feature type="strand" evidence="181">
    <location>
        <begin position="1108"/>
        <end position="1112"/>
    </location>
</feature>
<feature type="strand" evidence="181">
    <location>
        <begin position="1129"/>
        <end position="1133"/>
    </location>
</feature>
<feature type="strand" evidence="181">
    <location>
        <begin position="1139"/>
        <end position="1144"/>
    </location>
</feature>
<feature type="strand" evidence="181">
    <location>
        <begin position="1146"/>
        <end position="1157"/>
    </location>
</feature>
<feature type="helix" evidence="181">
    <location>
        <begin position="1158"/>
        <end position="1160"/>
    </location>
</feature>
<feature type="turn" evidence="181">
    <location>
        <begin position="1161"/>
        <end position="1163"/>
    </location>
</feature>
<feature type="strand" evidence="181">
    <location>
        <begin position="1168"/>
        <end position="1170"/>
    </location>
</feature>
<feature type="turn" evidence="173">
    <location>
        <begin position="1172"/>
        <end position="1174"/>
    </location>
</feature>
<feature type="strand" evidence="181">
    <location>
        <begin position="1176"/>
        <end position="1186"/>
    </location>
</feature>
<feature type="strand" evidence="181">
    <location>
        <begin position="1189"/>
        <end position="1197"/>
    </location>
</feature>
<feature type="helix" evidence="181">
    <location>
        <begin position="1198"/>
        <end position="1205"/>
    </location>
</feature>
<feature type="strand" evidence="171">
    <location>
        <begin position="1224"/>
        <end position="1226"/>
    </location>
</feature>
<feature type="turn" evidence="171">
    <location>
        <begin position="1236"/>
        <end position="1238"/>
    </location>
</feature>
<feature type="helix" evidence="171">
    <location>
        <begin position="1239"/>
        <end position="1246"/>
    </location>
</feature>
<feature type="strand" evidence="171">
    <location>
        <begin position="1251"/>
        <end position="1256"/>
    </location>
</feature>
<feature type="helix" evidence="171">
    <location>
        <begin position="1258"/>
        <end position="1271"/>
    </location>
</feature>
<feature type="strand" evidence="171">
    <location>
        <begin position="1277"/>
        <end position="1280"/>
    </location>
</feature>
<feature type="strand" evidence="171">
    <location>
        <begin position="1283"/>
        <end position="1285"/>
    </location>
</feature>
<feature type="strand" evidence="171">
    <location>
        <begin position="1290"/>
        <end position="1295"/>
    </location>
</feature>
<feature type="helix" evidence="171">
    <location>
        <begin position="1296"/>
        <end position="1301"/>
    </location>
</feature>
<feature type="helix" evidence="169">
    <location>
        <begin position="1304"/>
        <end position="1307"/>
    </location>
</feature>
<feature type="strand" evidence="171">
    <location>
        <begin position="1311"/>
        <end position="1316"/>
    </location>
</feature>
<feature type="turn" evidence="171">
    <location>
        <begin position="1317"/>
        <end position="1319"/>
    </location>
</feature>
<feature type="helix" evidence="171">
    <location>
        <begin position="1323"/>
        <end position="1335"/>
    </location>
</feature>
<feature type="turn" evidence="171">
    <location>
        <begin position="1336"/>
        <end position="1340"/>
    </location>
</feature>
<feature type="strand" evidence="171">
    <location>
        <begin position="1342"/>
        <end position="1347"/>
    </location>
</feature>
<feature type="strand" evidence="171">
    <location>
        <begin position="1362"/>
        <end position="1366"/>
    </location>
</feature>
<feature type="strand" evidence="171">
    <location>
        <begin position="1371"/>
        <end position="1375"/>
    </location>
</feature>
<feature type="strand" evidence="171">
    <location>
        <begin position="1378"/>
        <end position="1380"/>
    </location>
</feature>
<feature type="helix" evidence="171">
    <location>
        <begin position="1382"/>
        <end position="1385"/>
    </location>
</feature>
<feature type="strand" evidence="171">
    <location>
        <begin position="1386"/>
        <end position="1393"/>
    </location>
</feature>
<feature type="helix" evidence="171">
    <location>
        <begin position="1397"/>
        <end position="1409"/>
    </location>
</feature>
<feature type="strand" evidence="171">
    <location>
        <begin position="1414"/>
        <end position="1417"/>
    </location>
</feature>
<feature type="helix" evidence="169">
    <location>
        <begin position="1423"/>
        <end position="1425"/>
    </location>
</feature>
<feature type="strand" evidence="171">
    <location>
        <begin position="1428"/>
        <end position="1436"/>
    </location>
</feature>
<feature type="strand" evidence="171">
    <location>
        <begin position="1442"/>
        <end position="1444"/>
    </location>
</feature>
<feature type="strand" evidence="171">
    <location>
        <begin position="1449"/>
        <end position="1453"/>
    </location>
</feature>
<feature type="strand" evidence="171">
    <location>
        <begin position="1456"/>
        <end position="1463"/>
    </location>
</feature>
<feature type="strand" evidence="171">
    <location>
        <begin position="1467"/>
        <end position="1469"/>
    </location>
</feature>
<feature type="strand" evidence="171">
    <location>
        <begin position="1471"/>
        <end position="1478"/>
    </location>
</feature>
<feature type="helix" evidence="171">
    <location>
        <begin position="1481"/>
        <end position="1488"/>
    </location>
</feature>
<feature type="strand" evidence="171">
    <location>
        <begin position="1493"/>
        <end position="1495"/>
    </location>
</feature>
<feature type="strand" evidence="171">
    <location>
        <begin position="1497"/>
        <end position="1502"/>
    </location>
</feature>
<feature type="helix" evidence="171">
    <location>
        <begin position="1514"/>
        <end position="1527"/>
    </location>
</feature>
<feature type="helix" evidence="171">
    <location>
        <begin position="1532"/>
        <end position="1544"/>
    </location>
</feature>
<feature type="strand" evidence="171">
    <location>
        <begin position="1545"/>
        <end position="1548"/>
    </location>
</feature>
<feature type="helix" evidence="171">
    <location>
        <begin position="1555"/>
        <end position="1564"/>
    </location>
</feature>
<feature type="helix" evidence="171">
    <location>
        <begin position="1570"/>
        <end position="1578"/>
    </location>
</feature>
<feature type="helix" evidence="171">
    <location>
        <begin position="1584"/>
        <end position="1597"/>
    </location>
</feature>
<feature type="helix" evidence="171">
    <location>
        <begin position="1606"/>
        <end position="1611"/>
    </location>
</feature>
<feature type="turn" evidence="171">
    <location>
        <begin position="1614"/>
        <end position="1618"/>
    </location>
</feature>
<feature type="strand" evidence="171">
    <location>
        <begin position="1627"/>
        <end position="1629"/>
    </location>
</feature>
<feature type="strand" evidence="171">
    <location>
        <begin position="1635"/>
        <end position="1637"/>
    </location>
</feature>
<feature type="helix" evidence="171">
    <location>
        <begin position="1640"/>
        <end position="1652"/>
    </location>
</feature>
<feature type="strand" evidence="178">
    <location>
        <begin position="1680"/>
        <end position="1687"/>
    </location>
</feature>
<feature type="helix" evidence="175">
    <location>
        <begin position="1753"/>
        <end position="1777"/>
    </location>
</feature>
<feature type="helix" evidence="176">
    <location>
        <begin position="1940"/>
        <end position="1964"/>
    </location>
</feature>
<feature type="helix" evidence="172">
    <location>
        <begin position="1976"/>
        <end position="1999"/>
    </location>
</feature>
<feature type="strand" evidence="180">
    <location>
        <begin position="2422"/>
        <end position="2426"/>
    </location>
</feature>
<feature type="helix" evidence="180">
    <location>
        <begin position="2445"/>
        <end position="2450"/>
    </location>
</feature>
<feature type="helix" evidence="180">
    <location>
        <begin position="2454"/>
        <end position="2456"/>
    </location>
</feature>
<feature type="strand" evidence="180">
    <location>
        <begin position="2457"/>
        <end position="2459"/>
    </location>
</feature>
<feature type="helix" evidence="180">
    <location>
        <begin position="2462"/>
        <end position="2464"/>
    </location>
</feature>
<feature type="helix" evidence="180">
    <location>
        <begin position="2465"/>
        <end position="2472"/>
    </location>
</feature>
<feature type="helix" evidence="180">
    <location>
        <begin position="2482"/>
        <end position="2495"/>
    </location>
</feature>
<feature type="helix" evidence="180">
    <location>
        <begin position="2505"/>
        <end position="2510"/>
    </location>
</feature>
<feature type="helix" evidence="180">
    <location>
        <begin position="2525"/>
        <end position="2529"/>
    </location>
</feature>
<feature type="helix" evidence="180">
    <location>
        <begin position="2533"/>
        <end position="2548"/>
    </location>
</feature>
<feature type="strand" evidence="180">
    <location>
        <begin position="2550"/>
        <end position="2552"/>
    </location>
</feature>
<feature type="strand" evidence="180">
    <location>
        <begin position="2556"/>
        <end position="2560"/>
    </location>
</feature>
<feature type="strand" evidence="180">
    <location>
        <begin position="2564"/>
        <end position="2566"/>
    </location>
</feature>
<feature type="helix" evidence="180">
    <location>
        <begin position="2569"/>
        <end position="2571"/>
    </location>
</feature>
<feature type="strand" evidence="180">
    <location>
        <begin position="2579"/>
        <end position="2582"/>
    </location>
</feature>
<feature type="helix" evidence="180">
    <location>
        <begin position="2585"/>
        <end position="2607"/>
    </location>
</feature>
<feature type="helix" evidence="180">
    <location>
        <begin position="2608"/>
        <end position="2610"/>
    </location>
</feature>
<feature type="helix" evidence="180">
    <location>
        <begin position="2612"/>
        <end position="2614"/>
    </location>
</feature>
<feature type="helix" evidence="180">
    <location>
        <begin position="2617"/>
        <end position="2629"/>
    </location>
</feature>
<feature type="strand" evidence="180">
    <location>
        <begin position="2631"/>
        <end position="2639"/>
    </location>
</feature>
<feature type="helix" evidence="180">
    <location>
        <begin position="2644"/>
        <end position="2647"/>
    </location>
</feature>
<feature type="helix" evidence="180">
    <location>
        <begin position="2650"/>
        <end position="2660"/>
    </location>
</feature>
<feature type="helix" evidence="180">
    <location>
        <begin position="2667"/>
        <end position="2679"/>
    </location>
</feature>
<feature type="turn" evidence="180">
    <location>
        <begin position="2680"/>
        <end position="2682"/>
    </location>
</feature>
<feature type="strand" evidence="180">
    <location>
        <begin position="2684"/>
        <end position="2687"/>
    </location>
</feature>
<feature type="strand" evidence="180">
    <location>
        <begin position="2693"/>
        <end position="2697"/>
    </location>
</feature>
<feature type="helix" evidence="180">
    <location>
        <begin position="2707"/>
        <end position="2726"/>
    </location>
</feature>
<feature type="strand" evidence="180">
    <location>
        <begin position="2729"/>
        <end position="2736"/>
    </location>
</feature>
<feature type="strand" evidence="180">
    <location>
        <begin position="2739"/>
        <end position="2745"/>
    </location>
</feature>
<feature type="helix" evidence="180">
    <location>
        <begin position="2749"/>
        <end position="2765"/>
    </location>
</feature>
<feature type="strand" evidence="180">
    <location>
        <begin position="2770"/>
        <end position="2772"/>
    </location>
</feature>
<feature type="helix" evidence="180">
    <location>
        <begin position="2780"/>
        <end position="2782"/>
    </location>
</feature>
<feature type="strand" evidence="180">
    <location>
        <begin position="2788"/>
        <end position="2794"/>
    </location>
</feature>
<feature type="strand" evidence="180">
    <location>
        <begin position="2800"/>
        <end position="2806"/>
    </location>
</feature>
<feature type="helix" evidence="180">
    <location>
        <begin position="2809"/>
        <end position="2820"/>
    </location>
</feature>
<feature type="helix" evidence="180">
    <location>
        <begin position="2827"/>
        <end position="2835"/>
    </location>
</feature>
<feature type="helix" evidence="180">
    <location>
        <begin position="2839"/>
        <end position="2843"/>
    </location>
</feature>
<feature type="helix" evidence="180">
    <location>
        <begin position="2845"/>
        <end position="2855"/>
    </location>
</feature>
<feature type="strand" evidence="180">
    <location>
        <begin position="2863"/>
        <end position="2867"/>
    </location>
</feature>
<feature type="strand" evidence="180">
    <location>
        <begin position="2870"/>
        <end position="2874"/>
    </location>
</feature>
<feature type="helix" evidence="180">
    <location>
        <begin position="2876"/>
        <end position="2878"/>
    </location>
</feature>
<feature type="helix" evidence="180">
    <location>
        <begin position="2879"/>
        <end position="2887"/>
    </location>
</feature>
<feature type="helix" evidence="180">
    <location>
        <begin position="2889"/>
        <end position="2892"/>
    </location>
</feature>
<feature type="helix" evidence="180">
    <location>
        <begin position="2899"/>
        <end position="2912"/>
    </location>
</feature>
<feature type="helix" evidence="180">
    <location>
        <begin position="2917"/>
        <end position="2934"/>
    </location>
</feature>
<feature type="helix" evidence="180">
    <location>
        <begin position="2936"/>
        <end position="2945"/>
    </location>
</feature>
<feature type="helix" evidence="180">
    <location>
        <begin position="2947"/>
        <end position="2949"/>
    </location>
</feature>
<feature type="strand" evidence="180">
    <location>
        <begin position="2950"/>
        <end position="2952"/>
    </location>
</feature>
<feature type="helix" evidence="180">
    <location>
        <begin position="2960"/>
        <end position="2964"/>
    </location>
</feature>
<feature type="turn" evidence="180">
    <location>
        <begin position="2968"/>
        <end position="2971"/>
    </location>
</feature>
<feature type="strand" evidence="177">
    <location>
        <begin position="2984"/>
        <end position="2986"/>
    </location>
</feature>
<feature type="helix" evidence="177">
    <location>
        <begin position="2994"/>
        <end position="3007"/>
    </location>
</feature>
<keyword id="KW-0002">3D-structure</keyword>
<keyword id="KW-0007">Acetylation</keyword>
<keyword id="KW-1072">Activation of host autophagy by virus</keyword>
<keyword id="KW-0053">Apoptosis</keyword>
<keyword id="KW-0067">ATP-binding</keyword>
<keyword id="KW-0167">Capsid protein</keyword>
<keyword id="KW-1165">Clathrin-mediated endocytosis of virus by host</keyword>
<keyword id="KW-0903">Direct protein sequencing</keyword>
<keyword id="KW-1015">Disulfide bond</keyword>
<keyword id="KW-1170">Fusion of virus membrane with host endosomal membrane</keyword>
<keyword id="KW-1168">Fusion of virus membrane with host membrane</keyword>
<keyword id="KW-1078">G1/S host cell cycle checkpoint dysregulation by virus</keyword>
<keyword id="KW-0325">Glycoprotein</keyword>
<keyword id="KW-0347">Helicase</keyword>
<keyword id="KW-1032">Host cell membrane</keyword>
<keyword id="KW-1035">Host cytoplasm</keyword>
<keyword id="KW-1038">Host endoplasmic reticulum</keyword>
<keyword id="KW-1041">Host lipid droplet</keyword>
<keyword id="KW-1043">Host membrane</keyword>
<keyword id="KW-1045">Host mitochondrion</keyword>
<keyword id="KW-1048">Host nucleus</keyword>
<keyword id="KW-0945">Host-virus interaction</keyword>
<keyword id="KW-0378">Hydrolase</keyword>
<keyword id="KW-1090">Inhibition of host innate immune response by virus</keyword>
<keyword id="KW-1114">Inhibition of host interferon signaling pathway by virus</keyword>
<keyword id="KW-1097">Inhibition of host MAVS by virus</keyword>
<keyword id="KW-1113">Inhibition of host RLR pathway by virus</keyword>
<keyword id="KW-1105">Inhibition of host STAT1 by virus</keyword>
<keyword id="KW-1110">Inhibition of host TRAFs by virus</keyword>
<keyword id="KW-0922">Interferon antiviral system evasion</keyword>
<keyword id="KW-0407">Ion channel</keyword>
<keyword id="KW-0406">Ion transport</keyword>
<keyword id="KW-1017">Isopeptide bond</keyword>
<keyword id="KW-0449">Lipoprotein</keyword>
<keyword id="KW-0460">Magnesium</keyword>
<keyword id="KW-0472">Membrane</keyword>
<keyword id="KW-0479">Metal-binding</keyword>
<keyword id="KW-1121">Modulation of host cell cycle by virus</keyword>
<keyword id="KW-0511">Multifunctional enzyme</keyword>
<keyword id="KW-0547">Nucleotide-binding</keyword>
<keyword id="KW-0548">Nucleotidyltransferase</keyword>
<keyword id="KW-0553">Oncogene</keyword>
<keyword id="KW-0564">Palmitate</keyword>
<keyword id="KW-0597">Phosphoprotein</keyword>
<keyword id="KW-0645">Protease</keyword>
<keyword id="KW-1185">Reference proteome</keyword>
<keyword id="KW-0687">Ribonucleoprotein</keyword>
<keyword id="KW-0688">Ribosomal frameshifting</keyword>
<keyword id="KW-0694">RNA-binding</keyword>
<keyword id="KW-0696">RNA-directed RNA polymerase</keyword>
<keyword id="KW-0720">Serine protease</keyword>
<keyword id="KW-0729">SH3-binding</keyword>
<keyword id="KW-0788">Thiol protease</keyword>
<keyword id="KW-0804">Transcription</keyword>
<keyword id="KW-0805">Transcription regulation</keyword>
<keyword id="KW-0808">Transferase</keyword>
<keyword id="KW-0812">Transmembrane</keyword>
<keyword id="KW-1133">Transmembrane helix</keyword>
<keyword id="KW-0813">Transport</keyword>
<keyword id="KW-0832">Ubl conjugation</keyword>
<keyword id="KW-1233">Viral attachment to host adhesion receptor</keyword>
<keyword id="KW-1161">Viral attachment to host cell</keyword>
<keyword id="KW-1234">Viral attachment to host entry receptor</keyword>
<keyword id="KW-0261">Viral envelope protein</keyword>
<keyword id="KW-0899">Viral immunoevasion</keyword>
<keyword id="KW-1182">Viral ion channel</keyword>
<keyword id="KW-0543">Viral nucleoprotein</keyword>
<keyword id="KW-1162">Viral penetration into host cytoplasm</keyword>
<keyword id="KW-0693">Viral RNA replication</keyword>
<keyword id="KW-0946">Virion</keyword>
<keyword id="KW-1164">Virus endocytosis by host</keyword>
<keyword id="KW-1160">Virus entry into host cell</keyword>
<keyword id="KW-0862">Zinc</keyword>
<sequence>MSTNPKPQRKTKRNTNRRPQDVKFPGGGQIVGGVYLLPRRGPRLGVRATRKTSERSQPRGRRQPIPKARRPEGRTWAQPGYPWPLYGNEGCGWAGWLLSPRGSRPSWGPTDPRRRSRNLGKVIDTLTCGFADLMGYIPLVGAPLGGAARALAHGVRVLEDGVNYATGNLPGCSFSIFLLALLSCLTVPASAYQVRNSSGLYHVTNDCPNSSVVYEAADAILHTPGCVPCVREGNASRCWVAVTPTVATRDGKLPTTQLRRHIDLLVGSATLCSALYVGDLCGSVFLVGQLFTFSPRHHWTTQDCNCSIYPGHITGHRMAWNMMMNWSPTAALVVAQLLRIPQAIMDMIAGAHWGVLAGIKYFSMVGNWAKVLVVLLLFAGVDAETHVTGGNAGRTTAGLVGLLTPGAKQNIQLINTNGSWHINSTALNCNESLNTGWLAGLFYQHKFNSSGCPERLASCRRLTDFAQGWGPISYANGSGLDERPYCWHYPPRPCGIVPAKSVCGPVYCFTPSPVVVGTTDRSGAPTYSWGANDTDVFVLNNTRPPLGNWFGCTWMNSTGFTKVCGAPPCVIGGVGNNTLLCPTDCFRKYPEATYSRCGSGPRITPRCMVDYPYRLWHYPCTINYTIFKVRMYVGGVEHRLEAACNWTRGERCDLEDRDRSELSPLLLSTTQWQVLPCSFTTLPALSTGLIHLHQNIVDVQYLYGVGSSIASWAIKWEYVVLLFLLLADARVCSCLWMMLLISQAEAALENLVILNAASLAGTHGLVSFLVFFCFAWYLKGRWVPGAVYALYGMWPLLLLLLALPQRAYALDTEVAASCGGVVLVGLMALTLSPYYKRYISWCMWWLQYFLTRVEAQLHVWVPPLNVRGGRDAVILLTCVVHPALVFDITKLLLAIFGPLWILQASLLKVPYFVRVQGLLRICALARKIAGGHYVQMAIIKLGALTGTCVYNHLAPLRDWAHNGLRDLAVAVEPVVFSRMETKLITWGADTAACGDIINGLPVSARRGQEILLGPADGMVSKGWRLLAPITAYAQQTRGLLGCIITSLTGRDKNQVEGEVQIVSTATQTFLATCINGVCWTVYHGAGTRTIASPKGPVIQTYTNVDQDLVGWPAPQGSRSLTPCTCGSSDLYLVTRHADVIPVRRRGDSRGSLLSPRPISYLKGSSGGPLLCPTGHAVGLFRAAVCTRGVAKAVDFIPVENLETTMRSPVFTDNSSPPAVPQSFQVAHLHAPTGSGKSTKVPAAYAAKGYKVLVLNPSVAATLGFGAYMSKAHGVDPNIRTGVRTITTGSPITYSTYGKFLADAGCSGGAYDIIICDECHSTDATSISGIGTVLDQAETAGARLVVLATATPPGSVTVSHPNIEEVALSTTGEIPFYGKAIPLEVIKGGRHLIFCHSKKKCDELAAKLVALGINAVAYYRGLDVSVIPTSGDVVVVSTDALMTGFTGDFDSVIDCNTCVTQTVDFSLDPTFTIETTTLPQDAVSRTQRRGRTGRGKPGIYRFVAPGERPSGMFDSSVLCECYDAGCAWYELTPAETTVRLRAYMNTPGLPVCQDHLGFWEGVFTGLTHIDAHFLSQTKQSGENFPYLVAYQATVCARAQAPPPSWDQMRKCLIRLKPTLHGPTPLLYRLGAVQNEVTLTHPITKYIMTCMSADLEVVTSTWVLVGGVLAALAAYCLSTGCVVIVGRIVLSGKPAIIPDREVLYQEFDEMEECSQHLPYIEQGMMLAEQFKQKALGLLQTASRHAEVITPAVQTNWQKLEVFWAKHMWNFISGIQYLAGLSTLPGNPAIASLMAFTAAVTSPLTTGQTLLFNILGGWVAAQLAAPGAATAFVGAGLAGAALDSVGLGKVLVDILAGYGAGVAGALVAFKIMSGEVPSTEDLVNLLPAILSPGALAVGVVFASILRRRVGPGEGAVQWMNRLIAFASRGNHVSPTHYVPESDAAARVTAILSSLTVTQLLRRLHQWISSECTTPCSGSWLRDIWDWICEVLSDFKTWLKAKLMPQLPGIPFVSCQRGYRGVWRGDGIMHTRCHCGAEITGHVKNGTMRIVGPRTCKNMWSGTFFINAYTTGPCTPLPAPNYKFALWRVSAEEYVEIRRVGDFHYVSGMTTDNLKCPCQIPSPEFFTELDGVRLHRFAPPCKPLLREEVSFRVGLHEYPVGSQLPCEPEPDVAVLTSMLTDPSHITAEAAGRRLARGSPPSMASSSASQLSAPSLKATCTANHDSPDAELIEANLLWRQEMGGNITRVESENKVVILDSFDPLVAEEDEREVSVPAEILRKSRRFAPALPVWARPDYNPLLVETWKKPDYEPPVVHGCPLPPPRSPPVPPPRKKRTVVLTESTLPTALAELATKSFGSSSTSGITGDNTTTSSEPAPSGCPPDSDVESYSSMPPLEGEPGDPDLSDGSWSTVSSGADTEDVVCCSMSYSWTGALVTPCAAEEQKLPINALSNSLLRHHNLVYSTTSRSACQRKKKVTFDRLQVLDSHYQDVLKEVKAAASKVKANLLSVEEACSLAPPHSAKSKFGYGAKDVRCHARKAVAHINSVWKDLLEDSVTPIDTTIMAKNEVFCVQPEKGGRKPARLIVFPDLGVRVCEKMALYDVVSKLPLAVMGSSYGFQYSPGQRVEFLVQAWKSKKTPMGLSYDTRCFDSTVTESDIRTEEAIYQCCDLDPQARVAIKSLTERLYVGGPLTNSRGENCGYRRCRASRVLTTSCGNTLTRYIKARAACRAAGLQDCTMLVCGDDLVVICESAGVQEDAASLRAFTEAMTRYSAPPGDPPQPEYDLELITSCSSNVSVAHDGAGKRVYYLTRDPTTPLARAAWETARHTPVNSWLGNIIMFAPTLWARMILMTHFFSVLIARDQLEQALNCEIYGACYSIEPLDLPPIIQRLHGLSAFSLHSYSPGEINRVAACLRKLGVPPLRAWRHRAWSVRARLLARGGKAAICGKYLFNWAVRTKLKLTPITAAGRLDLSGWFTAGYSGGDIYHSVSHARPRWFWFCLLLLAAGVGIYLLPNR</sequence>
<accession>P27958</accession>
<accession>O36579</accession>
<accession>O36608</accession>
<accession>O36609</accession>
<accession>O36610</accession>
<organism>
    <name type="scientific">Hepatitis C virus genotype 1a (isolate H77)</name>
    <name type="common">HCV</name>
    <dbReference type="NCBI Taxonomy" id="63746"/>
    <lineage>
        <taxon>Viruses</taxon>
        <taxon>Riboviria</taxon>
        <taxon>Orthornavirae</taxon>
        <taxon>Kitrinoviricota</taxon>
        <taxon>Flasuviricetes</taxon>
        <taxon>Amarillovirales</taxon>
        <taxon>Flaviviridae</taxon>
        <taxon>Hepacivirus</taxon>
        <taxon>Hepacivirus hominis</taxon>
        <taxon>hepatitis C virus genotype 1a</taxon>
    </lineage>
</organism>
<protein>
    <recommendedName>
        <fullName>Genome polyprotein</fullName>
    </recommendedName>
    <component>
        <recommendedName>
            <fullName>Core protein precursor</fullName>
        </recommendedName>
        <alternativeName>
            <fullName>Capsid protein C</fullName>
        </alternativeName>
        <alternativeName>
            <fullName>p23</fullName>
        </alternativeName>
    </component>
    <component>
        <recommendedName>
            <fullName>Mature core protein</fullName>
        </recommendedName>
        <alternativeName>
            <fullName>p21</fullName>
        </alternativeName>
    </component>
    <component>
        <recommendedName>
            <fullName>Envelope glycoprotein E1</fullName>
        </recommendedName>
        <alternativeName>
            <fullName>gp32</fullName>
        </alternativeName>
        <alternativeName>
            <fullName>gp35</fullName>
        </alternativeName>
    </component>
    <component>
        <recommendedName>
            <fullName>Envelope glycoprotein E2</fullName>
        </recommendedName>
        <alternativeName>
            <fullName>NS1</fullName>
        </alternativeName>
        <alternativeName>
            <fullName>gp68</fullName>
        </alternativeName>
        <alternativeName>
            <fullName>gp70</fullName>
        </alternativeName>
    </component>
    <component>
        <recommendedName>
            <fullName>Viroporin p7</fullName>
        </recommendedName>
    </component>
    <component>
        <recommendedName>
            <fullName>Protease NS2</fullName>
            <shortName>p23</shortName>
            <ecNumber evidence="3">3.4.22.-</ecNumber>
        </recommendedName>
        <alternativeName>
            <fullName>Non-structural protein 2</fullName>
            <shortName>NS2</shortName>
        </alternativeName>
    </component>
    <component>
        <recommendedName>
            <fullName>Serine protease/helicase NS3</fullName>
            <ecNumber evidence="115 118">3.4.21.98</ecNumber>
            <ecNumber evidence="47 54 92">3.6.1.15</ecNumber>
            <ecNumber evidence="47 54 92">3.6.4.13</ecNumber>
        </recommendedName>
        <alternativeName>
            <fullName>Hepacivirin</fullName>
        </alternativeName>
        <alternativeName>
            <fullName evidence="123">NS3 helicase</fullName>
        </alternativeName>
        <alternativeName>
            <fullName evidence="125">NS3 protease</fullName>
        </alternativeName>
        <alternativeName>
            <fullName>NS3P</fullName>
        </alternativeName>
        <alternativeName>
            <fullName>Viroporin p70</fullName>
        </alternativeName>
    </component>
    <component>
        <recommendedName>
            <fullName>Non-structural protein 4A</fullName>
            <shortName>NS4A</shortName>
        </recommendedName>
        <alternativeName>
            <fullName>p8</fullName>
        </alternativeName>
    </component>
    <component>
        <recommendedName>
            <fullName>Non-structural protein 4B</fullName>
            <shortName>NS4B</shortName>
        </recommendedName>
        <alternativeName>
            <fullName>p27</fullName>
        </alternativeName>
    </component>
    <component>
        <recommendedName>
            <fullName>Non-structural protein 5A</fullName>
            <shortName>NS5A</shortName>
        </recommendedName>
        <alternativeName>
            <fullName>p56/58</fullName>
        </alternativeName>
    </component>
    <component>
        <recommendedName>
            <fullName>RNA-directed RNA polymerase</fullName>
            <ecNumber evidence="72">2.7.7.48</ecNumber>
        </recommendedName>
        <alternativeName>
            <fullName>NS5B</fullName>
        </alternativeName>
        <alternativeName>
            <fullName>p68</fullName>
        </alternativeName>
    </component>
</protein>